<sequence length="217" mass="25206">MEAIAKYDFKATADDELSFKRGDILKVLNEECDQNWYKAELNGKDGFIPKNYIEMKPHPWFFGKIPRAKAEEMLSKQRHDGAFLIRESESAPGDFSLSVKFGNDVQHFKVLRDGAGKYFLWVVKFNSLNELVDYHRSTSVSRNQQIFLRDIEQVPQQPTYVQALFDFDPQEDGELGFRRGDFIHVMDNSDPNWWKGACHGQTGMFPRNYVTPVNRNV</sequence>
<feature type="chain" id="PRO_0000088198" description="Growth factor receptor-bound protein 2">
    <location>
        <begin position="1"/>
        <end position="217"/>
    </location>
</feature>
<feature type="domain" description="SH3 1" evidence="3">
    <location>
        <begin position="1"/>
        <end position="58"/>
    </location>
</feature>
<feature type="domain" description="SH2" evidence="2">
    <location>
        <begin position="60"/>
        <end position="152"/>
    </location>
</feature>
<feature type="domain" description="SH3 2" evidence="3">
    <location>
        <begin position="156"/>
        <end position="215"/>
    </location>
</feature>
<feature type="modified residue" description="N-acetylmethionine" evidence="87">
    <location>
        <position position="1"/>
    </location>
</feature>
<feature type="modified residue" description="N6-acetyllysine" evidence="86">
    <location>
        <position position="6"/>
    </location>
</feature>
<feature type="modified residue" description="N6-acetyllysine" evidence="86">
    <location>
        <position position="50"/>
    </location>
</feature>
<feature type="modified residue" description="N6-acetyllysine" evidence="86">
    <location>
        <position position="109"/>
    </location>
</feature>
<feature type="modified residue" description="Phosphotyrosine" evidence="16">
    <location>
        <position position="209"/>
    </location>
</feature>
<feature type="modified residue" description="Phosphothreonine" evidence="85">
    <location>
        <position position="211"/>
    </location>
</feature>
<feature type="cross-link" description="Glycyl lysine isopeptide (Lys-Gly) (interchain with G-Cter in ubiquitin)" evidence="55">
    <location>
        <position position="109"/>
    </location>
</feature>
<feature type="splice variant" id="VSP_001839" description="In isoform 2." evidence="81">
    <location>
        <begin position="60"/>
        <end position="100"/>
    </location>
</feature>
<feature type="mutagenesis site" description="Loss of binding to AGO2." evidence="60">
    <original>W</original>
    <variation>F</variation>
    <location>
        <position position="36"/>
    </location>
</feature>
<feature type="mutagenesis site" description="Ineffective in DNA synthesis. Abolishes interaction with SHB; when associated with L-206. Abolishes interaction with SOS1." evidence="25 69 78">
    <original>P</original>
    <variation>L</variation>
    <location>
        <position position="49"/>
    </location>
</feature>
<feature type="mutagenesis site" description="No effect on the interaction with SOS1." evidence="69">
    <original>E</original>
    <variation>K</variation>
    <location>
        <position position="89"/>
    </location>
</feature>
<feature type="mutagenesis site" description="No effect on the interaction with SOS1." evidence="69">
    <original>S</original>
    <variation>N</variation>
    <location>
        <position position="90"/>
    </location>
</feature>
<feature type="mutagenesis site" description="Loss of polyubiquitination." evidence="55">
    <original>K</original>
    <variation>R</variation>
    <location>
        <position position="109"/>
    </location>
</feature>
<feature type="mutagenesis site" description="Strong loss of clustering of phospho-LAT at the T-cell plasma membrane." evidence="59">
    <original>V</original>
    <variation>P</variation>
    <location>
        <position position="123"/>
    </location>
</feature>
<feature type="mutagenesis site" description="Loss of binding to AGO2." evidence="60">
    <original>W</original>
    <variation>F</variation>
    <location>
        <position position="193"/>
    </location>
</feature>
<feature type="mutagenesis site" description="Ineffective in DNA synthesis. Abolishes interaction with SOS1." evidence="25 69">
    <original>G</original>
    <variation>R</variation>
    <location>
        <position position="203"/>
    </location>
</feature>
<feature type="mutagenesis site" description="Abolishes interaction with SHB; when associated with L-49." evidence="78">
    <original>P</original>
    <variation>L</variation>
    <location>
        <position position="206"/>
    </location>
</feature>
<feature type="strand" evidence="95">
    <location>
        <begin position="1"/>
        <end position="7"/>
    </location>
</feature>
<feature type="strand" evidence="89">
    <location>
        <begin position="13"/>
        <end position="15"/>
    </location>
</feature>
<feature type="strand" evidence="95">
    <location>
        <begin position="24"/>
        <end position="27"/>
    </location>
</feature>
<feature type="strand" evidence="95">
    <location>
        <begin position="36"/>
        <end position="41"/>
    </location>
</feature>
<feature type="strand" evidence="95">
    <location>
        <begin position="44"/>
        <end position="49"/>
    </location>
</feature>
<feature type="helix" evidence="95">
    <location>
        <begin position="50"/>
        <end position="52"/>
    </location>
</feature>
<feature type="strand" evidence="95">
    <location>
        <begin position="53"/>
        <end position="55"/>
    </location>
</feature>
<feature type="strand" evidence="93">
    <location>
        <begin position="61"/>
        <end position="64"/>
    </location>
</feature>
<feature type="helix" evidence="94">
    <location>
        <begin position="67"/>
        <end position="75"/>
    </location>
</feature>
<feature type="strand" evidence="88">
    <location>
        <begin position="78"/>
        <end position="80"/>
    </location>
</feature>
<feature type="strand" evidence="94">
    <location>
        <begin position="82"/>
        <end position="87"/>
    </location>
</feature>
<feature type="strand" evidence="94">
    <location>
        <begin position="89"/>
        <end position="91"/>
    </location>
</feature>
<feature type="strand" evidence="94">
    <location>
        <begin position="95"/>
        <end position="101"/>
    </location>
</feature>
<feature type="strand" evidence="94">
    <location>
        <begin position="104"/>
        <end position="112"/>
    </location>
</feature>
<feature type="strand" evidence="89">
    <location>
        <begin position="114"/>
        <end position="116"/>
    </location>
</feature>
<feature type="strand" evidence="94">
    <location>
        <begin position="118"/>
        <end position="122"/>
    </location>
</feature>
<feature type="strand" evidence="94">
    <location>
        <begin position="124"/>
        <end position="127"/>
    </location>
</feature>
<feature type="helix" evidence="94">
    <location>
        <begin position="128"/>
        <end position="135"/>
    </location>
</feature>
<feature type="strand" evidence="94">
    <location>
        <begin position="142"/>
        <end position="144"/>
    </location>
</feature>
<feature type="strand" evidence="88">
    <location>
        <begin position="149"/>
        <end position="152"/>
    </location>
</feature>
<feature type="strand" evidence="91">
    <location>
        <begin position="155"/>
        <end position="157"/>
    </location>
</feature>
<feature type="strand" evidence="92">
    <location>
        <begin position="160"/>
        <end position="165"/>
    </location>
</feature>
<feature type="strand" evidence="90">
    <location>
        <begin position="171"/>
        <end position="174"/>
    </location>
</feature>
<feature type="strand" evidence="92">
    <location>
        <begin position="182"/>
        <end position="187"/>
    </location>
</feature>
<feature type="strand" evidence="92">
    <location>
        <begin position="190"/>
        <end position="198"/>
    </location>
</feature>
<feature type="strand" evidence="92">
    <location>
        <begin position="201"/>
        <end position="206"/>
    </location>
</feature>
<feature type="helix" evidence="92">
    <location>
        <begin position="207"/>
        <end position="209"/>
    </location>
</feature>
<feature type="strand" evidence="92">
    <location>
        <begin position="210"/>
        <end position="212"/>
    </location>
</feature>
<gene>
    <name type="primary">GRB2</name>
    <name type="synonym">ASH</name>
</gene>
<comment type="function">
    <text evidence="16 19 25 36 49 50 53 55 57 59 60 61 62 63 79">Non-enzymatic adapter protein that plays a pivotal role in precisely regulated signaling cascades from cell surface receptors to cellular responses, including signaling transduction and gene expression (PubMed:11726515, PubMed:37626338). Thus, participates in many biological processes including regulation of innate and adaptive immunity, autophagy, DNA repair or necroptosis (PubMed:35831301, PubMed:37626338, PubMed:38182563). Controls signaling complexes at the T-cell antigen receptor to facilitate the activation, differentiation, and function of T-cells (PubMed:36864087, PubMed:9489702). Mechanistically, engagement of the TCR leads to phosphorylation of the adapter protein LAT, which serves as docking site for GRB2 (PubMed:9489702). In turn, GRB2 establishes a a connection with SOS1 that acts as a guanine nucleotide exchange factor and serves as a critical regulator of KRAS/RAF1 leading to MAPKs translocation to the nucleus and activation (PubMed:12171928, PubMed:25870599). Functions also a role in B-cell activation by amplifying Ca(2+) mobilization and activation of the ERK MAP kinase pathway upon recruitment to the phosphorylated B-cell antigen receptor (BCR) (PubMed:25413232, PubMed:29523808). Plays a role in switching between autophagy and programmed necrosis upstream of EGFR by interacting with components of necrosomes including RIPK1 and with autophagy regulators SQSTM1 and BECN1 (PubMed:35831301, PubMed:38182563). Regulates miRNA biogenesis by forming a functional ternary complex with AGO2 and DICER1 (PubMed:37328606). Functions in the replication stress response by protecting DNA at stalled replication forks from MRE11-mediated degradation. Mechanistically, inhibits RAD51 ATPase activity to stabilize RAD51 on stalled replication forks (PubMed:38459011). Additionally, directly recruits and later releases MRE11 at DNA damage sites during the homology-directed repair (HDR) process (PubMed:34348893).</text>
</comment>
<comment type="function">
    <molecule>Isoform 2</molecule>
    <text evidence="58 65">Does not bind to phosphorylated epidermal growth factor receptor (EGFR) but inhibits EGF-induced transactivation of a RAS-responsive element. Acts as a dominant negative protein over GRB2 and by suppressing proliferative signals, may trigger active programmed cell death. Mechanistically, inhibits RAS-ERK signaling and downstream cell proliferation by competing with GRB2 for SOS1 binding and thus by regulating SOS1 membrane recruitment (PubMed:36171279).</text>
</comment>
<comment type="subunit">
    <text evidence="1 4 5 6 7 8 9 10 11 12 13 14 15 16 17 18 19 20 21 22 23 24 26 27 28 29 30 31 32 33 34 35 36 37 38 39 40 41 42 43 44 45 46 47 48 50 51 52 53 55 56 57 59 60 62 63 64 66 67 68 69 70 71 72 73 74 75 76 77 78 79 80">Homodimer (PubMed:36864087). Associates (via SH2 domain) with activated EGF and PDGF receptors (tyrosine phosphorylated) (PubMed:10026169, PubMed:19836242, PubMed:35831301). Interacts with PDGFRA (tyrosine phosphorylated); the interaction may be indirect (By similarity). Also associates to other cellular Tyr-phosphorylated proteins such as SIT1, IRS1, IRS2, IRS4, SHC and LNK; probably via the concerted action of both its SH2 and SH3 domains (PubMed:11433379, PubMed:8388384, PubMed:8491186, PubMed:9553137, PubMed:19109239). It also seems to interact with RAS in the signaling pathway leading to DNA synthesis. Interacts with SOS1 (PubMed:11726515, PubMed:25870599, PubMed:7664271, PubMed:8493579). Forms a complex with MUC1 and SOS1, through interaction of the SH3 domains with SOS1 and the SH2 domain with phosphorylated MUC1 (PubMed:7664271). Interacts with phosphorylated MET (PubMed:11063574, PubMed:11827484). Interacts with phosphorylated TOM1L1 (By similarity). Interacts with the phosphorylated C-terminus of SH2B2 (PubMed:9233773). Interacts with phosphorylated SIT1, LAX1, LAT, LAT2 and LIME1 upon TCR and/or BCR activation (PubMed:12359715, PubMed:12486104, PubMed:12514734, PubMed:25870599, PubMed:9489702). Interacts with NISCH, PTPNS1 and REPS2 (PubMed:11912194, PubMed:9062191, PubMed:9422736). Interacts with syntrophin SNTA1 (By similarity). Interacts (via SH3 domains) with REPS1 (By similarity). Interacts (via SH3 domains) with PIK3C2B (PubMed:11533253). Interacts with CBL and CBLB (PubMed:10022120, PubMed:10086340). Interacts with AJUBA and CLNK (By similarity). Interacts (via SH2 domain) with TEK/TIE2 (tyrosine phosphorylated) (By similarity). Interacts with SHB, INPP5D/SHIP1, SKAP1 and SKAP2 (PubMed:10942756, PubMed:12171928, PubMed:8723348, PubMed:9108392, PubMed:9484780). Interacts with PTPN11 (By similarity). Interacts with PRNP (By similarity). Interacts with RALGPS1 (PubMed:10747847). Interacts with HCST (PubMed:16582911). Interacts with KDR (By similarity). Interacts with FLT1 (tyrosine-phosphorylated) (By similarity). Interacts with GAPT and PTPRE (PubMed:10980613, PubMed:18559951). Interacts (via SH2 domain) with KIF26A (PubMed:19914172). Interacts (via SH3 2) with GAB2 (PubMed:19523899). Interacts with ADAM15 (PubMed:18296648). Interacts with THEMIS2 (By similarity). Interacts (via SH2 domain) with AXL (phosphorylated) (PubMed:19815557, PubMed:9178760). Interacts (via SH2 domain) with KIT (phosphorylated) (PubMed:15526160, PubMed:16129412). Interacts with PTPRJ and BCR (PubMed:12475979, PubMed:15302586). Interacts with PTPN23 (PubMed:21179510). Interacts with FLT4 (tyrosine phosphorylated) (PubMed:15102829). Interacts with EPHB1 and SHC1; activates the MAPK/ERK cascade to regulate cell migration (PubMed:12925710, PubMed:8798570). Part of a complex including TNK2, GRB2, LTK and one receptor tyrosine kinase (RTK) such as AXL and PDGFRL, in which GRB2 promotes RTK recruitment by TNK2 (PubMed:19815557, PubMed:9178760). Interacts (via SH2 domain) with CSF1R (tyrosine phosphorylated) (PubMed:8262059). Interacts with ERBB4 (PubMed:10867024). Interacts with NTRK1 (phosphorylated upon ligand-binding) (PubMed:15488758). Interacts with PTK2/FAK1 (tyrosine phosphorylated) (PubMed:9148935). Interacts with PTK2B/PYK2 (tyrosine phosphorylated) (PubMed:20521079). Interacts (via SH3 domains) with GAREM1 isoform 1 (via proline-rich domain and tyrosine phosphorylated); the interaction occurs upon EGF stimulation (PubMed:19509291). Interacts with DAB2 (By similarity). Interacts with TESPA1 (PubMed:22561606). Interacts with PLCG1, LAT and THEMIS upon TCR activation in thymocytes; the association is weaker in the absence of TESPA1 (By similarity). Interacts with CD28 (PubMed:24098653). Interacts with RAB13; may recruit RAB13 to the leading edge of migrating endothelial cells where it can activate RHOA (By similarity). Interacts with ASAP3 (phosphorylated form) (PubMed:22027826). Interacts (via SH2 domain) with PTPRH (phosphorylated form) (By similarity). Interacts with PTPRO (phosphorylated form) (By similarity). Interacts with PTPRB (phosphorylated form) (By similarity). Interacts (via SH3 domain 2) with PRR14 (via proline-rich region) (PubMed:27041574). Interacts with FCRL6 (tyrosine phosphorylated form) (PubMed:20933011). Interacts with RHEX (via tyrosine-phosphorylated form) (PubMed:25092874). Interacts with DENND2B (PubMed:29030480). Interacts with SPRY2 (PubMed:17974561). Interacts with LRRC8A (By similarity). Interacts with PEAK1 (PubMed:35687021). Interacts with CD28 (By similarity). Interacts with FCRL1 (By similarity). Interacts with PCNA (PubMed:38459011). Interacts with CD19 (PubMed:29523808). Interacts with BECN1 (PubMed:38182563). Interacts with RAD51; the interaction inhibits RAD51 ATPase to stabilize RAD51-DNA complex at stalled replication forks. Interacts with MRE11; this interaction recruits MRE11 to the DNA damage sites (PubMed:34348893). Interacts with RIPK1 ans SQSTM1; these interactions play a critical role in regulating programmed necrosis (PubMed:35831301). Interacts with AGO2; this interaction is important for the formation of a ternary complex containing GRB2, AGO2 and DICER1 (PubMed:37328606). Interacts with TIGIT; this interaction inhibits PI3K and MAPK signaling cascades (PubMed:23154388). Interacts with CD226; this interaction leads to activation of VAV1, PI3K and PLCG1 (By similarity).</text>
</comment>
<comment type="subunit">
    <molecule>Isoform 1</molecule>
    <text evidence="42">Interacts (via SH2-domain) with SCIMP; this interaction is dependent on phosphorylation of SCIMP 'Tyr-69'.</text>
</comment>
<comment type="subunit">
    <molecule>Isoform 2</molecule>
    <text evidence="58">Interacts with SOS1; this interaction competes with GRB2 to bind SOS1 via its N-terminal SH3 domain.</text>
</comment>
<comment type="subunit">
    <text evidence="14">(Microbial infection) Interacts (via SH3 domain) with hepatitis E virus/HEV ORF3 protein.</text>
</comment>
<comment type="subunit">
    <text evidence="7">(Microbial infection) Interacts with hepatitis C virus/HCV protein NS5A via its SH3 domains.</text>
</comment>
<comment type="subunit">
    <text evidence="46">(Microbial infection) Interacts with herpes simplex virus 1 protein UL46.</text>
</comment>
<comment type="subunit">
    <text evidence="46">(Microbial infection) Interacts with B19 parvovirus protein 11K.</text>
</comment>
<comment type="interaction">
    <interactant intactId="EBI-401755">
        <id>P62993</id>
    </interactant>
    <interactant intactId="EBI-742038">
        <id>Q9P2A4</id>
        <label>ABI3</label>
    </interactant>
    <organismsDiffer>false</organismsDiffer>
    <experiments>3</experiments>
</comment>
<comment type="interaction">
    <interactant intactId="EBI-401755">
        <id>P62993</id>
    </interactant>
    <interactant intactId="EBI-1102694">
        <id>P42684</id>
        <label>ABL2</label>
    </interactant>
    <organismsDiffer>false</organismsDiffer>
    <experiments>2</experiments>
</comment>
<comment type="interaction">
    <interactant intactId="EBI-401755">
        <id>P62993</id>
    </interactant>
    <interactant intactId="EBI-751746">
        <id>Q15027</id>
        <label>ACAP1</label>
    </interactant>
    <organismsDiffer>false</organismsDiffer>
    <experiments>3</experiments>
</comment>
<comment type="interaction">
    <interactant intactId="EBI-401755">
        <id>P62993</id>
    </interactant>
    <interactant intactId="EBI-1536151">
        <id>O14672</id>
        <label>ADAM10</label>
    </interactant>
    <organismsDiffer>false</organismsDiffer>
    <experiments>5</experiments>
</comment>
<comment type="interaction">
    <interactant intactId="EBI-401755">
        <id>P62993</id>
    </interactant>
    <interactant intactId="EBI-77818">
        <id>Q13444</id>
        <label>ADAM15</label>
    </interactant>
    <organismsDiffer>false</organismsDiffer>
    <experiments>4</experiments>
</comment>
<comment type="interaction">
    <interactant intactId="EBI-401755">
        <id>P62993</id>
    </interactant>
    <interactant intactId="EBI-10173507">
        <id>Q6UY14-3</id>
        <label>ADAMTSL4</label>
    </interactant>
    <organismsDiffer>false</organismsDiffer>
    <experiments>3</experiments>
</comment>
<comment type="interaction">
    <interactant intactId="EBI-401755">
        <id>P62993</id>
    </interactant>
    <interactant intactId="EBI-1646426">
        <id>Q15109</id>
        <label>AGER</label>
    </interactant>
    <organismsDiffer>false</organismsDiffer>
    <experiments>2</experiments>
</comment>
<comment type="interaction">
    <interactant intactId="EBI-401755">
        <id>P62993</id>
    </interactant>
    <interactant intactId="EBI-712648">
        <id>O95994</id>
        <label>AGR2</label>
    </interactant>
    <organismsDiffer>false</organismsDiffer>
    <experiments>5</experiments>
</comment>
<comment type="interaction">
    <interactant intactId="EBI-401755">
        <id>P62993</id>
    </interactant>
    <interactant intactId="EBI-941975">
        <id>Q01484</id>
        <label>ANK2</label>
    </interactant>
    <organismsDiffer>false</organismsDiffer>
    <experiments>2</experiments>
</comment>
<comment type="interaction">
    <interactant intactId="EBI-401755">
        <id>P62993</id>
    </interactant>
    <interactant intactId="EBI-5661893">
        <id>Q86SG2</id>
        <label>ANKRD23</label>
    </interactant>
    <organismsDiffer>false</organismsDiffer>
    <experiments>3</experiments>
</comment>
<comment type="interaction">
    <interactant intactId="EBI-401755">
        <id>P62993</id>
    </interactant>
    <interactant intactId="EBI-750254">
        <id>Q9BRR9</id>
        <label>ARHGAP9</label>
    </interactant>
    <organismsDiffer>false</organismsDiffer>
    <experiments>3</experiments>
</comment>
<comment type="interaction">
    <interactant intactId="EBI-401755">
        <id>P62993</id>
    </interactant>
    <interactant intactId="EBI-2806617">
        <id>P52566</id>
        <label>ARHGDIB</label>
    </interactant>
    <organismsDiffer>false</organismsDiffer>
    <experiments>3</experiments>
</comment>
<comment type="interaction">
    <interactant intactId="EBI-401755">
        <id>P62993</id>
    </interactant>
    <interactant intactId="EBI-602199">
        <id>Q12774</id>
        <label>ARHGEF5</label>
    </interactant>
    <organismsDiffer>false</organismsDiffer>
    <experiments>8</experiments>
</comment>
<comment type="interaction">
    <interactant intactId="EBI-401755">
        <id>P62993</id>
    </interactant>
    <interactant intactId="EBI-948603">
        <id>Q03989</id>
        <label>ARID5A</label>
    </interactant>
    <organismsDiffer>false</organismsDiffer>
    <experiments>3</experiments>
</comment>
<comment type="interaction">
    <interactant intactId="EBI-401755">
        <id>P62993</id>
    </interactant>
    <interactant intactId="EBI-5280499">
        <id>Q66PJ3-4</id>
        <label>ARL6IP4</label>
    </interactant>
    <organismsDiffer>false</organismsDiffer>
    <experiments>2</experiments>
</comment>
<comment type="interaction">
    <interactant intactId="EBI-401755">
        <id>P62993</id>
    </interactant>
    <interactant intactId="EBI-346622">
        <id>Q9ULH1</id>
        <label>ASAP1</label>
    </interactant>
    <organismsDiffer>false</organismsDiffer>
    <experiments>12</experiments>
</comment>
<comment type="interaction">
    <interactant intactId="EBI-401755">
        <id>P62993</id>
    </interactant>
    <interactant intactId="EBI-310968">
        <id>O43150</id>
        <label>ASAP2</label>
    </interactant>
    <organismsDiffer>false</organismsDiffer>
    <experiments>4</experiments>
</comment>
<comment type="interaction">
    <interactant intactId="EBI-401755">
        <id>P62993</id>
    </interactant>
    <interactant intactId="EBI-10254793">
        <id>Q6XD76</id>
        <label>ASCL4</label>
    </interactant>
    <organismsDiffer>false</organismsDiffer>
    <experiments>3</experiments>
</comment>
<comment type="interaction">
    <interactant intactId="EBI-401755">
        <id>P62993</id>
    </interactant>
    <interactant intactId="EBI-2850927">
        <id>P30530</id>
        <label>AXL</label>
    </interactant>
    <organismsDiffer>false</organismsDiffer>
    <experiments>4</experiments>
</comment>
<comment type="interaction">
    <interactant intactId="EBI-401755">
        <id>P62993</id>
    </interactant>
    <interactant intactId="EBI-712838">
        <id>P11274</id>
        <label>BCR</label>
    </interactant>
    <organismsDiffer>false</organismsDiffer>
    <experiments>11</experiments>
</comment>
<comment type="interaction">
    <interactant intactId="EBI-401755">
        <id>P62993</id>
    </interactant>
    <interactant intactId="EBI-949378">
        <id>Q14457</id>
        <label>BECN1</label>
    </interactant>
    <organismsDiffer>false</organismsDiffer>
    <experiments>8</experiments>
</comment>
<comment type="interaction">
    <interactant intactId="EBI-401755">
        <id>P62993</id>
    </interactant>
    <interactant intactId="EBI-2623522">
        <id>Q8WV28</id>
        <label>BLNK</label>
    </interactant>
    <organismsDiffer>false</organismsDiffer>
    <experiments>4</experiments>
</comment>
<comment type="interaction">
    <interactant intactId="EBI-401755">
        <id>P62993</id>
    </interactant>
    <interactant intactId="EBI-723869">
        <id>O60885</id>
        <label>BRD4</label>
    </interactant>
    <organismsDiffer>false</organismsDiffer>
    <experiments>2</experiments>
</comment>
<comment type="interaction">
    <interactant intactId="EBI-401755">
        <id>P62993</id>
    </interactant>
    <interactant intactId="EBI-742279">
        <id>P62324</id>
        <label>BTG1</label>
    </interactant>
    <organismsDiffer>false</organismsDiffer>
    <experiments>3</experiments>
</comment>
<comment type="interaction">
    <interactant intactId="EBI-401755">
        <id>P62993</id>
    </interactant>
    <interactant intactId="EBI-946029">
        <id>Q6P1W5</id>
        <label>C1orf94</label>
    </interactant>
    <organismsDiffer>false</organismsDiffer>
    <experiments>3</experiments>
</comment>
<comment type="interaction">
    <interactant intactId="EBI-401755">
        <id>P62993</id>
    </interactant>
    <interactant intactId="EBI-518228">
        <id>P22681</id>
        <label>CBL</label>
    </interactant>
    <organismsDiffer>false</organismsDiffer>
    <experiments>14</experiments>
</comment>
<comment type="interaction">
    <interactant intactId="EBI-401755">
        <id>P62993</id>
    </interactant>
    <interactant intactId="EBI-744027">
        <id>Q13191</id>
        <label>CBLB</label>
    </interactant>
    <organismsDiffer>false</organismsDiffer>
    <experiments>30</experiments>
</comment>
<comment type="interaction">
    <interactant intactId="EBI-401755">
        <id>P62993</id>
    </interactant>
    <interactant intactId="EBI-12920646">
        <id>Q9BUN5-3</id>
        <label>CCDC28B</label>
    </interactant>
    <organismsDiffer>false</organismsDiffer>
    <experiments>3</experiments>
</comment>
<comment type="interaction">
    <interactant intactId="EBI-401755">
        <id>P62993</id>
    </interactant>
    <interactant intactId="EBI-298152">
        <id>Q9Y5K6</id>
        <label>CD2AP</label>
    </interactant>
    <organismsDiffer>false</organismsDiffer>
    <experiments>3</experiments>
</comment>
<comment type="interaction">
    <interactant intactId="EBI-401755">
        <id>P62993</id>
    </interactant>
    <interactant intactId="EBI-11523759">
        <id>Q8N684-3</id>
        <label>CPSF7</label>
    </interactant>
    <organismsDiffer>false</organismsDiffer>
    <experiments>3</experiments>
</comment>
<comment type="interaction">
    <interactant intactId="EBI-401755">
        <id>P62993</id>
    </interactant>
    <interactant intactId="EBI-1171238">
        <id>P98082</id>
        <label>DAB2</label>
    </interactant>
    <organismsDiffer>false</organismsDiffer>
    <experiments>2</experiments>
</comment>
<comment type="interaction">
    <interactant intactId="EBI-401755">
        <id>P62993</id>
    </interactant>
    <interactant intactId="EBI-358730">
        <id>P14868</id>
        <label>DARS1</label>
    </interactant>
    <organismsDiffer>false</organismsDiffer>
    <experiments>2</experiments>
</comment>
<comment type="interaction">
    <interactant intactId="EBI-401755">
        <id>P62993</id>
    </interactant>
    <interactant intactId="EBI-351394">
        <id>Q16643</id>
        <label>DBN1</label>
    </interactant>
    <organismsDiffer>false</organismsDiffer>
    <experiments>4</experiments>
</comment>
<comment type="interaction">
    <interactant intactId="EBI-401755">
        <id>P62993</id>
    </interactant>
    <interactant intactId="EBI-742054">
        <id>Q96D03</id>
        <label>DDIT4L</label>
    </interactant>
    <organismsDiffer>false</organismsDiffer>
    <experiments>3</experiments>
</comment>
<comment type="interaction">
    <interactant intactId="EBI-401755">
        <id>P62993</id>
    </interactant>
    <interactant intactId="EBI-746012">
        <id>Q92841</id>
        <label>DDX17</label>
    </interactant>
    <organismsDiffer>false</organismsDiffer>
    <experiments>3</experiments>
</comment>
<comment type="interaction">
    <interactant intactId="EBI-401755">
        <id>P62993</id>
    </interactant>
    <interactant intactId="EBI-1753207">
        <id>O14490</id>
        <label>DLGAP1</label>
    </interactant>
    <organismsDiffer>false</organismsDiffer>
    <experiments>3</experiments>
</comment>
<comment type="interaction">
    <interactant intactId="EBI-401755">
        <id>P62993</id>
    </interactant>
    <interactant intactId="EBI-1753397">
        <id>Q9P1A6</id>
        <label>DLGAP2</label>
    </interactant>
    <organismsDiffer>false</organismsDiffer>
    <experiments>2</experiments>
</comment>
<comment type="interaction">
    <interactant intactId="EBI-401755">
        <id>P62993</id>
    </interactant>
    <interactant intactId="EBI-722139">
        <id>Q9Y2H0</id>
        <label>DLGAP4</label>
    </interactant>
    <organismsDiffer>false</organismsDiffer>
    <experiments>2</experiments>
</comment>
<comment type="interaction">
    <interactant intactId="EBI-401755">
        <id>P62993</id>
    </interactant>
    <interactant intactId="EBI-713135">
        <id>Q05193</id>
        <label>DNM1</label>
    </interactant>
    <organismsDiffer>false</organismsDiffer>
    <experiments>6</experiments>
</comment>
<comment type="interaction">
    <interactant intactId="EBI-401755">
        <id>P62993</id>
    </interactant>
    <interactant intactId="EBI-346547">
        <id>P50570</id>
        <label>DNM2</label>
    </interactant>
    <organismsDiffer>false</organismsDiffer>
    <experiments>9</experiments>
</comment>
<comment type="interaction">
    <interactant intactId="EBI-401755">
        <id>P62993</id>
    </interactant>
    <interactant intactId="EBI-446740">
        <id>Q14185</id>
        <label>DOCK1</label>
    </interactant>
    <organismsDiffer>false</organismsDiffer>
    <experiments>6</experiments>
</comment>
<comment type="interaction">
    <interactant intactId="EBI-401755">
        <id>P62993</id>
    </interactant>
    <interactant intactId="EBI-1059186">
        <id>Q8N1I0</id>
        <label>DOCK4</label>
    </interactant>
    <organismsDiffer>false</organismsDiffer>
    <experiments>5</experiments>
</comment>
<comment type="interaction">
    <interactant intactId="EBI-401755">
        <id>P62993</id>
    </interactant>
    <interactant intactId="EBI-710457">
        <id>Q7L190</id>
        <label>DPPA4</label>
    </interactant>
    <organismsDiffer>false</organismsDiffer>
    <experiments>3</experiments>
</comment>
<comment type="interaction">
    <interactant intactId="EBI-401755">
        <id>P62993</id>
    </interactant>
    <interactant intactId="EBI-2340258">
        <id>Q8N9I9</id>
        <label>DTX3</label>
    </interactant>
    <organismsDiffer>false</organismsDiffer>
    <experiments>3</experiments>
</comment>
<comment type="interaction">
    <interactant intactId="EBI-401755">
        <id>P62993</id>
    </interactant>
    <interactant intactId="EBI-2349927">
        <id>Q5JST6</id>
        <label>EFHC2</label>
    </interactant>
    <organismsDiffer>false</organismsDiffer>
    <experiments>3</experiments>
</comment>
<comment type="interaction">
    <interactant intactId="EBI-401755">
        <id>P62993</id>
    </interactant>
    <interactant intactId="EBI-297353">
        <id>P00533</id>
        <label>EGFR</label>
    </interactant>
    <organismsDiffer>false</organismsDiffer>
    <experiments>48</experiments>
</comment>
<comment type="interaction">
    <interactant intactId="EBI-401755">
        <id>P62993</id>
    </interactant>
    <interactant intactId="EBI-2340132">
        <id>Q9UI10</id>
        <label>EIF2B4</label>
    </interactant>
    <organismsDiffer>false</organismsDiffer>
    <experiments>3</experiments>
</comment>
<comment type="interaction">
    <interactant intactId="EBI-401755">
        <id>P62993</id>
    </interactant>
    <interactant intactId="EBI-80252">
        <id>P54762</id>
        <label>EPHB1</label>
    </interactant>
    <organismsDiffer>false</organismsDiffer>
    <experiments>2</experiments>
</comment>
<comment type="interaction">
    <interactant intactId="EBI-401755">
        <id>P62993</id>
    </interactant>
    <interactant intactId="EBI-375576">
        <id>Q12929</id>
        <label>EPS8</label>
    </interactant>
    <organismsDiffer>false</organismsDiffer>
    <experiments>3</experiments>
</comment>
<comment type="interaction">
    <interactant intactId="EBI-401755">
        <id>P62993</id>
    </interactant>
    <interactant intactId="EBI-641062">
        <id>P04626</id>
        <label>ERBB2</label>
    </interactant>
    <organismsDiffer>false</organismsDiffer>
    <experiments>7</experiments>
</comment>
<comment type="interaction">
    <interactant intactId="EBI-401755">
        <id>P62993</id>
    </interactant>
    <interactant intactId="EBI-720706">
        <id>P21860</id>
        <label>ERBB3</label>
    </interactant>
    <organismsDiffer>false</organismsDiffer>
    <experiments>3</experiments>
</comment>
<comment type="interaction">
    <interactant intactId="EBI-401755">
        <id>P62993</id>
    </interactant>
    <interactant intactId="EBI-2941912">
        <id>Q9UJM3</id>
        <label>ERRFI1</label>
    </interactant>
    <organismsDiffer>false</organismsDiffer>
    <experiments>18</experiments>
</comment>
<comment type="interaction">
    <interactant intactId="EBI-401755">
        <id>P62993</id>
    </interactant>
    <interactant intactId="EBI-10220102">
        <id>B7ZLH0</id>
        <label>FAM22F</label>
    </interactant>
    <organismsDiffer>false</organismsDiffer>
    <experiments>6</experiments>
</comment>
<comment type="interaction">
    <interactant intactId="EBI-401755">
        <id>P62993</id>
    </interactant>
    <interactant intactId="EBI-81570">
        <id>O15360</id>
        <label>FANCA</label>
    </interactant>
    <organismsDiffer>false</organismsDiffer>
    <experiments>2</experiments>
</comment>
<comment type="interaction">
    <interactant intactId="EBI-401755">
        <id>P62993</id>
    </interactant>
    <interactant intactId="EBI-1028658">
        <id>P21802</id>
        <label>FGFR2</label>
    </interactant>
    <organismsDiffer>false</organismsDiffer>
    <experiments>6</experiments>
</comment>
<comment type="interaction">
    <interactant intactId="EBI-401755">
        <id>P62993</id>
    </interactant>
    <interactant intactId="EBI-350432">
        <id>P21333</id>
        <label>FLNA</label>
    </interactant>
    <organismsDiffer>false</organismsDiffer>
    <experiments>2</experiments>
</comment>
<comment type="interaction">
    <interactant intactId="EBI-401755">
        <id>P62993</id>
    </interactant>
    <interactant intactId="EBI-352089">
        <id>O75369</id>
        <label>FLNB</label>
    </interactant>
    <organismsDiffer>false</organismsDiffer>
    <experiments>2</experiments>
</comment>
<comment type="interaction">
    <interactant intactId="EBI-401755">
        <id>P62993</id>
    </interactant>
    <interactant intactId="EBI-489954">
        <id>Q14315</id>
        <label>FLNC</label>
    </interactant>
    <organismsDiffer>false</organismsDiffer>
    <experiments>2</experiments>
</comment>
<comment type="interaction">
    <interactant intactId="EBI-401755">
        <id>P62993</id>
    </interactant>
    <interactant intactId="EBI-517684">
        <id>Q13480</id>
        <label>GAB1</label>
    </interactant>
    <organismsDiffer>false</organismsDiffer>
    <experiments>9</experiments>
</comment>
<comment type="interaction">
    <interactant intactId="EBI-401755">
        <id>P62993</id>
    </interactant>
    <interactant intactId="EBI-975200">
        <id>Q9UQC2</id>
        <label>GAB2</label>
    </interactant>
    <organismsDiffer>false</organismsDiffer>
    <experiments>15</experiments>
</comment>
<comment type="interaction">
    <interactant intactId="EBI-401755">
        <id>P62993</id>
    </interactant>
    <interactant intactId="EBI-3440103">
        <id>Q9H706</id>
        <label>GAREM1</label>
    </interactant>
    <organismsDiffer>false</organismsDiffer>
    <experiments>13</experiments>
</comment>
<comment type="interaction">
    <interactant intactId="EBI-401755">
        <id>P62993</id>
    </interactant>
    <interactant intactId="EBI-10259069">
        <id>Q86UU5</id>
        <label>GGN</label>
    </interactant>
    <organismsDiffer>false</organismsDiffer>
    <experiments>3</experiments>
</comment>
<comment type="interaction">
    <interactant intactId="EBI-401755">
        <id>P62993</id>
    </interactant>
    <interactant intactId="EBI-466061">
        <id>Q9Y2X7</id>
        <label>GIT1</label>
    </interactant>
    <organismsDiffer>false</organismsDiffer>
    <experiments>4</experiments>
</comment>
<comment type="interaction">
    <interactant intactId="EBI-401755">
        <id>P62993</id>
    </interactant>
    <interactant intactId="EBI-12353035">
        <id>Q13322-4</id>
        <label>GRB10</label>
    </interactant>
    <organismsDiffer>false</organismsDiffer>
    <experiments>3</experiments>
</comment>
<comment type="interaction">
    <interactant intactId="EBI-401755">
        <id>P62993</id>
    </interactant>
    <interactant intactId="EBI-401755">
        <id>P62993</id>
        <label>GRB2</label>
    </interactant>
    <organismsDiffer>false</organismsDiffer>
    <experiments>5</experiments>
</comment>
<comment type="interaction">
    <interactant intactId="EBI-401755">
        <id>P62993</id>
    </interactant>
    <interactant intactId="EBI-304185">
        <id>P61978</id>
        <label>HNRNPK</label>
    </interactant>
    <organismsDiffer>false</organismsDiffer>
    <experiments>10</experiments>
</comment>
<comment type="interaction">
    <interactant intactId="EBI-401755">
        <id>P62993</id>
    </interactant>
    <interactant intactId="EBI-10172004">
        <id>Q8IX15-3</id>
        <label>HOMEZ</label>
    </interactant>
    <organismsDiffer>false</organismsDiffer>
    <experiments>3</experiments>
</comment>
<comment type="interaction">
    <interactant intactId="EBI-401755">
        <id>P62993</id>
    </interactant>
    <interactant intactId="EBI-354921">
        <id>P11021</id>
        <label>HSPA5</label>
    </interactant>
    <organismsDiffer>false</organismsDiffer>
    <experiments>4</experiments>
</comment>
<comment type="interaction">
    <interactant intactId="EBI-401755">
        <id>P62993</id>
    </interactant>
    <interactant intactId="EBI-747204">
        <id>Q9UKT9</id>
        <label>IKZF3</label>
    </interactant>
    <organismsDiffer>false</organismsDiffer>
    <experiments>8</experiments>
</comment>
<comment type="interaction">
    <interactant intactId="EBI-401755">
        <id>P62993</id>
    </interactant>
    <interactant intactId="EBI-6509505">
        <id>Q0VD86</id>
        <label>INCA1</label>
    </interactant>
    <organismsDiffer>false</organismsDiffer>
    <experiments>4</experiments>
</comment>
<comment type="interaction">
    <interactant intactId="EBI-401755">
        <id>P62993</id>
    </interactant>
    <interactant intactId="EBI-712105">
        <id>Q13352</id>
        <label>ITGB3BP</label>
    </interactant>
    <organismsDiffer>false</organismsDiffer>
    <experiments>3</experiments>
</comment>
<comment type="interaction">
    <interactant intactId="EBI-401755">
        <id>P62993</id>
    </interactant>
    <interactant intactId="EBI-10311936">
        <id>Q9NQC1-2</id>
        <label>JADE2</label>
    </interactant>
    <organismsDiffer>false</organismsDiffer>
    <experiments>3</experiments>
</comment>
<comment type="interaction">
    <interactant intactId="EBI-401755">
        <id>P62993</id>
    </interactant>
    <interactant intactId="EBI-1364">
        <id>Q07666</id>
        <label>KHDRBS1</label>
    </interactant>
    <organismsDiffer>false</organismsDiffer>
    <experiments>8</experiments>
</comment>
<comment type="interaction">
    <interactant intactId="EBI-401755">
        <id>P62993</id>
    </interactant>
    <interactant intactId="EBI-739493">
        <id>Q6ZU52</id>
        <label>KIAA0408</label>
    </interactant>
    <organismsDiffer>false</organismsDiffer>
    <experiments>3</experiments>
</comment>
<comment type="interaction">
    <interactant intactId="EBI-401755">
        <id>P62993</id>
    </interactant>
    <interactant intactId="EBI-1379503">
        <id>P10721</id>
        <label>KIT</label>
    </interactant>
    <organismsDiffer>false</organismsDiffer>
    <experiments>6</experiments>
</comment>
<comment type="interaction">
    <interactant intactId="EBI-401755">
        <id>P62993</id>
    </interactant>
    <interactant intactId="EBI-2796400">
        <id>Q9UIH9</id>
        <label>KLF15</label>
    </interactant>
    <organismsDiffer>false</organismsDiffer>
    <experiments>3</experiments>
</comment>
<comment type="interaction">
    <interactant intactId="EBI-401755">
        <id>P62993</id>
    </interactant>
    <interactant intactId="EBI-297852">
        <id>P05787</id>
        <label>KRT8</label>
    </interactant>
    <organismsDiffer>false</organismsDiffer>
    <experiments>3</experiments>
</comment>
<comment type="interaction">
    <interactant intactId="EBI-401755">
        <id>P62993</id>
    </interactant>
    <interactant intactId="EBI-1048945">
        <id>Q3LI72</id>
        <label>KRTAP19-5</label>
    </interactant>
    <organismsDiffer>false</organismsDiffer>
    <experiments>3</experiments>
</comment>
<comment type="interaction">
    <interactant intactId="EBI-401755">
        <id>P62993</id>
    </interactant>
    <interactant intactId="EBI-1222766">
        <id>O43561</id>
        <label>LAT</label>
    </interactant>
    <organismsDiffer>false</organismsDiffer>
    <experiments>7</experiments>
</comment>
<comment type="interaction">
    <interactant intactId="EBI-401755">
        <id>P62993</id>
    </interactant>
    <interactant intactId="EBI-346946">
        <id>Q13094</id>
        <label>LCP2</label>
    </interactant>
    <organismsDiffer>false</organismsDiffer>
    <experiments>18</experiments>
</comment>
<comment type="interaction">
    <interactant intactId="EBI-401755">
        <id>P62993</id>
    </interactant>
    <interactant intactId="EBI-518596">
        <id>P48357</id>
        <label>LEPR</label>
    </interactant>
    <organismsDiffer>false</organismsDiffer>
    <experiments>3</experiments>
</comment>
<comment type="interaction">
    <interactant intactId="EBI-401755">
        <id>P62993</id>
    </interactant>
    <interactant intactId="EBI-739696">
        <id>P25791</id>
        <label>LMO2</label>
    </interactant>
    <organismsDiffer>false</organismsDiffer>
    <experiments>3</experiments>
</comment>
<comment type="interaction">
    <interactant intactId="EBI-401755">
        <id>P62993</id>
    </interactant>
    <interactant intactId="EBI-10692065">
        <id>Q8TE12</id>
        <label>LMX1A</label>
    </interactant>
    <organismsDiffer>false</organismsDiffer>
    <experiments>3</experiments>
</comment>
<comment type="interaction">
    <interactant intactId="EBI-401755">
        <id>P62993</id>
    </interactant>
    <interactant intactId="EBI-739832">
        <id>Q8TBB1</id>
        <label>LNX1</label>
    </interactant>
    <organismsDiffer>false</organismsDiffer>
    <experiments>4</experiments>
</comment>
<comment type="interaction">
    <interactant intactId="EBI-401755">
        <id>P62993</id>
    </interactant>
    <interactant intactId="EBI-5278370">
        <id>Q14693</id>
        <label>LPIN1</label>
    </interactant>
    <organismsDiffer>false</organismsDiffer>
    <experiments>3</experiments>
</comment>
<comment type="interaction">
    <interactant intactId="EBI-401755">
        <id>P62993</id>
    </interactant>
    <interactant intactId="EBI-6963742">
        <id>Q5SQ64</id>
        <label>LY6G6F</label>
    </interactant>
    <organismsDiffer>false</organismsDiffer>
    <experiments>3</experiments>
</comment>
<comment type="interaction">
    <interactant intactId="EBI-401755">
        <id>P62993</id>
    </interactant>
    <interactant intactId="EBI-741037">
        <id>Q9BRK4</id>
        <label>LZTS2</label>
    </interactant>
    <organismsDiffer>false</organismsDiffer>
    <experiments>3</experiments>
</comment>
<comment type="interaction">
    <interactant intactId="EBI-401755">
        <id>P62993</id>
    </interactant>
    <interactant intactId="EBI-307294">
        <id>Q13163</id>
        <label>MAP2K5</label>
    </interactant>
    <organismsDiffer>false</organismsDiffer>
    <experiments>2</experiments>
</comment>
<comment type="interaction">
    <interactant intactId="EBI-401755">
        <id>P62993</id>
    </interactant>
    <interactant intactId="EBI-881">
        <id>Q92918</id>
        <label>MAP4K1</label>
    </interactant>
    <organismsDiffer>false</organismsDiffer>
    <experiments>9</experiments>
</comment>
<comment type="interaction">
    <interactant intactId="EBI-401755">
        <id>P62993</id>
    </interactant>
    <interactant intactId="EBI-1758170">
        <id>Q8IVH8</id>
        <label>MAP4K3</label>
    </interactant>
    <organismsDiffer>false</organismsDiffer>
    <experiments>2</experiments>
</comment>
<comment type="interaction">
    <interactant intactId="EBI-401755">
        <id>P62993</id>
    </interactant>
    <interactant intactId="EBI-1279">
        <id>Q9Y4K4</id>
        <label>MAP4K5</label>
    </interactant>
    <organismsDiffer>false</organismsDiffer>
    <experiments>7</experiments>
</comment>
<comment type="interaction">
    <interactant intactId="EBI-401755">
        <id>P62993</id>
    </interactant>
    <interactant intactId="EBI-13288755">
        <id>A0JLT2-2</id>
        <label>MED19</label>
    </interactant>
    <organismsDiffer>false</organismsDiffer>
    <experiments>3</experiments>
</comment>
<comment type="interaction">
    <interactant intactId="EBI-401755">
        <id>P62993</id>
    </interactant>
    <interactant intactId="EBI-514199">
        <id>Q9H204</id>
        <label>MED28</label>
    </interactant>
    <organismsDiffer>false</organismsDiffer>
    <experiments>3</experiments>
</comment>
<comment type="interaction">
    <interactant intactId="EBI-401755">
        <id>P62993</id>
    </interactant>
    <interactant intactId="EBI-19944212">
        <id>A8MW99</id>
        <label>MEI4</label>
    </interactant>
    <organismsDiffer>false</organismsDiffer>
    <experiments>3</experiments>
</comment>
<comment type="interaction">
    <interactant intactId="EBI-401755">
        <id>P62993</id>
    </interactant>
    <interactant intactId="EBI-709754">
        <id>Q9HB07</id>
        <label>MYG1</label>
    </interactant>
    <organismsDiffer>false</organismsDiffer>
    <experiments>3</experiments>
</comment>
<comment type="interaction">
    <interactant intactId="EBI-401755">
        <id>P62993</id>
    </interactant>
    <interactant intactId="EBI-350338">
        <id>P35579</id>
        <label>MYH9</label>
    </interactant>
    <organismsDiffer>false</organismsDiffer>
    <experiments>3</experiments>
</comment>
<comment type="interaction">
    <interactant intactId="EBI-401755">
        <id>P62993</id>
    </interactant>
    <interactant intactId="EBI-347721">
        <id>Q8WX92</id>
        <label>NELFB</label>
    </interactant>
    <organismsDiffer>false</organismsDiffer>
    <experiments>2</experiments>
</comment>
<comment type="interaction">
    <interactant intactId="EBI-401755">
        <id>P62993</id>
    </interactant>
    <interactant intactId="EBI-2007911">
        <id>Q16236</id>
        <label>NFE2L2</label>
    </interactant>
    <organismsDiffer>false</organismsDiffer>
    <experiments>2</experiments>
</comment>
<comment type="interaction">
    <interactant intactId="EBI-401755">
        <id>P62993</id>
    </interactant>
    <interactant intactId="EBI-740897">
        <id>Q9GZT8</id>
        <label>NIF3L1</label>
    </interactant>
    <organismsDiffer>false</organismsDiffer>
    <experiments>3</experiments>
</comment>
<comment type="interaction">
    <interactant intactId="EBI-401755">
        <id>P62993</id>
    </interactant>
    <interactant intactId="EBI-1045887">
        <id>Q13177</id>
        <label>PAK2</label>
    </interactant>
    <organismsDiffer>false</organismsDiffer>
    <experiments>2</experiments>
</comment>
<comment type="interaction">
    <interactant intactId="EBI-401755">
        <id>P62993</id>
    </interactant>
    <interactant intactId="EBI-10693102">
        <id>Q9NPB6-2</id>
        <label>PARD6A</label>
    </interactant>
    <organismsDiffer>false</organismsDiffer>
    <experiments>3</experiments>
</comment>
<comment type="interaction">
    <interactant intactId="EBI-401755">
        <id>P62993</id>
    </interactant>
    <interactant intactId="EBI-14131832">
        <id>Q8N4B1-4</id>
        <label>PHETA1</label>
    </interactant>
    <organismsDiffer>false</organismsDiffer>
    <experiments>3</experiments>
</comment>
<comment type="interaction">
    <interactant intactId="EBI-401755">
        <id>P62993</id>
    </interactant>
    <interactant intactId="EBI-2654168">
        <id>Q6ZUJ8</id>
        <label>PIK3AP1</label>
    </interactant>
    <organismsDiffer>false</organismsDiffer>
    <experiments>6</experiments>
</comment>
<comment type="interaction">
    <interactant intactId="EBI-401755">
        <id>P62993</id>
    </interactant>
    <interactant intactId="EBI-641107">
        <id>O00750</id>
        <label>PIK3C2B</label>
    </interactant>
    <organismsDiffer>false</organismsDiffer>
    <experiments>6</experiments>
</comment>
<comment type="interaction">
    <interactant intactId="EBI-401755">
        <id>P62993</id>
    </interactant>
    <interactant intactId="EBI-2116585">
        <id>P42336</id>
        <label>PIK3CA</label>
    </interactant>
    <organismsDiffer>false</organismsDiffer>
    <experiments>6</experiments>
</comment>
<comment type="interaction">
    <interactant intactId="EBI-401755">
        <id>P62993</id>
    </interactant>
    <interactant intactId="EBI-79464">
        <id>P27986</id>
        <label>PIK3R1</label>
    </interactant>
    <organismsDiffer>false</organismsDiffer>
    <experiments>4</experiments>
</comment>
<comment type="interaction">
    <interactant intactId="EBI-401755">
        <id>P62993</id>
    </interactant>
    <interactant intactId="EBI-9090282">
        <id>P27986-2</id>
        <label>PIK3R1</label>
    </interactant>
    <organismsDiffer>false</organismsDiffer>
    <experiments>3</experiments>
</comment>
<comment type="interaction">
    <interactant intactId="EBI-401755">
        <id>P62993</id>
    </interactant>
    <interactant intactId="EBI-346930">
        <id>O00459</id>
        <label>PIK3R2</label>
    </interactant>
    <organismsDiffer>false</organismsDiffer>
    <experiments>4</experiments>
</comment>
<comment type="interaction">
    <interactant intactId="EBI-401755">
        <id>P62993</id>
    </interactant>
    <interactant intactId="EBI-79893">
        <id>Q92569</id>
        <label>PIK3R3</label>
    </interactant>
    <organismsDiffer>false</organismsDiffer>
    <experiments>4</experiments>
</comment>
<comment type="interaction">
    <interactant intactId="EBI-401755">
        <id>P62993</id>
    </interactant>
    <interactant intactId="EBI-79387">
        <id>P19174</id>
        <label>PLCG1</label>
    </interactant>
    <organismsDiffer>false</organismsDiffer>
    <experiments>2</experiments>
</comment>
<comment type="interaction">
    <interactant intactId="EBI-401755">
        <id>P62993</id>
    </interactant>
    <interactant intactId="EBI-1053996">
        <id>O14939</id>
        <label>PLD2</label>
    </interactant>
    <organismsDiffer>false</organismsDiffer>
    <experiments>4</experiments>
</comment>
<comment type="interaction">
    <interactant intactId="EBI-401755">
        <id>P62993</id>
    </interactant>
    <interactant intactId="EBI-12069346">
        <id>Q6IQ23-2</id>
        <label>PLEKHA7</label>
    </interactant>
    <organismsDiffer>false</organismsDiffer>
    <experiments>3</experiments>
</comment>
<comment type="interaction">
    <interactant intactId="EBI-401755">
        <id>P62993</id>
    </interactant>
    <interactant intactId="EBI-26412802">
        <id>Q5SXH7-1</id>
        <label>PLEKHS1</label>
    </interactant>
    <organismsDiffer>false</organismsDiffer>
    <experiments>2</experiments>
</comment>
<comment type="interaction">
    <interactant intactId="EBI-401755">
        <id>P62993</id>
    </interactant>
    <interactant intactId="EBI-10171633">
        <id>Q96PV4</id>
        <label>PNMA5</label>
    </interactant>
    <organismsDiffer>false</organismsDiffer>
    <experiments>3</experiments>
</comment>
<comment type="interaction">
    <interactant intactId="EBI-401755">
        <id>P62993</id>
    </interactant>
    <interactant intactId="EBI-78615">
        <id>Q07869</id>
        <label>PPARA</label>
    </interactant>
    <organismsDiffer>false</organismsDiffer>
    <experiments>3</experiments>
</comment>
<comment type="interaction">
    <interactant intactId="EBI-401755">
        <id>P62993</id>
    </interactant>
    <interactant intactId="EBI-352922">
        <id>Q08209</id>
        <label>PPP3CA</label>
    </interactant>
    <organismsDiffer>false</organismsDiffer>
    <experiments>3</experiments>
</comment>
<comment type="interaction">
    <interactant intactId="EBI-401755">
        <id>P62993</id>
    </interactant>
    <interactant intactId="EBI-719769">
        <id>Q9Y478</id>
        <label>PRKAB1</label>
    </interactant>
    <organismsDiffer>false</organismsDiffer>
    <experiments>2</experiments>
</comment>
<comment type="interaction">
    <interactant intactId="EBI-401755">
        <id>P62993</id>
    </interactant>
    <interactant intactId="EBI-351098">
        <id>O14744</id>
        <label>PRMT5</label>
    </interactant>
    <organismsDiffer>false</organismsDiffer>
    <experiments>4</experiments>
</comment>
<comment type="interaction">
    <interactant intactId="EBI-401755">
        <id>P62993</id>
    </interactant>
    <interactant intactId="EBI-17437404">
        <id>B1AHC3</id>
        <label>PRR5-ARHGAP8</label>
    </interactant>
    <organismsDiffer>false</organismsDiffer>
    <experiments>3</experiments>
</comment>
<comment type="interaction">
    <interactant intactId="EBI-401755">
        <id>P62993</id>
    </interactant>
    <interactant intactId="EBI-702142">
        <id>Q05397</id>
        <label>PTK2</label>
    </interactant>
    <organismsDiffer>false</organismsDiffer>
    <experiments>4</experiments>
</comment>
<comment type="interaction">
    <interactant intactId="EBI-401755">
        <id>P62993</id>
    </interactant>
    <interactant intactId="EBI-968788">
        <id>P18031</id>
        <label>PTPN1</label>
    </interactant>
    <organismsDiffer>false</organismsDiffer>
    <experiments>4</experiments>
</comment>
<comment type="interaction">
    <interactant intactId="EBI-401755">
        <id>P62993</id>
    </interactant>
    <interactant intactId="EBI-297779">
        <id>Q06124</id>
        <label>PTPN11</label>
    </interactant>
    <organismsDiffer>false</organismsDiffer>
    <experiments>11</experiments>
</comment>
<comment type="interaction">
    <interactant intactId="EBI-401755">
        <id>P62993</id>
    </interactant>
    <interactant intactId="EBI-1211241">
        <id>Q9Y2R2</id>
        <label>PTPN22</label>
    </interactant>
    <organismsDiffer>false</organismsDiffer>
    <experiments>2</experiments>
</comment>
<comment type="interaction">
    <interactant intactId="EBI-401755">
        <id>P62993</id>
    </interactant>
    <interactant intactId="EBI-724478">
        <id>Q9H3S7</id>
        <label>PTPN23</label>
    </interactant>
    <organismsDiffer>false</organismsDiffer>
    <experiments>8</experiments>
</comment>
<comment type="interaction">
    <interactant intactId="EBI-401755">
        <id>P62993</id>
    </interactant>
    <interactant intactId="EBI-78260">
        <id>P29350</id>
        <label>PTPN6</label>
    </interactant>
    <organismsDiffer>false</organismsDiffer>
    <experiments>3</experiments>
</comment>
<comment type="interaction">
    <interactant intactId="EBI-401755">
        <id>P62993</id>
    </interactant>
    <interactant intactId="EBI-2609645">
        <id>P18433</id>
        <label>PTPRA</label>
    </interactant>
    <organismsDiffer>false</organismsDiffer>
    <experiments>16</experiments>
</comment>
<comment type="interaction">
    <interactant intactId="EBI-401755">
        <id>P62993</id>
    </interactant>
    <interactant intactId="EBI-728180">
        <id>O14522</id>
        <label>PTPRT</label>
    </interactant>
    <organismsDiffer>false</organismsDiffer>
    <experiments>2</experiments>
</comment>
<comment type="interaction">
    <interactant intactId="EBI-401755">
        <id>P62993</id>
    </interactant>
    <interactant intactId="EBI-722234">
        <id>Q15907</id>
        <label>RAB11B</label>
    </interactant>
    <organismsDiffer>false</organismsDiffer>
    <experiments>3</experiments>
</comment>
<comment type="interaction">
    <interactant intactId="EBI-401755">
        <id>P62993</id>
    </interactant>
    <interactant intactId="EBI-491274">
        <id>P06400</id>
        <label>RB1</label>
    </interactant>
    <organismsDiffer>false</organismsDiffer>
    <experiments>4</experiments>
</comment>
<comment type="interaction">
    <interactant intactId="EBI-401755">
        <id>P62993</id>
    </interactant>
    <interactant intactId="EBI-25856809">
        <id>Q9BWF3-2</id>
        <label>RBM4</label>
    </interactant>
    <organismsDiffer>false</organismsDiffer>
    <experiments>3</experiments>
</comment>
<comment type="interaction">
    <interactant intactId="EBI-401755">
        <id>P62993</id>
    </interactant>
    <interactant intactId="EBI-307352">
        <id>Q04864</id>
        <label>REL</label>
    </interactant>
    <organismsDiffer>false</organismsDiffer>
    <experiments>3</experiments>
</comment>
<comment type="interaction">
    <interactant intactId="EBI-401755">
        <id>P62993</id>
    </interactant>
    <interactant intactId="EBI-7067016">
        <id>Q8NFH8</id>
        <label>REPS2</label>
    </interactant>
    <organismsDiffer>false</organismsDiffer>
    <experiments>8</experiments>
</comment>
<comment type="interaction">
    <interactant intactId="EBI-401755">
        <id>P62993</id>
    </interactant>
    <interactant intactId="EBI-751555">
        <id>Q9H0X6</id>
        <label>RNF208</label>
    </interactant>
    <organismsDiffer>false</organismsDiffer>
    <experiments>3</experiments>
</comment>
<comment type="interaction">
    <interactant intactId="EBI-401755">
        <id>P62993</id>
    </interactant>
    <interactant intactId="EBI-2462271">
        <id>Q15428</id>
        <label>SF3A2</label>
    </interactant>
    <organismsDiffer>false</organismsDiffer>
    <experiments>3</experiments>
</comment>
<comment type="interaction">
    <interactant intactId="EBI-401755">
        <id>P62993</id>
    </interactant>
    <interactant intactId="EBI-348469">
        <id>Q15427</id>
        <label>SF3B4</label>
    </interactant>
    <organismsDiffer>false</organismsDiffer>
    <experiments>3</experiments>
</comment>
<comment type="interaction">
    <interactant intactId="EBI-401755">
        <id>P62993</id>
    </interactant>
    <interactant intactId="EBI-10691662">
        <id>Q9NRF2-2</id>
        <label>SH2B1</label>
    </interactant>
    <organismsDiffer>false</organismsDiffer>
    <experiments>3</experiments>
</comment>
<comment type="interaction">
    <interactant intactId="EBI-401755">
        <id>P62993</id>
    </interactant>
    <interactant intactId="EBI-747035">
        <id>Q9H788</id>
        <label>SH2D4A</label>
    </interactant>
    <organismsDiffer>false</organismsDiffer>
    <experiments>4</experiments>
</comment>
<comment type="interaction">
    <interactant intactId="EBI-401755">
        <id>P62993</id>
    </interactant>
    <interactant intactId="EBI-1570571">
        <id>Q9UPX8</id>
        <label>SHANK2</label>
    </interactant>
    <organismsDiffer>false</organismsDiffer>
    <experiments>2</experiments>
</comment>
<comment type="interaction">
    <interactant intactId="EBI-401755">
        <id>P62993</id>
    </interactant>
    <interactant intactId="EBI-1752330">
        <id>Q9BYB0</id>
        <label>SHANK3</label>
    </interactant>
    <organismsDiffer>false</organismsDiffer>
    <experiments>2</experiments>
</comment>
<comment type="interaction">
    <interactant intactId="EBI-401755">
        <id>P62993</id>
    </interactant>
    <interactant intactId="EBI-78835">
        <id>P29353</id>
        <label>SHC1</label>
    </interactant>
    <organismsDiffer>false</organismsDiffer>
    <experiments>30</experiments>
</comment>
<comment type="interaction">
    <interactant intactId="EBI-401755">
        <id>P62993</id>
    </interactant>
    <interactant intactId="EBI-8160716">
        <id>P29353-1</id>
        <label>SHC1</label>
    </interactant>
    <organismsDiffer>false</organismsDiffer>
    <experiments>3</experiments>
</comment>
<comment type="interaction">
    <interactant intactId="EBI-401755">
        <id>P62993</id>
    </interactant>
    <interactant intactId="EBI-3942425">
        <id>Q8WXH5</id>
        <label>SOCS4</label>
    </interactant>
    <organismsDiffer>false</organismsDiffer>
    <experiments>3</experiments>
</comment>
<comment type="interaction">
    <interactant intactId="EBI-401755">
        <id>P62993</id>
    </interactant>
    <interactant intactId="EBI-1539606">
        <id>O14512</id>
        <label>SOCS7</label>
    </interactant>
    <organismsDiffer>false</organismsDiffer>
    <experiments>3</experiments>
</comment>
<comment type="interaction">
    <interactant intactId="EBI-401755">
        <id>P62993</id>
    </interactant>
    <interactant intactId="EBI-297487">
        <id>Q07889</id>
        <label>SOS1</label>
    </interactant>
    <organismsDiffer>false</organismsDiffer>
    <experiments>28</experiments>
</comment>
<comment type="interaction">
    <interactant intactId="EBI-401755">
        <id>P62993</id>
    </interactant>
    <interactant intactId="EBI-298181">
        <id>Q07890</id>
        <label>SOS2</label>
    </interactant>
    <organismsDiffer>false</organismsDiffer>
    <experiments>13</experiments>
</comment>
<comment type="interaction">
    <interactant intactId="EBI-401755">
        <id>P62993</id>
    </interactant>
    <interactant intactId="EBI-2510414">
        <id>Q8IUW3</id>
        <label>SPATA2L</label>
    </interactant>
    <organismsDiffer>false</organismsDiffer>
    <experiments>5</experiments>
</comment>
<comment type="interaction">
    <interactant intactId="EBI-401755">
        <id>P62993</id>
    </interactant>
    <interactant intactId="EBI-742487">
        <id>O43597</id>
        <label>SPRY2</label>
    </interactant>
    <organismsDiffer>false</organismsDiffer>
    <experiments>3</experiments>
</comment>
<comment type="interaction">
    <interactant intactId="EBI-401755">
        <id>P62993</id>
    </interactant>
    <interactant intactId="EBI-368166">
        <id>O43295</id>
        <label>SRGAP3</label>
    </interactant>
    <organismsDiffer>false</organismsDiffer>
    <experiments>2</experiments>
</comment>
<comment type="interaction">
    <interactant intactId="EBI-401755">
        <id>P62993</id>
    </interactant>
    <interactant intactId="EBI-396676">
        <id>O95630</id>
        <label>STAMBP</label>
    </interactant>
    <organismsDiffer>false</organismsDiffer>
    <experiments>10</experiments>
</comment>
<comment type="interaction">
    <interactant intactId="EBI-401755">
        <id>P62993</id>
    </interactant>
    <interactant intactId="EBI-310513">
        <id>O15056</id>
        <label>SYNJ2</label>
    </interactant>
    <organismsDiffer>false</organismsDiffer>
    <experiments>2</experiments>
</comment>
<comment type="interaction">
    <interactant intactId="EBI-401755">
        <id>P62993</id>
    </interactant>
    <interactant intactId="EBI-13092532">
        <id>Q6DHY5</id>
        <label>TBC1D3G</label>
    </interactant>
    <organismsDiffer>false</organismsDiffer>
    <experiments>3</experiments>
</comment>
<comment type="interaction">
    <interactant intactId="EBI-401755">
        <id>P62993</id>
    </interactant>
    <interactant intactId="EBI-2873538">
        <id>Q8N1K5</id>
        <label>THEMIS</label>
    </interactant>
    <organismsDiffer>false</organismsDiffer>
    <experiments>11</experiments>
</comment>
<comment type="interaction">
    <interactant intactId="EBI-401755">
        <id>P62993</id>
    </interactant>
    <interactant intactId="EBI-15102259">
        <id>Q8N1K5-1</id>
        <label>THEMIS</label>
    </interactant>
    <organismsDiffer>false</organismsDiffer>
    <experiments>10</experiments>
</comment>
<comment type="interaction">
    <interactant intactId="EBI-401755">
        <id>P62993</id>
    </interactant>
    <interactant intactId="EBI-717810">
        <id>Q08117</id>
        <label>TLE5</label>
    </interactant>
    <organismsDiffer>false</organismsDiffer>
    <experiments>3</experiments>
</comment>
<comment type="interaction">
    <interactant intactId="EBI-401755">
        <id>P62993</id>
    </interactant>
    <interactant intactId="EBI-10694905">
        <id>Q5BJH2-2</id>
        <label>TMEM128</label>
    </interactant>
    <organismsDiffer>false</organismsDiffer>
    <experiments>3</experiments>
</comment>
<comment type="interaction">
    <interactant intactId="EBI-401755">
        <id>P62993</id>
    </interactant>
    <interactant intactId="EBI-21757569">
        <id>Q8NFB2</id>
        <label>TMEM185A</label>
    </interactant>
    <organismsDiffer>false</organismsDiffer>
    <experiments>3</experiments>
</comment>
<comment type="interaction">
    <interactant intactId="EBI-401755">
        <id>P62993</id>
    </interactant>
    <interactant intactId="EBI-2505861">
        <id>Q13829</id>
        <label>TNFAIP1</label>
    </interactant>
    <organismsDiffer>false</organismsDiffer>
    <experiments>3</experiments>
</comment>
<comment type="interaction">
    <interactant intactId="EBI-401755">
        <id>P62993</id>
    </interactant>
    <interactant intactId="EBI-286693">
        <id>Q92973</id>
        <label>TNPO1</label>
    </interactant>
    <organismsDiffer>false</organismsDiffer>
    <experiments>2</experiments>
</comment>
<comment type="interaction">
    <interactant intactId="EBI-401755">
        <id>P62993</id>
    </interactant>
    <interactant intactId="EBI-712991">
        <id>O75674</id>
        <label>TOM1L1</label>
    </interactant>
    <organismsDiffer>false</organismsDiffer>
    <experiments>2</experiments>
</comment>
<comment type="interaction">
    <interactant intactId="EBI-401755">
        <id>P62993</id>
    </interactant>
    <interactant intactId="EBI-10175039">
        <id>Q13625-3</id>
        <label>TP53BP2</label>
    </interactant>
    <organismsDiffer>false</organismsDiffer>
    <experiments>3</experiments>
</comment>
<comment type="interaction">
    <interactant intactId="EBI-401755">
        <id>P62993</id>
    </interactant>
    <interactant intactId="EBI-1037322">
        <id>Q9ULW0</id>
        <label>TPX2</label>
    </interactant>
    <organismsDiffer>false</organismsDiffer>
    <experiments>2</experiments>
</comment>
<comment type="interaction">
    <interactant intactId="EBI-401755">
        <id>P62993</id>
    </interactant>
    <interactant intactId="EBI-492476">
        <id>Q96RU7</id>
        <label>TRIB3</label>
    </interactant>
    <organismsDiffer>false</organismsDiffer>
    <experiments>3</experiments>
</comment>
<comment type="interaction">
    <interactant intactId="EBI-401755">
        <id>P62993</id>
    </interactant>
    <interactant intactId="EBI-719493">
        <id>P14373</id>
        <label>TRIM27</label>
    </interactant>
    <organismsDiffer>false</organismsDiffer>
    <experiments>3</experiments>
</comment>
<comment type="interaction">
    <interactant intactId="EBI-401755">
        <id>P62993</id>
    </interactant>
    <interactant intactId="EBI-3914288">
        <id>O60636</id>
        <label>TSPAN2</label>
    </interactant>
    <organismsDiffer>false</organismsDiffer>
    <experiments>6</experiments>
</comment>
<comment type="interaction">
    <interactant intactId="EBI-401755">
        <id>P62993</id>
    </interactant>
    <interactant intactId="EBI-7877438">
        <id>P42681</id>
        <label>TXK</label>
    </interactant>
    <organismsDiffer>false</organismsDiffer>
    <experiments>3</experiments>
</comment>
<comment type="interaction">
    <interactant intactId="EBI-401755">
        <id>P62993</id>
    </interactant>
    <interactant intactId="EBI-3951628">
        <id>Q06418</id>
        <label>TYRO3</label>
    </interactant>
    <organismsDiffer>false</organismsDiffer>
    <experiments>4</experiments>
</comment>
<comment type="interaction">
    <interactant intactId="EBI-401755">
        <id>P62993</id>
    </interactant>
    <interactant intactId="EBI-743729">
        <id>Q16851</id>
        <label>UGP2</label>
    </interactant>
    <organismsDiffer>false</organismsDiffer>
    <experiments>2</experiments>
</comment>
<comment type="interaction">
    <interactant intactId="EBI-401755">
        <id>P62993</id>
    </interactant>
    <interactant intactId="EBI-625518">
        <id>P15498</id>
        <label>VAV1</label>
    </interactant>
    <organismsDiffer>false</organismsDiffer>
    <experiments>3</experiments>
</comment>
<comment type="interaction">
    <interactant intactId="EBI-401755">
        <id>P62993</id>
    </interactant>
    <interactant intactId="EBI-297568">
        <id>Q9UKW4</id>
        <label>VAV3</label>
    </interactant>
    <organismsDiffer>false</organismsDiffer>
    <experiments>8</experiments>
</comment>
<comment type="interaction">
    <interactant intactId="EBI-401755">
        <id>P62993</id>
    </interactant>
    <interactant intactId="EBI-355164">
        <id>P55072</id>
        <label>VCP</label>
    </interactant>
    <organismsDiffer>false</organismsDiffer>
    <experiments>3</experiments>
</comment>
<comment type="interaction">
    <interactant intactId="EBI-401755">
        <id>P62993</id>
    </interactant>
    <interactant intactId="EBI-2559305">
        <id>A5D8V6</id>
        <label>VPS37C</label>
    </interactant>
    <organismsDiffer>false</organismsDiffer>
    <experiments>3</experiments>
</comment>
<comment type="interaction">
    <interactant intactId="EBI-401755">
        <id>P62993</id>
    </interactant>
    <interactant intactId="EBI-1548747">
        <id>Q92558</id>
        <label>WASF1</label>
    </interactant>
    <organismsDiffer>false</organismsDiffer>
    <experiments>3</experiments>
</comment>
<comment type="interaction">
    <interactant intactId="EBI-401755">
        <id>P62993</id>
    </interactant>
    <interactant intactId="EBI-957615">
        <id>O00401</id>
        <label>WASL</label>
    </interactant>
    <organismsDiffer>false</organismsDiffer>
    <experiments>12</experiments>
</comment>
<comment type="interaction">
    <interactant intactId="EBI-401755">
        <id>P62993</id>
    </interactant>
    <interactant intactId="EBI-714455">
        <id>Q9Y2W2</id>
        <label>WBP11</label>
    </interactant>
    <organismsDiffer>false</organismsDiffer>
    <experiments>4</experiments>
</comment>
<comment type="interaction">
    <interactant intactId="EBI-401755">
        <id>P62993</id>
    </interactant>
    <interactant intactId="EBI-346356">
        <id>O43516</id>
        <label>WIPF1</label>
    </interactant>
    <organismsDiffer>false</organismsDiffer>
    <experiments>5</experiments>
</comment>
<comment type="interaction">
    <interactant intactId="EBI-401755">
        <id>P62993</id>
    </interactant>
    <interactant intactId="EBI-2850112">
        <id>Q8TF74</id>
        <label>WIPF2</label>
    </interactant>
    <organismsDiffer>false</organismsDiffer>
    <experiments>7</experiments>
</comment>
<comment type="interaction">
    <interactant intactId="EBI-401755">
        <id>P62993</id>
    </interactant>
    <interactant intactId="EBI-12377219">
        <id>Q9Y330</id>
        <label>ZBTB12</label>
    </interactant>
    <organismsDiffer>false</organismsDiffer>
    <experiments>5</experiments>
</comment>
<comment type="interaction">
    <interactant intactId="EBI-401755">
        <id>P62993</id>
    </interactant>
    <interactant intactId="EBI-740434">
        <id>O15156</id>
        <label>ZBTB7B</label>
    </interactant>
    <organismsDiffer>false</organismsDiffer>
    <experiments>3</experiments>
</comment>
<comment type="interaction">
    <interactant intactId="EBI-401755">
        <id>P62993</id>
    </interactant>
    <interactant intactId="EBI-749023">
        <id>Q9UNY5</id>
        <label>ZNF232</label>
    </interactant>
    <organismsDiffer>false</organismsDiffer>
    <experiments>3</experiments>
</comment>
<comment type="interaction">
    <interactant intactId="EBI-401755">
        <id>P62993</id>
    </interactant>
    <interactant intactId="EBI-9089622">
        <id>Q9BYN7</id>
        <label>ZNF341</label>
    </interactant>
    <organismsDiffer>false</organismsDiffer>
    <experiments>3</experiments>
</comment>
<comment type="interaction">
    <interactant intactId="EBI-401755">
        <id>P62993</id>
    </interactant>
    <interactant intactId="EBI-17269964">
        <id>Q6S9Z5</id>
        <label>ZNF474</label>
    </interactant>
    <organismsDiffer>false</organismsDiffer>
    <experiments>3</experiments>
</comment>
<comment type="interaction">
    <interactant intactId="EBI-401755">
        <id>P62993</id>
    </interactant>
    <interactant intactId="EBI-4395669">
        <id>Q6ZNG0</id>
        <label>ZNF620</label>
    </interactant>
    <organismsDiffer>false</organismsDiffer>
    <experiments>3</experiments>
</comment>
<comment type="interaction">
    <interactant intactId="EBI-401755">
        <id>P62993</id>
    </interactant>
    <interactant intactId="EBI-1054417">
        <id>Q9BRT8</id>
        <label>ZNG1A</label>
    </interactant>
    <organismsDiffer>false</organismsDiffer>
    <experiments>3</experiments>
</comment>
<comment type="interaction">
    <interactant intactId="EBI-401755">
        <id>P62993</id>
    </interactant>
    <interactant intactId="EBI-9088990">
        <id>Q7Z783</id>
    </interactant>
    <organismsDiffer>false</organismsDiffer>
    <experiments>3</experiments>
</comment>
<comment type="interaction">
    <interactant intactId="EBI-401755">
        <id>P62993</id>
    </interactant>
    <interactant intactId="EBI-1391846">
        <id>P98078</id>
        <label>Dab2</label>
    </interactant>
    <organismsDiffer>true</organismsDiffer>
    <experiments>4</experiments>
</comment>
<comment type="interaction">
    <interactant intactId="EBI-401755">
        <id>P62993</id>
    </interactant>
    <interactant intactId="EBI-520230">
        <id>P35570</id>
        <label>Irs1</label>
    </interactant>
    <organismsDiffer>true</organismsDiffer>
    <experiments>5</experiments>
</comment>
<comment type="interaction">
    <interactant intactId="EBI-401755">
        <id>P62993</id>
    </interactant>
    <interactant intactId="EBI-26445163">
        <id>Q7VLE8</id>
        <label>lspA1</label>
    </interactant>
    <organismsDiffer>true</organismsDiffer>
    <experiments>2</experiments>
</comment>
<comment type="interaction">
    <interactant intactId="EBI-401755">
        <id>P62993</id>
    </interactant>
    <interactant intactId="EBI-77070">
        <id>P34152</id>
        <label>Ptk2</label>
    </interactant>
    <organismsDiffer>true</organismsDiffer>
    <experiments>3</experiments>
</comment>
<comment type="interaction">
    <interactant intactId="EBI-401755">
        <id>P62993</id>
    </interactant>
    <interactant intactId="EBI-397236">
        <id>P35235</id>
        <label>Ptpn11</label>
    </interactant>
    <organismsDiffer>true</organismsDiffer>
    <experiments>7</experiments>
</comment>
<comment type="interaction">
    <interactant intactId="EBI-401755">
        <id>P62993</id>
    </interactant>
    <interactant intactId="EBI-1693">
        <id>Q62245</id>
        <label>Sos1</label>
    </interactant>
    <organismsDiffer>true</organismsDiffer>
    <experiments>4</experiments>
</comment>
<comment type="interaction">
    <interactant intactId="EBI-401755">
        <id>P62993</id>
    </interactant>
    <interactant intactId="EBI-22225085">
        <id>Q810M5</id>
        <label>Zdhhc19</label>
    </interactant>
    <organismsDiffer>true</organismsDiffer>
    <experiments>2</experiments>
</comment>
<comment type="interaction">
    <interactant intactId="EBI-401755">
        <id>P62993</id>
    </interactant>
    <interactant intactId="EBI-710506">
        <id>O92972</id>
    </interactant>
    <organismsDiffer>true</organismsDiffer>
    <experiments>2</experiments>
</comment>
<comment type="interaction">
    <interactant intactId="EBI-401755">
        <id>P62993</id>
    </interactant>
    <interactant intactId="EBI-9099462">
        <id>PRO_0000037647</id>
        <dbReference type="UniProtKB" id="P26662"/>
    </interactant>
    <organismsDiffer>true</organismsDiffer>
    <experiments>3</experiments>
</comment>
<comment type="interaction">
    <interactant intactId="EBI-401755">
        <id>P62993</id>
    </interactant>
    <interactant intactId="EBI-706378">
        <id>P27958</id>
    </interactant>
    <organismsDiffer>true</organismsDiffer>
    <experiments>3</experiments>
</comment>
<comment type="interaction">
    <interactant intactId="EBI-15787932">
        <id>P62993-1</id>
    </interactant>
    <interactant intactId="EBI-15787947">
        <id>Q9UQC2-1</id>
        <label>GAB2</label>
    </interactant>
    <organismsDiffer>false</organismsDiffer>
    <experiments>3</experiments>
</comment>
<comment type="interaction">
    <interactant intactId="EBI-15787932">
        <id>P62993-1</id>
    </interactant>
    <interactant intactId="EBI-8070286">
        <id>O43561-2</id>
        <label>LAT</label>
    </interactant>
    <organismsDiffer>false</organismsDiffer>
    <experiments>3</experiments>
</comment>
<comment type="interaction">
    <interactant intactId="EBI-15787932">
        <id>P62993-1</id>
    </interactant>
    <interactant intactId="EBI-1693">
        <id>Q62245</id>
        <label>Sos1</label>
    </interactant>
    <organismsDiffer>true</organismsDiffer>
    <experiments>2</experiments>
</comment>
<comment type="subcellular location">
    <subcellularLocation>
        <location evidence="41 60">Nucleus</location>
    </subcellularLocation>
    <subcellularLocation>
        <location evidence="41 54 60">Cytoplasm</location>
    </subcellularLocation>
    <subcellularLocation>
        <location evidence="41">Endosome</location>
    </subcellularLocation>
    <subcellularLocation>
        <location evidence="1">Golgi apparatus</location>
    </subcellularLocation>
</comment>
<comment type="alternative products">
    <event type="alternative splicing"/>
    <isoform>
        <id>P62993-1</id>
        <id>P29354-1</id>
        <name>1</name>
        <name>Ash-L</name>
        <sequence type="displayed"/>
    </isoform>
    <isoform>
        <id>P62993-2</id>
        <id>P29354-2</id>
        <name>2</name>
        <name>GRB3-3</name>
        <sequence type="described" ref="VSP_001839"/>
    </isoform>
    <text>Additional isoforms seem to exist.</text>
</comment>
<comment type="domain">
    <text>The SH3 domains mediate interaction with RALGPS1 and SHB.</text>
</comment>
<comment type="PTM">
    <text evidence="16">Phosphorylation of Tyr-209 in the C-terminal SH3 domain reduces its binding to SOS1.</text>
</comment>
<comment type="PTM">
    <text evidence="55 60">Ubiquitinated by RNF173, leading to proteasomal degradation and inhibition of the RAF/MEK/ERK pathway (PubMed:37328606). In the nucleus, polyubiquitinated by RBBP6 at Lys-109 at DNA damage sites (PubMed:34348893).</text>
</comment>
<comment type="similarity">
    <text evidence="82">Belongs to the GRB2/sem-5/DRK family.</text>
</comment>
<comment type="caution">
    <text evidence="83 84">Was shown to interact with ZDHHC19, leading to recruitment of STAT3. However, this study was later retracted.</text>
</comment>
<comment type="online information" name="Atlas of Genetics and Cytogenetics in Oncology and Haematology">
    <link uri="https://atlasgeneticsoncology.org/gene/386/GRB2"/>
</comment>
<reference key="1">
    <citation type="journal article" date="1992" name="Cell">
        <title>The SH2 and SH3 domain-containing protein GRB2 links receptor tyrosine kinases to ras signaling.</title>
        <authorList>
            <person name="Lowenstein E.J."/>
            <person name="Daly R.J."/>
            <person name="Batzer A.G."/>
            <person name="Li W."/>
            <person name="Margolis B."/>
            <person name="Lammers R."/>
            <person name="Ullrich A."/>
            <person name="Skolnik E.Y."/>
            <person name="Bar-Sagi D."/>
            <person name="Schlessinger J."/>
        </authorList>
    </citation>
    <scope>NUCLEOTIDE SEQUENCE [MRNA] (ISOFORM 1)</scope>
    <scope>FUNCTION</scope>
    <scope>MUTAGENESIS OF PRO-49 AND GLY-203</scope>
    <source>
        <tissue>Brain</tissue>
    </source>
</reference>
<reference key="2">
    <citation type="journal article" date="1992" name="Proc. Natl. Acad. Sci. U.S.A.">
        <title>Cloning of ASH, a ubiquitous protein composed of one Src homology region (SH) 2 and two SH3 domains, from human and rat cDNA libraries.</title>
        <authorList>
            <person name="Matuoka K."/>
            <person name="Yamakawa A."/>
            <person name="Shibata M."/>
            <person name="Takenawa T."/>
        </authorList>
    </citation>
    <scope>NUCLEOTIDE SEQUENCE [MRNA] (ISOFORM 1)</scope>
    <source>
        <tissue>Fetal lung</tissue>
    </source>
</reference>
<reference key="3">
    <citation type="journal article" date="1994" name="Science">
        <title>Cloning of a Grb2 isoform with apoptotic properties.</title>
        <authorList>
            <person name="Fath I."/>
            <person name="Schweighoffer F."/>
            <person name="Rey I."/>
            <person name="Multon M.-C."/>
            <person name="Boiziau J."/>
            <person name="Duchesne M."/>
            <person name="Tocque B."/>
        </authorList>
    </citation>
    <scope>NUCLEOTIDE SEQUENCE [MRNA] (ISOFORM 2)</scope>
    <scope>FUNCTION</scope>
    <source>
        <tissue>Placenta</tissue>
    </source>
</reference>
<reference key="4">
    <citation type="journal article" date="1999" name="Genomics">
        <title>The gene structure of the human growth factor bound protein GRB2.</title>
        <authorList>
            <person name="Bochmann H."/>
            <person name="Gehrisch S."/>
            <person name="Jaross W."/>
        </authorList>
    </citation>
    <scope>NUCLEOTIDE SEQUENCE [GENOMIC DNA]</scope>
    <source>
        <tissue>Epidermis</tissue>
    </source>
</reference>
<reference key="5">
    <citation type="submission" date="2002-04" db="EMBL/GenBank/DDBJ databases">
        <title>cDNA clones of human proteins involved in signal transduction sequenced by the Guthrie cDNA resource center (www.cdna.org).</title>
        <authorList>
            <person name="Puhl H.L. III"/>
            <person name="Ikeda S.R."/>
            <person name="Aronstam R.S."/>
        </authorList>
    </citation>
    <scope>NUCLEOTIDE SEQUENCE [LARGE SCALE MRNA] (ISOFORM 1)</scope>
    <source>
        <tissue>Brain</tissue>
    </source>
</reference>
<reference key="6">
    <citation type="submission" date="2004-06" db="EMBL/GenBank/DDBJ databases">
        <title>Cloning of human full open reading frames in Gateway(TM) system entry vector (pDONR201).</title>
        <authorList>
            <person name="Halleck A."/>
            <person name="Ebert L."/>
            <person name="Mkoundinya M."/>
            <person name="Schick M."/>
            <person name="Eisenstein S."/>
            <person name="Neubert P."/>
            <person name="Kstrang K."/>
            <person name="Schatten R."/>
            <person name="Shen B."/>
            <person name="Henze S."/>
            <person name="Mar W."/>
            <person name="Korn B."/>
            <person name="Zuo D."/>
            <person name="Hu Y."/>
            <person name="LaBaer J."/>
        </authorList>
    </citation>
    <scope>NUCLEOTIDE SEQUENCE [LARGE SCALE MRNA] (ISOFORM 1)</scope>
</reference>
<reference key="7">
    <citation type="journal article" date="2006" name="Nature">
        <title>DNA sequence of human chromosome 17 and analysis of rearrangement in the human lineage.</title>
        <authorList>
            <person name="Zody M.C."/>
            <person name="Garber M."/>
            <person name="Adams D.J."/>
            <person name="Sharpe T."/>
            <person name="Harrow J."/>
            <person name="Lupski J.R."/>
            <person name="Nicholson C."/>
            <person name="Searle S.M."/>
            <person name="Wilming L."/>
            <person name="Young S.K."/>
            <person name="Abouelleil A."/>
            <person name="Allen N.R."/>
            <person name="Bi W."/>
            <person name="Bloom T."/>
            <person name="Borowsky M.L."/>
            <person name="Bugalter B.E."/>
            <person name="Butler J."/>
            <person name="Chang J.L."/>
            <person name="Chen C.-K."/>
            <person name="Cook A."/>
            <person name="Corum B."/>
            <person name="Cuomo C.A."/>
            <person name="de Jong P.J."/>
            <person name="DeCaprio D."/>
            <person name="Dewar K."/>
            <person name="FitzGerald M."/>
            <person name="Gilbert J."/>
            <person name="Gibson R."/>
            <person name="Gnerre S."/>
            <person name="Goldstein S."/>
            <person name="Grafham D.V."/>
            <person name="Grocock R."/>
            <person name="Hafez N."/>
            <person name="Hagopian D.S."/>
            <person name="Hart E."/>
            <person name="Norman C.H."/>
            <person name="Humphray S."/>
            <person name="Jaffe D.B."/>
            <person name="Jones M."/>
            <person name="Kamal M."/>
            <person name="Khodiyar V.K."/>
            <person name="LaButti K."/>
            <person name="Laird G."/>
            <person name="Lehoczky J."/>
            <person name="Liu X."/>
            <person name="Lokyitsang T."/>
            <person name="Loveland J."/>
            <person name="Lui A."/>
            <person name="Macdonald P."/>
            <person name="Major J.E."/>
            <person name="Matthews L."/>
            <person name="Mauceli E."/>
            <person name="McCarroll S.A."/>
            <person name="Mihalev A.H."/>
            <person name="Mudge J."/>
            <person name="Nguyen C."/>
            <person name="Nicol R."/>
            <person name="O'Leary S.B."/>
            <person name="Osoegawa K."/>
            <person name="Schwartz D.C."/>
            <person name="Shaw-Smith C."/>
            <person name="Stankiewicz P."/>
            <person name="Steward C."/>
            <person name="Swarbreck D."/>
            <person name="Venkataraman V."/>
            <person name="Whittaker C.A."/>
            <person name="Yang X."/>
            <person name="Zimmer A.R."/>
            <person name="Bradley A."/>
            <person name="Hubbard T."/>
            <person name="Birren B.W."/>
            <person name="Rogers J."/>
            <person name="Lander E.S."/>
            <person name="Nusbaum C."/>
        </authorList>
    </citation>
    <scope>NUCLEOTIDE SEQUENCE [LARGE SCALE GENOMIC DNA]</scope>
</reference>
<reference key="8">
    <citation type="journal article" date="2004" name="Genome Res.">
        <title>The status, quality, and expansion of the NIH full-length cDNA project: the Mammalian Gene Collection (MGC).</title>
        <authorList>
            <consortium name="The MGC Project Team"/>
        </authorList>
    </citation>
    <scope>NUCLEOTIDE SEQUENCE [LARGE SCALE MRNA] (ISOFORM 1)</scope>
    <source>
        <tissue>Lymph</tissue>
    </source>
</reference>
<reference key="9">
    <citation type="submission" date="2008-12" db="UniProtKB">
        <authorList>
            <person name="Lubec G."/>
            <person name="Afjehi-Sadat L."/>
            <person name="Chen W.-Q."/>
            <person name="Sun Y."/>
        </authorList>
    </citation>
    <scope>PROTEIN SEQUENCE OF 11-20; 27-38; 77-109; 118-136; 143-149 AND 179-195</scope>
    <scope>IDENTIFICATION BY MASS SPECTROMETRY</scope>
    <source>
        <tissue>Brain</tissue>
        <tissue>Cajal-Retzius cell</tissue>
        <tissue>Fetal brain cortex</tissue>
    </source>
</reference>
<reference key="10">
    <citation type="journal article" date="1993" name="EMBO J.">
        <title>Mutation of Tyr697, a GRB2-binding site, and Tyr721, a PI 3-kinase binding site, abrogates signal transduction by the murine CSF-1 receptor expressed in Rat-2 fibroblasts.</title>
        <authorList>
            <person name="van der Geer P."/>
            <person name="Hunter T."/>
        </authorList>
    </citation>
    <scope>INTERACTION WITH CSF1R</scope>
</reference>
<reference key="11">
    <citation type="journal article" date="1993" name="J. Biol. Chem.">
        <title>Insulin stimulates association of insulin receptor substrate-1 with the protein abundant Src homology/growth factor receptor-bound protein 2.</title>
        <authorList>
            <person name="Tobe K."/>
            <person name="Matuoka K."/>
            <person name="Tamemoto H."/>
            <person name="Ueki K."/>
            <person name="Kaburagi Y."/>
            <person name="Asai S."/>
            <person name="Noguchi T."/>
            <person name="Matsuda M."/>
            <person name="Tanaka S."/>
            <person name="Hattori S."/>
            <person name="Fukui Y."/>
            <person name="Akanuma Y."/>
            <person name="Yazaki Y."/>
            <person name="Takenawa T."/>
            <person name="Kadowaki T."/>
        </authorList>
    </citation>
    <scope>INTERACTION WITH IRS1</scope>
</reference>
<reference key="12">
    <citation type="journal article" date="1993" name="EMBO J.">
        <title>The SH2/SH3 domain-containing protein GRB2 interacts with tyrosine-phosphorylated IRS1 and Shc: implications for insulin control of ras signalling.</title>
        <authorList>
            <person name="Skolnik E.Y."/>
            <person name="Lee C.-H."/>
            <person name="Batzer A.G."/>
            <person name="Vicentini L.M."/>
            <person name="Zhou M."/>
            <person name="Daly R.J."/>
            <person name="Myers M.J. Jr."/>
            <person name="Backer J.M."/>
            <person name="Ullrich A."/>
            <person name="White M.F."/>
            <person name="Schlessinger J."/>
        </authorList>
    </citation>
    <scope>INTERACTION WITH IRS1 AND SHC</scope>
</reference>
<reference key="13">
    <citation type="journal article" date="1993" name="Science">
        <title>Human Sos1: a guanine nucleotide exchange factor for Ras that binds to GRB2.</title>
        <authorList>
            <person name="Chardin P."/>
            <person name="Camonis J.H."/>
            <person name="Gale N.W."/>
            <person name="van Aelst L."/>
            <person name="Wigler M.H."/>
            <person name="Bar-Sagi D."/>
        </authorList>
    </citation>
    <scope>INTERACTION WITH SOS1</scope>
    <scope>MUTAGENESIS OF PRO-49; GLU-89; SER-90 AND GLY-203</scope>
    <source>
        <tissue>Brain</tissue>
    </source>
</reference>
<reference key="14">
    <citation type="journal article" date="1995" name="Proc. Natl. Acad. Sci. U.S.A.">
        <title>p56Lck and p59Fyn regulate CD28 binding to phosphatidylinositol 3-kinase, growth factor receptor-bound protein GRB-2, and T cell-specific protein-tyrosine kinase ITK: implications for T-cell costimulation.</title>
        <authorList>
            <person name="Raab M."/>
            <person name="Cai Y.C."/>
            <person name="Bunnell S.C."/>
            <person name="Heyeck S.D."/>
            <person name="Berg L.J."/>
            <person name="Rudd C.E."/>
        </authorList>
    </citation>
    <scope>INTERACTION WITH CD28</scope>
</reference>
<reference key="15">
    <citation type="journal article" date="1995" name="Cancer Res.">
        <title>Association of the DF3/MUC1 breast cancer antigen with Grb2 and the Sos/Ras exchange protein.</title>
        <authorList>
            <person name="Pandey P."/>
            <person name="Kharbanda S."/>
            <person name="Kufe D."/>
        </authorList>
    </citation>
    <scope>IDENTIFICATION IN A COMPLEX WITH MUC1 AND SOS1</scope>
    <scope>INTERACTION WITH MUC1 AND SOS1</scope>
</reference>
<reference key="16">
    <citation type="journal article" date="1996" name="Curr. Biol.">
        <title>Multiple forms of an inositol polyphosphate 5-phosphatase form signaling complexes with Shc and Grb2.</title>
        <authorList>
            <person name="Kavanaugh W.M."/>
            <person name="Pot D.A."/>
            <person name="Chin S.M."/>
            <person name="Deuter-Reinhard M."/>
            <person name="Jefferson A.B."/>
            <person name="Norris F.A."/>
            <person name="Masiarz F.R."/>
            <person name="Cousens L.S."/>
            <person name="Majerus P.W."/>
            <person name="Williams L.T."/>
        </authorList>
    </citation>
    <scope>INTERACTION WITH INPP5D</scope>
</reference>
<reference key="17">
    <citation type="journal article" date="1996" name="J. Biol. Chem.">
        <title>Ligand activation of ELK receptor tyrosine kinase promotes its association with Grb10 and Grb2 in vascular endothelial cells.</title>
        <authorList>
            <person name="Stein E."/>
            <person name="Cerretti D.P."/>
            <person name="Daniel T.O."/>
        </authorList>
    </citation>
    <scope>INTERACTION WITH EPHB1</scope>
</reference>
<reference key="18">
    <citation type="journal article" date="1997" name="Blood">
        <title>Purification and molecular cloning of SH2- and SH3-containing inositol polyphosphate-5-phosphatase, which is involved in the signaling pathway of granulocyte-macrophage colony-stimulating factor, erythropoietin, and Bcr-Abl.</title>
        <authorList>
            <person name="Odai H."/>
            <person name="Sasaki K."/>
            <person name="Iwamatsu A."/>
            <person name="Nakamoto T."/>
            <person name="Ueno H."/>
            <person name="Yamagata T."/>
            <person name="Mitani K."/>
            <person name="Yazaki Y."/>
            <person name="Hirai H."/>
        </authorList>
    </citation>
    <scope>INTERACTION WITH INPP5D</scope>
</reference>
<reference key="19">
    <citation type="journal article" date="1997" name="J. Biol. Chem.">
        <title>Focal adhesion kinase overexpression enhances ras-dependent integrin signaling to ERK2/mitogen-activated protein kinase through interactions with and activation of c-Src.</title>
        <authorList>
            <person name="Schlaepfer D.D."/>
            <person name="Hunter T."/>
        </authorList>
    </citation>
    <scope>INTERACTION WITH PTK2/FAK1</scope>
</reference>
<reference key="20">
    <citation type="journal article" date="1997" name="Nature">
        <title>A family of proteins that inhibit signalling through tyrosine kinase receptors.</title>
        <authorList>
            <person name="Kharitonenkov A."/>
            <person name="Chen Z."/>
            <person name="Sures I."/>
            <person name="Wang H."/>
            <person name="Schilling J."/>
            <person name="Ullrich A."/>
        </authorList>
    </citation>
    <scope>INTERACTION WITH PTPNS1</scope>
</reference>
<reference key="21">
    <citation type="journal article" date="1997" name="Oncogene">
        <title>Intracellular signaling of the Ufo/Axl receptor tyrosine kinase is mediated mainly by a multi-substrate docking-site.</title>
        <authorList>
            <person name="Braunger J."/>
            <person name="Schleithoff L."/>
            <person name="Schulz A.S."/>
            <person name="Kessler H."/>
            <person name="Lammers R."/>
            <person name="Ullrich A."/>
            <person name="Bartram C.R."/>
            <person name="Janssen J.W."/>
        </authorList>
    </citation>
    <scope>INTERACTION WITH AXL</scope>
</reference>
<reference key="22">
    <citation type="journal article" date="1997" name="Oncogene">
        <title>Cloning and characterization of APS, an adaptor molecule containing PH and SH2 domains that is tyrosine phosphorylated upon B-cell receptor stimulation.</title>
        <authorList>
            <person name="Yokouchi M."/>
            <person name="Suzuki R."/>
            <person name="Masuhara M."/>
            <person name="Komiya S."/>
            <person name="Inoue A."/>
            <person name="Yoshimura A."/>
        </authorList>
    </citation>
    <scope>INTERACTION WITH SH2B2</scope>
</reference>
<reference key="23">
    <citation type="journal article" date="1998" name="Cell">
        <title>LAT: the ZAP-70 tyrosine kinase substrate that links T cell receptor to cellular activation.</title>
        <authorList>
            <person name="Zhang W."/>
            <person name="Sloan-Lancaster J."/>
            <person name="Kitchen J."/>
            <person name="Trible R.P."/>
            <person name="Samelson L.E."/>
        </authorList>
    </citation>
    <scope>INTERACTION WITH LAT</scope>
    <scope>FUNCTION</scope>
</reference>
<reference key="24">
    <citation type="journal article" date="1998" name="J. Biol. Chem.">
        <title>Identification and characterization of a novel protein interacting with Ral-binding protein 1, a putative effector protein of Ral.</title>
        <authorList>
            <person name="Ikeda M."/>
            <person name="Ishida O."/>
            <person name="Hinoi T."/>
            <person name="Kishida S."/>
            <person name="Kikuchi A."/>
        </authorList>
    </citation>
    <scope>INTERACTION WITH REPS2</scope>
</reference>
<reference key="25">
    <citation type="journal article" date="1998" name="J. Biol. Chem.">
        <title>Characterization of insulin receptor substrate 4 in human embryonic kidney 293 cells.</title>
        <authorList>
            <person name="Fantin V.R."/>
            <person name="Sparling J.D."/>
            <person name="Slot J.W."/>
            <person name="Keller S.R."/>
            <person name="Lienhard G.E."/>
            <person name="Lavan B.E."/>
        </authorList>
    </citation>
    <scope>INTERACTION WITH IRS4</scope>
</reference>
<reference key="26">
    <citation type="journal article" date="1998" name="Oncogene">
        <title>Stimulation through the T cell receptor leads to interactions between SHB and several signaling proteins.</title>
        <authorList>
            <person name="Welsh M."/>
            <person name="Songyang Z."/>
            <person name="Frantz J.D."/>
            <person name="Trueb T."/>
            <person name="Reedquist K.A."/>
            <person name="Karlsson T."/>
            <person name="Miyazaki M."/>
            <person name="Cantley L.C."/>
            <person name="Band H."/>
            <person name="Shoelson S.E."/>
        </authorList>
    </citation>
    <scope>INTERACTION WITH SHB</scope>
    <scope>MUTAGENESIS OF PRO-49 AND PRO-206</scope>
</reference>
<reference key="27">
    <citation type="journal article" date="1999" name="J. Biol. Chem.">
        <title>Identification of Grb4/Nckbeta, a src homology 2 and 3 domain-containing adapter protein having similar binding and biological properties to Nck.</title>
        <authorList>
            <person name="Braverman L.E."/>
            <person name="Quilliam L.A."/>
        </authorList>
    </citation>
    <scope>INTERACTION WITH EGFR</scope>
</reference>
<reference key="28">
    <citation type="journal article" date="1999" name="Oncogene">
        <title>Tyrosine phosphorylation and complex formation of Cbl-b upon T cell receptor stimulation.</title>
        <authorList>
            <person name="Elly C."/>
            <person name="Witte S."/>
            <person name="Zhang Z."/>
            <person name="Rosnet O."/>
            <person name="Lipkowitz S."/>
            <person name="Altman A."/>
            <person name="Liu Y.-C."/>
        </authorList>
    </citation>
    <scope>INTERACTION WITH CBLB</scope>
</reference>
<reference key="29">
    <citation type="journal article" date="1999" name="Oncogene">
        <title>cbl-b inhibits epidermal growth factor receptor signaling.</title>
        <authorList>
            <person name="Ettenberg S.A."/>
            <person name="Keane M.M."/>
            <person name="Nau M.M."/>
            <person name="Frankel M."/>
            <person name="Wang L.-M."/>
            <person name="Pierce J.H."/>
            <person name="Lipkowitz S."/>
        </authorList>
    </citation>
    <scope>INTERACTION WITH CBL AND CBLB</scope>
</reference>
<reference key="30">
    <citation type="journal article" date="1999" name="Proc. Natl. Acad. Sci. U.S.A.">
        <title>NS5A, a nonstructural protein of hepatitis C virus, binds growth factor receptor-bound protein 2 adaptor protein in a Src homology 3 domain/ligand-dependent manner and perturbs mitogenic signaling.</title>
        <authorList>
            <person name="Tan S.-L."/>
            <person name="Nakao H."/>
            <person name="He Y."/>
            <person name="Vijaysri S."/>
            <person name="Neddermann P."/>
            <person name="Jacobs B.L."/>
            <person name="Mayer B.J."/>
            <person name="Katze M.G."/>
        </authorList>
    </citation>
    <scope>INTERACTION WITH HEPATITIS C VIRUS/HCV PROTEIN NS5A (MICROBIAL INFECTION)</scope>
</reference>
<reference key="31">
    <citation type="journal article" date="2000" name="J. Biol. Chem.">
        <title>Identification and characterization of a new family of guanine nucleotide exchange factors for the ras-related GTPase Ral.</title>
        <authorList>
            <person name="Rebhun J.F."/>
            <person name="Chen H."/>
            <person name="Quilliam L.A."/>
        </authorList>
    </citation>
    <scope>INTERACTION WITH RALGPS1</scope>
</reference>
<reference key="32">
    <citation type="journal article" date="2000" name="J. Biol. Chem.">
        <title>Ligand discrimination in signaling through an ErbB4 receptor homodimer.</title>
        <authorList>
            <person name="Sweeney C."/>
            <person name="Lai C."/>
            <person name="Riese D.J. II"/>
            <person name="Diamonti A.J."/>
            <person name="Cantley L.C."/>
            <person name="Carraway K.L. III"/>
        </authorList>
    </citation>
    <scope>INTERACTION WITH ERBB4</scope>
</reference>
<reference key="33">
    <citation type="journal article" date="2000" name="J. Biol. Chem.">
        <title>Interaction of linker for activation of T cells with multiple adapter proteins in platelets activated by the glycoprotein VI-selective ligand, convulxin.</title>
        <authorList>
            <person name="Asazuma N."/>
            <person name="Wilde J.I."/>
            <person name="Berlanga O."/>
            <person name="Leduc M."/>
            <person name="Leo A."/>
            <person name="Schweighoffer E."/>
            <person name="Tybulewicz V."/>
            <person name="Bon C."/>
            <person name="Liu S.K."/>
            <person name="McGlade C.J."/>
            <person name="Schraven B."/>
            <person name="Watson S.P."/>
        </authorList>
    </citation>
    <scope>INTERACTION WITH SKAP2</scope>
</reference>
<reference key="34">
    <citation type="journal article" date="2000" name="Oncogene">
        <title>Generation of novel cytoplasmic forms of protein tyrosine phosphatase epsilon by proteolytic processing and translational control.</title>
        <authorList>
            <person name="Gil-Henn H."/>
            <person name="Volohonsky G."/>
            <person name="Toledano-Katchalski H."/>
            <person name="Gandre S."/>
            <person name="Elson A."/>
        </authorList>
    </citation>
    <scope>INTERACTION WITH PTPRE</scope>
</reference>
<reference key="35">
    <citation type="journal article" date="2001" name="Eur. J. Immunol.">
        <title>Structural and functional dissection of the cytoplasmic domain of the transmembrane adaptor protein SIT (SHP2-interacting transmembrane adaptor protein).</title>
        <authorList>
            <person name="Pfrepper K.-I."/>
            <person name="Marie-Cardine A."/>
            <person name="Simeoni L."/>
            <person name="Kuramitsu Y."/>
            <person name="Leo A."/>
            <person name="Spicka J."/>
            <person name="Hilgert I."/>
            <person name="Scherer J."/>
            <person name="Schraven B."/>
        </authorList>
    </citation>
    <scope>INTERACTION WITH SIT1</scope>
</reference>
<reference key="36">
    <citation type="journal article" date="2001" name="J. Biol. Chem.">
        <title>The ORF3 protein of hepatitis E virus binds to Src homology 3 domains and activates MAPK.</title>
        <authorList>
            <person name="Korkaya H."/>
            <person name="Jameel S."/>
            <person name="Gupta D."/>
            <person name="Tyagi S."/>
            <person name="Kumar R."/>
            <person name="Zafrullah M."/>
            <person name="Mazumdar M."/>
            <person name="Lal S.K."/>
            <person name="Xiaofang L."/>
            <person name="Sehgal D."/>
            <person name="Das S.R."/>
            <person name="Sahal D."/>
        </authorList>
    </citation>
    <scope>INTERACTION WITH HEPATITIS E VIRUS/HEV ORF3 PROTEIN (MICROBIAL INFECTION)</scope>
</reference>
<reference key="37">
    <citation type="journal article" date="2001" name="Mol. Cell. Biol.">
        <title>Recruitment of the class II phosphoinositide 3-kinase C2beta to the epidermal growth factor receptor: role of Grb2.</title>
        <authorList>
            <person name="Wheeler M."/>
            <person name="Domin J."/>
        </authorList>
    </citation>
    <scope>IDENTIFICATION IN A COMPLEX WITH PIK3C2B AND EGFR</scope>
    <scope>INTERACTION WITH PIK3C2B</scope>
</reference>
<reference key="38">
    <citation type="journal article" date="2001" name="EMBO J.">
        <title>Tyrosine phosphorylation of Grb2 by Bcr/Abl and epidermal growth factor receptor: a novel regulatory mechanism for tyrosine kinase signaling.</title>
        <authorList>
            <person name="Li S."/>
            <person name="Couvillon A.D."/>
            <person name="Brasher B.B."/>
            <person name="Van Etten R.A."/>
        </authorList>
    </citation>
    <scope>PHOSPHORYLATION AT TYR-209</scope>
    <scope>FUNCTION</scope>
    <scope>INTERACTION WITH SOS1</scope>
</reference>
<reference key="39">
    <citation type="journal article" date="2002" name="J. Biol. Chem.">
        <title>Insulin receptor substrate 4 associates with the protein IRAS.</title>
        <authorList>
            <person name="Sano H."/>
            <person name="Liu S.C.H."/>
            <person name="Lane W.S."/>
            <person name="Piletz J.E."/>
            <person name="Lienhard G.E."/>
        </authorList>
    </citation>
    <scope>INTERACTION WITH NISCH</scope>
</reference>
<reference key="40">
    <citation type="journal article" date="2002" name="J. Biol. Chem.">
        <title>SKAP55 recruits to lipid rafts and positively mediates the MAPK pathway upon T cell receptor activation.</title>
        <authorList>
            <person name="Wu L."/>
            <person name="Yu Z."/>
            <person name="Shen S.-H."/>
        </authorList>
    </citation>
    <scope>INTERACTION WITH SKAP1</scope>
    <scope>FUNCTION</scope>
</reference>
<reference key="41">
    <citation type="journal article" date="2002" name="J. Biol. Chem.">
        <title>Molecular cloning of a novel gene encoding a membrane-associated adaptor protein (LAX) in lymphocyte signaling.</title>
        <authorList>
            <person name="Zhu M."/>
            <person name="Janssen E."/>
            <person name="Leung K."/>
            <person name="Zhang W."/>
        </authorList>
    </citation>
    <scope>INTERACTION WITH LAX1</scope>
</reference>
<reference key="42">
    <citation type="journal article" date="2002" name="J. Exp. Med.">
        <title>Non-T cell activation linker (NTAL): a transmembrane adaptor protein involved in immunoreceptor signaling.</title>
        <authorList>
            <person name="Brdicka T."/>
            <person name="Imrich M."/>
            <person name="Angelisova P."/>
            <person name="Brdickova N."/>
            <person name="Horvath O."/>
            <person name="Spicka J."/>
            <person name="Hilgert I."/>
            <person name="Luskova P."/>
            <person name="Draber P."/>
            <person name="Novak P."/>
            <person name="Engels N."/>
            <person name="Wienands J."/>
            <person name="Simeoni L."/>
            <person name="Oesterreicher J."/>
            <person name="Aguado E."/>
            <person name="Malissen M."/>
            <person name="Schraven B."/>
            <person name="Horejsi V."/>
        </authorList>
    </citation>
    <scope>INTERACTION WITH LAT2</scope>
</reference>
<reference key="43">
    <citation type="journal article" date="2003" name="J. Biol. Chem.">
        <title>Hepatocyte growth factor receptor tyrosine kinase met is a substrate of the receptor protein-tyrosine phosphatase DEP-1.</title>
        <authorList>
            <person name="Palka H.L."/>
            <person name="Park M."/>
            <person name="Tonks N.K."/>
        </authorList>
    </citation>
    <scope>INTERACTION WITH PTPRJ</scope>
</reference>
<reference key="44">
    <citation type="journal article" date="2003" name="J. Cell Biol.">
        <title>EphB1 recruits c-Src and p52Shc to activate MAPK/ERK and promote chemotaxis.</title>
        <authorList>
            <person name="Vindis C."/>
            <person name="Cerretti D.P."/>
            <person name="Daniel T.O."/>
            <person name="Huynh-Do U."/>
        </authorList>
    </citation>
    <scope>INTERACTION WITH EPHB1 AND SHC1</scope>
</reference>
<reference key="45">
    <citation type="journal article" date="2003" name="Nat. Immunol.">
        <title>LAB: a new membrane-associated adaptor molecule in B cell activation.</title>
        <authorList>
            <person name="Janssen E."/>
            <person name="Zhu M."/>
            <person name="Zhang W."/>
            <person name="Koonpaew S."/>
            <person name="Zhang W."/>
        </authorList>
    </citation>
    <scope>INTERACTION WITH LAT2</scope>
</reference>
<reference key="46">
    <citation type="journal article" date="2004" name="Cancer Cell">
        <title>TrkA alternative splicing: a regulated tumor-promoting switch in human neuroblastoma.</title>
        <authorList>
            <person name="Tacconelli A."/>
            <person name="Farina A.R."/>
            <person name="Cappabianca L."/>
            <person name="Desantis G."/>
            <person name="Tessitore A."/>
            <person name="Vetuschi A."/>
            <person name="Sferra R."/>
            <person name="Rucci N."/>
            <person name="Argenti B."/>
            <person name="Screpanti I."/>
            <person name="Gulino A."/>
            <person name="Mackay A.R."/>
        </authorList>
    </citation>
    <scope>INTERACTION WITH NTRK1</scope>
</reference>
<reference key="47">
    <citation type="journal article" date="2004" name="J. Biol. Chem.">
        <title>Activation of vascular endothelial growth factor receptor-3 and its downstream signaling promote cell survival under oxidative stress.</title>
        <authorList>
            <person name="Wang J.F."/>
            <person name="Zhang X."/>
            <person name="Groopman J.E."/>
        </authorList>
    </citation>
    <scope>INTERACTION WITH FLT4</scope>
</reference>
<reference key="48">
    <citation type="journal article" date="2004" name="Cell. Mol. Life Sci.">
        <title>Signal transduction via the stem cell factor receptor/c-Kit.</title>
        <authorList>
            <person name="Ronnstrand L."/>
        </authorList>
    </citation>
    <scope>REVIEW ON INTERACTION WITH KIT AND ROLE IN KIT SIGNALING</scope>
</reference>
<reference key="49">
    <citation type="journal article" date="2004" name="Exp. Cell Res.">
        <title>The c-Fes tyrosine kinase cooperates with the breakpoint cluster region protein (Bcr) to induce neurite extension in a Rac- and Cdc42-dependent manner.</title>
        <authorList>
            <person name="Laurent C.E."/>
            <person name="Smithgall T.E."/>
        </authorList>
    </citation>
    <scope>INTERACTION WITH BCR</scope>
</reference>
<reference key="50">
    <citation type="journal article" date="2005" name="Biochem. Biophys. Res. Commun.">
        <title>Signaling by Kit protein-tyrosine kinase--the stem cell factor receptor.</title>
        <authorList>
            <person name="Roskoski R. Jr."/>
        </authorList>
    </citation>
    <scope>REVIEW ON ROLE IN KIT SIGNALING</scope>
</reference>
<reference key="51">
    <citation type="journal article" date="2006" name="Cell">
        <title>Global, in vivo, and site-specific phosphorylation dynamics in signaling networks.</title>
        <authorList>
            <person name="Olsen J.V."/>
            <person name="Blagoev B."/>
            <person name="Gnad F."/>
            <person name="Macek B."/>
            <person name="Kumar C."/>
            <person name="Mortensen P."/>
            <person name="Mann M."/>
        </authorList>
    </citation>
    <scope>IDENTIFICATION BY MASS SPECTROMETRY [LARGE SCALE ANALYSIS]</scope>
    <source>
        <tissue>Cervix carcinoma</tissue>
    </source>
</reference>
<reference key="52">
    <citation type="journal article" date="2006" name="Nat. Immunol.">
        <title>NKG2D-mediated signaling requires a DAP10-bound Grb2-Vav1 intermediate and phosphatidylinositol-3-kinase in human natural killer cells.</title>
        <authorList>
            <person name="Upshaw J.L."/>
            <person name="Arneson L.N."/>
            <person name="Schoon R.A."/>
            <person name="Dick C.J."/>
            <person name="Billadeau D.D."/>
            <person name="Leibson P.J."/>
        </authorList>
    </citation>
    <scope>INTERACTION WITH HCST</scope>
</reference>
<reference key="53">
    <citation type="journal article" date="2008" name="J. Biol. Chem.">
        <title>Tesk1 interacts with Spry2 to abrogate its inhibition of ERK phosphorylation downstream of receptor tyrosine kinase signaling.</title>
        <authorList>
            <person name="Chandramouli S."/>
            <person name="Yu C.Y."/>
            <person name="Yusoff P."/>
            <person name="Lao D.H."/>
            <person name="Leong H.F."/>
            <person name="Mizuno K."/>
            <person name="Guy G.R."/>
        </authorList>
    </citation>
    <scope>INTERACTION WITH SPRY2</scope>
</reference>
<reference key="54">
    <citation type="journal article" date="2008" name="J. Leukoc. Biol.">
        <title>Identification of a new transmembrane adaptor protein that constitutively binds Grb2 in B cells.</title>
        <authorList>
            <person name="Liu Y."/>
            <person name="Zhang W."/>
        </authorList>
    </citation>
    <scope>INTERACTION WITH GAPT</scope>
</reference>
<reference key="55">
    <citation type="journal article" date="2008" name="Mol. Cancer Res.">
        <title>Distinct functions of natural ADAM-15 cytoplasmic domain variants in human mammary carcinoma.</title>
        <authorList>
            <person name="Zhong J.L."/>
            <person name="Poghosyan Z."/>
            <person name="Pennington C.J."/>
            <person name="Scott X."/>
            <person name="Handsley M.M."/>
            <person name="Warn A."/>
            <person name="Gavrilovic J."/>
            <person name="Honert K."/>
            <person name="Kruger A."/>
            <person name="Span P.N."/>
            <person name="Sweep F.C."/>
            <person name="Edwards D.R."/>
        </authorList>
    </citation>
    <scope>INTERACTION WITH ADAM15</scope>
</reference>
<reference key="56">
    <citation type="journal article" date="2008" name="Proc. Natl. Acad. Sci. U.S.A.">
        <title>A quantitative atlas of mitotic phosphorylation.</title>
        <authorList>
            <person name="Dephoure N."/>
            <person name="Zhou C."/>
            <person name="Villen J."/>
            <person name="Beausoleil S.A."/>
            <person name="Bakalarski C.E."/>
            <person name="Elledge S.J."/>
            <person name="Gygi S.P."/>
        </authorList>
    </citation>
    <scope>PHOSPHORYLATION [LARGE SCALE ANALYSIS] AT THR-211</scope>
    <scope>IDENTIFICATION BY MASS SPECTROMETRY [LARGE SCALE ANALYSIS]</scope>
    <source>
        <tissue>Cervix carcinoma</tissue>
    </source>
</reference>
<reference key="57">
    <citation type="journal article" date="2008" name="Sci. Signal.">
        <title>Type I IL-4Rs selectively activate IRS-2 to induce target gene expression in macrophages.</title>
        <authorList>
            <person name="Heller N.M."/>
            <person name="Qi X."/>
            <person name="Junttila I.S."/>
            <person name="Shirey K.A."/>
            <person name="Vogel S.N."/>
            <person name="Paul W.E."/>
            <person name="Keegan A.D."/>
        </authorList>
    </citation>
    <scope>INTERACTION WITH IRS2</scope>
</reference>
<reference key="58">
    <citation type="journal article" date="2009" name="Curr. Biol.">
        <title>An unbiased screen identifies DEP-1 tumor suppressor as a phosphatase controlling EGFR endocytosis.</title>
        <authorList>
            <person name="Tarcic G."/>
            <person name="Boguslavsky S.K."/>
            <person name="Wakim J."/>
            <person name="Kiuchi T."/>
            <person name="Liu A."/>
            <person name="Reinitz F."/>
            <person name="Nathanson D."/>
            <person name="Takahashi T."/>
            <person name="Mischel P.S."/>
            <person name="Ng T."/>
            <person name="Yarden Y."/>
        </authorList>
    </citation>
    <scope>INTERACTION WITH EGFR</scope>
</reference>
<reference key="59">
    <citation type="journal article" date="2009" name="J. Biol. Chem.">
        <title>Cytoplasmic ACK1 interaction with multiple receptor tyrosine kinases is mediated by Grb2: an analysis of ACK1 effects on Axl signaling.</title>
        <authorList>
            <person name="Pao-Chun L."/>
            <person name="Chan P.M."/>
            <person name="Chan W."/>
            <person name="Manser E."/>
        </authorList>
    </citation>
    <scope>INTERACTION WITH AXL; LTK; PDGFRL AND TNK2</scope>
    <scope>FUNCTION</scope>
</reference>
<reference key="60">
    <citation type="journal article" date="2009" name="Cell">
        <title>KIF26A is an unconventional kinesin and regulates GDNF-Ret signaling in enteric neuronal development.</title>
        <authorList>
            <person name="Zhou R."/>
            <person name="Niwa S."/>
            <person name="Homma N."/>
            <person name="Takei Y."/>
            <person name="Hirokawa N."/>
        </authorList>
    </citation>
    <scope>INTERACTION WITH KIF26A</scope>
</reference>
<reference key="61">
    <citation type="journal article" date="2009" name="J. Biol. Chem.">
        <title>GAREM, a novel adaptor protein for growth factor receptor-bound protein 2, contributes to cellular transformation through the activation of extracellular signal-regulated kinase signaling.</title>
        <authorList>
            <person name="Tashiro K."/>
            <person name="Tsunematsu T."/>
            <person name="Okubo H."/>
            <person name="Ohta T."/>
            <person name="Sano E."/>
            <person name="Yamauchi E."/>
            <person name="Taniguchi H."/>
            <person name="Konishi H."/>
        </authorList>
    </citation>
    <scope>INTERACTION WITH GAREM1</scope>
</reference>
<reference key="62">
    <citation type="journal article" date="2009" name="Sci. Signal.">
        <title>Quantitative phosphoproteomic analysis of T cell receptor signaling reveals system-wide modulation of protein-protein interactions.</title>
        <authorList>
            <person name="Mayya V."/>
            <person name="Lundgren D.H."/>
            <person name="Hwang S.-I."/>
            <person name="Rezaul K."/>
            <person name="Wu L."/>
            <person name="Eng J.K."/>
            <person name="Rodionov V."/>
            <person name="Han D.K."/>
        </authorList>
    </citation>
    <scope>IDENTIFICATION BY MASS SPECTROMETRY [LARGE SCALE ANALYSIS]</scope>
    <source>
        <tissue>Leukemic T-cell</tissue>
    </source>
</reference>
<reference key="63">
    <citation type="journal article" date="2009" name="Science">
        <title>Lysine acetylation targets protein complexes and co-regulates major cellular functions.</title>
        <authorList>
            <person name="Choudhary C."/>
            <person name="Kumar C."/>
            <person name="Gnad F."/>
            <person name="Nielsen M.L."/>
            <person name="Rehman M."/>
            <person name="Walther T.C."/>
            <person name="Olsen J.V."/>
            <person name="Mann M."/>
        </authorList>
    </citation>
    <scope>ACETYLATION [LARGE SCALE ANALYSIS] AT LYS-6; LYS-50 AND LYS-109</scope>
    <scope>IDENTIFICATION BY MASS SPECTROMETRY [LARGE SCALE ANALYSIS]</scope>
</reference>
<reference key="64">
    <citation type="journal article" date="2010" name="Cell. Mol. Life Sci.">
        <title>Recruitment of Pyk2 to SHPS-1 signaling complex is required for IGF-I-dependent mitogenic signaling in vascular smooth muscle cells.</title>
        <authorList>
            <person name="Shen X."/>
            <person name="Xi G."/>
            <person name="Radhakrishnan Y."/>
            <person name="Clemmons D.R."/>
        </authorList>
    </citation>
    <scope>INTERACTION WITH PTK2B/PYK2</scope>
</reference>
<reference key="65">
    <citation type="journal article" date="2010" name="PLoS ONE">
        <title>Histidine domain-protein tyrosine phosphatase interacts with Grb2 and GrpL.</title>
        <authorList>
            <person name="Tanase C.A."/>
        </authorList>
    </citation>
    <scope>INTERACTION WITH PTPN23</scope>
    <scope>SUBCELLULAR LOCATION</scope>
</reference>
<reference key="66">
    <citation type="journal article" date="2011" name="BMC Syst. Biol.">
        <title>Initial characterization of the human central proteome.</title>
        <authorList>
            <person name="Burkard T.R."/>
            <person name="Planyavsky M."/>
            <person name="Kaupe I."/>
            <person name="Breitwieser F.P."/>
            <person name="Buerckstuemmer T."/>
            <person name="Bennett K.L."/>
            <person name="Superti-Furga G."/>
            <person name="Colinge J."/>
        </authorList>
    </citation>
    <scope>IDENTIFICATION BY MASS SPECTROMETRY [LARGE SCALE ANALYSIS]</scope>
</reference>
<reference key="67">
    <citation type="journal article" date="2011" name="Immunol. Lett.">
        <title>FCRL6 receptor: expression and associated proteins.</title>
        <authorList>
            <person name="Kulemzin S.V."/>
            <person name="Zamoshnikova A.Y."/>
            <person name="Yurchenko M.Y."/>
            <person name="Vitak N.Y."/>
            <person name="Najakshin A.M."/>
            <person name="Fayngerts S.A."/>
            <person name="Chikaev N.A."/>
            <person name="Reshetnikova E.S."/>
            <person name="Kashirina N.M."/>
            <person name="Peclo M.M."/>
            <person name="Rutkevich P.N."/>
            <person name="Shevelev A.Y."/>
            <person name="Yanushevskaya E.V."/>
            <person name="Baranov K.O."/>
            <person name="Mamonkin M."/>
            <person name="Vlasik T.N."/>
            <person name="Sidorenko S.P."/>
            <person name="Taranin A.V."/>
            <person name="Mechetina L.V."/>
        </authorList>
    </citation>
    <scope>INTERACTION WITH FCRL6</scope>
</reference>
<reference key="68">
    <citation type="journal article" date="2011" name="J. Biol. Chem.">
        <title>ACAP4 protein cooperates with Grb2 protein to orchestrate epidermal growth factor-stimulated integrin beta1 recycling in cell migration.</title>
        <authorList>
            <person name="Yu X."/>
            <person name="Wang F."/>
            <person name="Liu H."/>
            <person name="Adams G."/>
            <person name="Aikhionbare F."/>
            <person name="Liu D."/>
            <person name="Cao X."/>
            <person name="Fan L."/>
            <person name="Hu G."/>
            <person name="Chen Y."/>
            <person name="Frost A."/>
            <person name="Partridge E."/>
            <person name="Ding X."/>
            <person name="Yao X."/>
        </authorList>
    </citation>
    <scope>INTERACTION WITH ASAP3</scope>
</reference>
<reference key="69">
    <citation type="journal article" date="2011" name="Mol. Cell. Biol.">
        <title>SCIMP, a transmembrane adapter protein involved in major histocompatibility complex class II signaling.</title>
        <authorList>
            <person name="Draber P."/>
            <person name="Vonkova I."/>
            <person name="Stepanek O."/>
            <person name="Hrdinka M."/>
            <person name="Kucova M."/>
            <person name="Skopcova T."/>
            <person name="Otahal P."/>
            <person name="Angelisova P."/>
            <person name="Horejsi V."/>
            <person name="Yeung M."/>
            <person name="Weiss A."/>
            <person name="Brdicka T."/>
        </authorList>
    </citation>
    <scope>INTERACTION WITH SCIMP</scope>
</reference>
<reference key="70">
    <citation type="journal article" date="2012" name="Nat. Immunol.">
        <title>Tespa1 is involved in late thymocyte development through the regulation of TCR-mediated signaling.</title>
        <authorList>
            <person name="Wang D."/>
            <person name="Zheng M."/>
            <person name="Lei L."/>
            <person name="Ji J."/>
            <person name="Yao Y."/>
            <person name="Qiu Y."/>
            <person name="Ma L."/>
            <person name="Lou J."/>
            <person name="Ouyang C."/>
            <person name="Zhang X."/>
            <person name="He Y."/>
            <person name="Chi J."/>
            <person name="Wang L."/>
            <person name="Kuang Y."/>
            <person name="Wang J."/>
            <person name="Cao X."/>
            <person name="Lu L."/>
        </authorList>
    </citation>
    <scope>INTERACTION WITH TESPA1</scope>
    <source>
        <tissue>Thymocyte</tissue>
    </source>
</reference>
<reference key="71">
    <citation type="journal article" date="2013" name="Cell Death Differ.">
        <title>Recruitment of Grb2 and SHIP1 by the ITT-like motif of TIGIT suppresses granule polarization and cytotoxicity of NK cells.</title>
        <authorList>
            <person name="Liu S."/>
            <person name="Zhang H."/>
            <person name="Li M."/>
            <person name="Hu D."/>
            <person name="Li C."/>
            <person name="Ge B."/>
            <person name="Jin B."/>
            <person name="Fan Z."/>
        </authorList>
    </citation>
    <scope>INTERACTION WITH TIGIT</scope>
</reference>
<reference key="72">
    <citation type="journal article" date="2019" name="Nature">
        <title>Fatty acids and cancer-amplified ZDHHC19 promote STAT3 activation through S-palmitoylation.</title>
        <authorList>
            <person name="Niu J."/>
            <person name="Sun Y."/>
            <person name="Chen B."/>
            <person name="Zheng B."/>
            <person name="Jarugumilli G.K."/>
            <person name="Walker S.R."/>
            <person name="Hata A.N."/>
            <person name="Mino-Kenudson M."/>
            <person name="Frank D.A."/>
            <person name="Wu X."/>
        </authorList>
    </citation>
    <scope>RETRACTED PAPER</scope>
</reference>
<reference key="73">
    <citation type="journal article" date="2020" name="Nature">
        <authorList>
            <person name="Niu J."/>
            <person name="Sun Y."/>
            <person name="Chen B."/>
            <person name="Zheng B."/>
            <person name="Jarugumilli G.K."/>
            <person name="Walker S.R."/>
            <person name="Hata A.N."/>
            <person name="Mino-Kenudson M."/>
            <person name="Frank D.A."/>
            <person name="Wu X."/>
        </authorList>
    </citation>
    <scope>RETRACTION NOTICE OF PUBMED:31462771</scope>
</reference>
<reference key="74">
    <citation type="journal article" date="2012" name="Proc. Natl. Acad. Sci. U.S.A.">
        <title>N-terminal acetylome analyses and functional insights of the N-terminal acetyltransferase NatB.</title>
        <authorList>
            <person name="Van Damme P."/>
            <person name="Lasa M."/>
            <person name="Polevoda B."/>
            <person name="Gazquez C."/>
            <person name="Elosegui-Artola A."/>
            <person name="Kim D.S."/>
            <person name="De Juan-Pardo E."/>
            <person name="Demeyer K."/>
            <person name="Hole K."/>
            <person name="Larrea E."/>
            <person name="Timmerman E."/>
            <person name="Prieto J."/>
            <person name="Arnesen T."/>
            <person name="Sherman F."/>
            <person name="Gevaert K."/>
            <person name="Aldabe R."/>
        </authorList>
    </citation>
    <scope>ACETYLATION [LARGE SCALE ANALYSIS] AT MET-1</scope>
    <scope>IDENTIFICATION BY MASS SPECTROMETRY [LARGE SCALE ANALYSIS]</scope>
</reference>
<reference key="75">
    <citation type="journal article" date="2013" name="J. Proteome Res.">
        <title>Toward a comprehensive characterization of a human cancer cell phosphoproteome.</title>
        <authorList>
            <person name="Zhou H."/>
            <person name="Di Palma S."/>
            <person name="Preisinger C."/>
            <person name="Peng M."/>
            <person name="Polat A.N."/>
            <person name="Heck A.J."/>
            <person name="Mohammed S."/>
        </authorList>
    </citation>
    <scope>IDENTIFICATION BY MASS SPECTROMETRY [LARGE SCALE ANALYSIS]</scope>
    <source>
        <tissue>Erythroleukemia</tissue>
    </source>
</reference>
<reference key="76">
    <citation type="journal article" date="2013" name="J. Virol.">
        <title>Role of herpes simplex virus VP11/12 tyrosine-based motifs in binding and activation of the Src family kinase Lck and recruitment of p85, Grb2, and Shc.</title>
        <authorList>
            <person name="Strunk U."/>
            <person name="Saffran H.A."/>
            <person name="Wu F.W."/>
            <person name="Smiley J.R."/>
        </authorList>
    </citation>
    <scope>INTERACTION WITH HERPES SIMPLEX VIRUS 1/HHV1 PROTEIN UL46 (MICROBIAL INFECTION)</scope>
</reference>
<reference key="77">
    <citation type="journal article" date="2014" name="J. Exp. Med.">
        <title>RHEX, a novel regulator of human erythroid progenitor cell expansion and erythroblast development.</title>
        <authorList>
            <person name="Verma R."/>
            <person name="Su S."/>
            <person name="McCrann D.J."/>
            <person name="Green J.M."/>
            <person name="Leu K."/>
            <person name="Young P.R."/>
            <person name="Schatz P.J."/>
            <person name="Silva J.C."/>
            <person name="Stokes M.P."/>
            <person name="Wojchowski D.M."/>
        </authorList>
    </citation>
    <scope>INTERACTION WITH RHEX</scope>
</reference>
<reference key="78">
    <citation type="journal article" date="2014" name="Nat. Commun.">
        <title>The immunoglobulin tail tyrosine motif upgrades memory-type BCRs by incorporating a Grb2-Btk signalling module.</title>
        <authorList>
            <person name="Engels N."/>
            <person name="Koenig L.M."/>
            <person name="Schulze W."/>
            <person name="Radtke D."/>
            <person name="Vanshylla K."/>
            <person name="Lutz J."/>
            <person name="Winkler T.H."/>
            <person name="Nitschke L."/>
            <person name="Wienands J."/>
        </authorList>
    </citation>
    <scope>FUNCTION</scope>
</reference>
<reference key="79">
    <citation type="journal article" date="2015" name="Proteomics">
        <title>N-terminome analysis of the human mitochondrial proteome.</title>
        <authorList>
            <person name="Vaca Jacome A.S."/>
            <person name="Rabilloud T."/>
            <person name="Schaeffer-Reiss C."/>
            <person name="Rompais M."/>
            <person name="Ayoub D."/>
            <person name="Lane L."/>
            <person name="Bairoch A."/>
            <person name="Van Dorsselaer A."/>
            <person name="Carapito C."/>
        </authorList>
    </citation>
    <scope>IDENTIFICATION BY MASS SPECTROMETRY [LARGE SCALE ANALYSIS]</scope>
</reference>
<reference key="80">
    <citation type="journal article" date="2015" name="Front. Immunol.">
        <title>GRB2 Nucleates T Cell Receptor-Mediated LAT Clusters That Control PLC-gamma1 Activation and Cytokine Production.</title>
        <authorList>
            <person name="Bilal M.Y."/>
            <person name="Houtman J.C."/>
        </authorList>
    </citation>
    <scope>FUNCTION</scope>
    <scope>INTERACTION WITH LAT AND SOS1</scope>
</reference>
<reference key="81">
    <citation type="journal article" date="2016" name="Oncogene">
        <title>PRR14 is a novel activator of the PI3K pathway promoting lung carcinogenesis.</title>
        <authorList>
            <person name="Yang M."/>
            <person name="Lewinska M."/>
            <person name="Fan X."/>
            <person name="Zhu J."/>
            <person name="Yuan Z.M."/>
        </authorList>
    </citation>
    <scope>INTERACTION WITH PRR14</scope>
</reference>
<reference key="82">
    <citation type="journal article" date="2017" name="EMBO Rep.">
        <title>Intersectin-s interaction with DENND2B facilitates recycling of epidermal growth factor receptor.</title>
        <authorList>
            <person name="Ioannou M.S."/>
            <person name="Kulasekaran G."/>
            <person name="Fotouhi M."/>
            <person name="Morein J.J."/>
            <person name="Han C."/>
            <person name="Tse S."/>
            <person name="Nossova N."/>
            <person name="Han T."/>
            <person name="Mannard E."/>
            <person name="McPherson P.S."/>
        </authorList>
    </citation>
    <scope>INTERACTION WITH DENND2B</scope>
</reference>
<reference key="83">
    <citation type="journal article" date="2018" name="Sci. Rep.">
        <title>Grb2 and GRAP connect the B cell antigen receptor to Erk MAP kinase activation in human B cells.</title>
        <authorList>
            <person name="Vanshylla K."/>
            <person name="Bartsch C."/>
            <person name="Hitzing C."/>
            <person name="Kruempelmann L."/>
            <person name="Wienands J."/>
            <person name="Engels N."/>
        </authorList>
    </citation>
    <scope>FUNCTION</scope>
    <scope>INTERACTION WITH CD19</scope>
    <scope>MUTAGENESIS OF ARG-86</scope>
</reference>
<reference key="84">
    <citation type="journal article" date="2019" name="J. Virol.">
        <title>The 11-Kilodalton Nonstructural Protein of Human Parvovirus B19 Facilitates Viral DNA Replication by Interacting with Grb2 through Its Proline-Rich Motifs.</title>
        <authorList>
            <person name="Xu P."/>
            <person name="Chen A.Y."/>
            <person name="Ganaie S.S."/>
            <person name="Cheng F."/>
            <person name="Shen W."/>
            <person name="Wang X."/>
            <person name="Kleiboeker S."/>
            <person name="Li Y."/>
            <person name="Qiu J."/>
        </authorList>
    </citation>
    <scope>SUBCELLULAR LOCATION</scope>
    <scope>INTERACTION WITH B19 PARVOVIRUS PROTEIN 11K (MICROBIAL INFECTION)</scope>
</reference>
<reference key="85">
    <citation type="journal article" date="2021" name="Sci. Adv.">
        <title>GRB2 enforces homology-directed repair initiation by MRE11.</title>
        <authorList>
            <person name="Ye Z."/>
            <person name="Xu S."/>
            <person name="Shi Y."/>
            <person name="Bacolla A."/>
            <person name="Syed A."/>
            <person name="Moiani D."/>
            <person name="Tsai C.L."/>
            <person name="Shen Q."/>
            <person name="Peng G."/>
            <person name="Leonard P.G."/>
            <person name="Jones D.E."/>
            <person name="Wang B."/>
            <person name="Tainer J.A."/>
            <person name="Ahmed Z."/>
        </authorList>
    </citation>
    <scope>FUNCTION</scope>
    <scope>INTERACTION WITH MRE11</scope>
    <scope>MUTAGENESIS OF LYS-109</scope>
    <scope>UBIQUITINATION AT LYS-109</scope>
    <scope>SUBCELLULAR LOCATION</scope>
</reference>
<reference key="86">
    <citation type="journal article" date="2022" name="J. Cell Biol.">
        <title>PEAK1 Y635 phosphorylation regulates cell migration through association with Tensin3 and integrins.</title>
        <authorList>
            <person name="Zuidema A."/>
            <person name="Atherton P."/>
            <person name="Kreft M."/>
            <person name="Hoekman L."/>
            <person name="Bleijerveld O.B."/>
            <person name="Nagaraj N."/>
            <person name="Chen N."/>
            <person name="Faessler R."/>
            <person name="Sonnenberg A."/>
        </authorList>
    </citation>
    <scope>INTERACTION WITH PEAK1</scope>
</reference>
<reference key="87">
    <citation type="journal article" date="2022" name="Commun. Biol.">
        <title>The Grb2 splice variant, Grb3-3, is a negative regulator of RAS activation.</title>
        <authorList>
            <person name="Seiler C."/>
            <person name="Stainthorp A.K."/>
            <person name="Ketchen S."/>
            <person name="Jones C.M."/>
            <person name="Marks K."/>
            <person name="Quirke P."/>
            <person name="Ladbury J.E."/>
        </authorList>
    </citation>
    <scope>FUNCTION (ISOFORM 2)</scope>
    <scope>INTERACTION WITH SOS1 (ISOFORM 2)</scope>
</reference>
<reference key="88">
    <citation type="journal article" date="2022" name="Cell. Death. Discov.">
        <title>Grb2 interacts with necrosome components and is involved in rasfonin-induced necroptosis.</title>
        <authorList>
            <person name="Hou B."/>
            <person name="Huang H."/>
            <person name="Li Y."/>
            <person name="Liang J."/>
            <person name="Xi Z."/>
            <person name="Jiang X."/>
            <person name="Liu L."/>
            <person name="Li E."/>
        </authorList>
    </citation>
    <scope>FUNCTION</scope>
    <scope>INTERACTION WITH EGFR; RIPK1 AND SQSTM1</scope>
</reference>
<reference key="89">
    <citation type="journal article" date="2023" name="Sci. Rep.">
        <title>GRB2 dimerization mediated by SH2 domain-swapping is critical for T cell signaling and cytokine production.</title>
        <authorList>
            <person name="Sandouk A."/>
            <person name="Xu Z."/>
            <person name="Baruah S."/>
            <person name="Tremblay M."/>
            <person name="Hopkins J.B."/>
            <person name="Chakravarthy S."/>
            <person name="Gakhar L."/>
            <person name="Schnicker N.J."/>
            <person name="Houtman J.C.D."/>
        </authorList>
    </citation>
    <scope>FUNCTION</scope>
    <scope>SUBUNIT</scope>
    <scope>MUTAGENESIS OF VAL-123</scope>
</reference>
<reference key="90">
    <citation type="journal article" date="2023" name="Sci. Rep.">
        <title>Regulation of microRNA expression by the adaptor protein GRB2.</title>
        <authorList>
            <person name="Stainthorp A.K."/>
            <person name="Lin C.C."/>
            <person name="Wang D."/>
            <person name="Medhi R."/>
            <person name="Ahmed Z."/>
            <person name="Suen K.M."/>
            <person name="Miska E.A."/>
            <person name="Whitehouse A."/>
            <person name="Ladbury J.E."/>
        </authorList>
    </citation>
    <scope>FUNCTION</scope>
    <scope>INTERACTION WITH AGO2</scope>
    <scope>MUTAGENESIS OF TRP-36 AND TRP-193</scope>
    <scope>SUBCELLULAR LOCATION</scope>
</reference>
<reference key="91">
    <citation type="journal article" date="2023" name="Cell Commun. Signal.">
        <title>RNF173 suppresses RAF/MEK/ERK signaling to regulate invasion and metastasis via GRB2 ubiquitination in Hepatocellular Carcinoma.</title>
        <authorList>
            <person name="Zhou J."/>
            <person name="Tu D."/>
            <person name="Peng R."/>
            <person name="Tang Y."/>
            <person name="Deng Q."/>
            <person name="Su B."/>
            <person name="Wang S."/>
            <person name="Tang H."/>
            <person name="Jin S."/>
            <person name="Jiang G."/>
            <person name="Wang Q."/>
            <person name="Jin X."/>
            <person name="Zhang C."/>
            <person name="Cao J."/>
            <person name="Bai D."/>
        </authorList>
    </citation>
    <scope>UBIQUITINATION</scope>
    <scope>SUBCELLULAR LOCATION</scope>
    <scope>FUNCTION</scope>
</reference>
<reference key="92">
    <citation type="journal article" date="2024" name="Nat. Commun.">
        <title>GRB2 stabilizes RAD51 at reversed replication forks suppressing genomic instability and innate immunity against cancer.</title>
        <authorList>
            <person name="Ye Z."/>
            <person name="Xu S."/>
            <person name="Shi Y."/>
            <person name="Cheng X."/>
            <person name="Zhang Y."/>
            <person name="Roy S."/>
            <person name="Namjoshi S."/>
            <person name="Longo M.A."/>
            <person name="Link T.M."/>
            <person name="Schlacher K."/>
            <person name="Peng G."/>
            <person name="Yu D."/>
            <person name="Wang B."/>
            <person name="Tainer J.A."/>
            <person name="Ahmed Z."/>
        </authorList>
    </citation>
    <scope>FUNCTION</scope>
    <scope>INTERACTION WITH PCNA AND RAD51</scope>
</reference>
<reference key="93">
    <citation type="journal article" date="2024" name="Cell Death Dis.">
        <title>GRB2 is a BECN1 interacting protein that regulates autophagy.</title>
        <authorList>
            <person name="Montero-Vergara J."/>
            <person name="Plachetta K."/>
            <person name="Kinch L."/>
            <person name="Bernhardt S."/>
            <person name="Kashyap K."/>
            <person name="Levine B."/>
            <person name="Thukral L."/>
            <person name="Vetter M."/>
            <person name="Thomssen C."/>
            <person name="Wiemann S."/>
            <person name="Pena-Llopis S."/>
            <person name="Jendrossek V."/>
            <person name="Vega-Rubin-de-Celis S."/>
        </authorList>
    </citation>
    <scope>FUNCTION</scope>
    <scope>INTERACTION WITH BECN1</scope>
    <scope>MUTAGENESIS OF TYR-52; ARG-86 AND SER-88</scope>
</reference>
<reference key="94">
    <citation type="journal article" date="1996" name="Biochemistry">
        <title>Nuclear magnetic resonance solution structure of the growth factor receptor-bound protein 2 Src homology 2 domain.</title>
        <authorList>
            <person name="Thornton K.H."/>
            <person name="Mueller W.T."/>
            <person name="McConnell P."/>
            <person name="Zhu G."/>
            <person name="Saltiel A.R."/>
            <person name="Thanabal V."/>
        </authorList>
    </citation>
    <scope>STRUCTURE BY NMR OF 58-164</scope>
</reference>
<reference key="95">
    <citation type="journal article" date="1998" name="J. Biomol. NMR">
        <title>The three-dimensional solution structure of the Src homology domain-2 of the growth factor receptor-bound protein-2.</title>
        <authorList>
            <person name="Senior M.M."/>
            <person name="Frederick A.F."/>
            <person name="Black S."/>
            <person name="Murgolo N.J."/>
            <person name="Perkins L.M."/>
            <person name="Wilson O."/>
            <person name="Snow M.E."/>
            <person name="Wang Y.-S."/>
        </authorList>
    </citation>
    <scope>STRUCTURE BY NMR OF 52-163</scope>
</reference>
<reference key="96">
    <citation type="journal article" date="1994" name="Structure">
        <title>Solution structure and ligand-binding site of the carboxy-terminal SH3 domain of GRB2.</title>
        <authorList>
            <person name="Kohda D."/>
            <person name="Terasawa H."/>
            <person name="Ichikawa S."/>
            <person name="Ogura K."/>
            <person name="Hatanaka H."/>
            <person name="Mandiyan V."/>
            <person name="Ullrich A."/>
            <person name="Schlessinger J."/>
            <person name="Inagaki F."/>
        </authorList>
    </citation>
    <scope>STRUCTURE BY NMR OF 157-215</scope>
</reference>
<reference key="97">
    <citation type="journal article" date="1995" name="Science">
        <title>Crystal structure of the mammalian Grb2 adaptor.</title>
        <authorList>
            <person name="Maignan S."/>
            <person name="Guilloteau J.-P."/>
            <person name="Fromage N."/>
            <person name="Arnoux B."/>
            <person name="Becquart J."/>
            <person name="Ducruix A."/>
        </authorList>
    </citation>
    <scope>X-RAY CRYSTALLOGRAPHY (3.1 ANGSTROMS)</scope>
</reference>
<reference key="98">
    <citation type="journal article" date="1998" name="J. Mol. Biol.">
        <title>Structural basis for the high affinity of amino-aromatic SH2 phosphopeptide ligands.</title>
        <authorList>
            <person name="Rahuel J."/>
            <person name="Garcia-Echeverria C."/>
            <person name="Furet P."/>
            <person name="Strauss A."/>
            <person name="Caravatti G."/>
            <person name="Fretz H."/>
            <person name="Schoepfer J."/>
            <person name="Gay B."/>
        </authorList>
    </citation>
    <scope>X-RAY CRYSTALLOGRAPHY (1.8 ANGSTROMS) OF 56-153</scope>
</reference>
<reference key="99">
    <citation type="journal article" date="1999" name="J. Med. Chem.">
        <title>Structural and conformational requirements for high-affinity binding to the SH2 domain of Grb2(1).</title>
        <authorList>
            <person name="Ettmayer P."/>
            <person name="France D."/>
            <person name="Gounarides J."/>
            <person name="Jarosinski M."/>
            <person name="Martin M.-S."/>
            <person name="Rondeau J.-M."/>
            <person name="Sabio M."/>
            <person name="Topiol S."/>
            <person name="Weidmann B."/>
            <person name="Zurini M."/>
            <person name="Bair K.W."/>
        </authorList>
    </citation>
    <scope>X-RAY CRYSTALLOGRAPHY (2.1 ANGSTROMS) OF 47-163</scope>
</reference>
<reference key="100">
    <citation type="journal article" date="1999" name="J. Med. Chem.">
        <title>Structure-based design, synthesis, and X-ray crystallography of a high- affinity antagonist of the Grb2-SH2 domain containing an asparagine mimetic.</title>
        <authorList>
            <person name="Furet P."/>
            <person name="Garcia-Echeverria C."/>
            <person name="Gay B."/>
            <person name="Schoepfer J."/>
            <person name="Zeller M."/>
            <person name="Rahuel J."/>
        </authorList>
    </citation>
    <scope>X-RAY CRYSTALLOGRAPHY (3.0 ANGSTROMS) OF 57-152</scope>
</reference>
<reference key="101">
    <citation type="journal article" date="2000" name="Biochemistry">
        <title>Dimer formation through domain swapping in the crystal structure of the Grb2-SH2-Ac-pYVNV complex.</title>
        <authorList>
            <person name="Schiering N."/>
            <person name="Casale E."/>
            <person name="Caccia P."/>
            <person name="Giordano P."/>
            <person name="Battistini C."/>
        </authorList>
    </citation>
    <scope>X-RAY CRYSTALLOGRAPHY (2.4 ANGSTROMS) OF 52-160 IN COMPLEX WITH MET</scope>
</reference>
<reference key="102">
    <citation type="journal article" date="2002" name="J. Mol. Biol.">
        <title>Crystal structures of the SH2 domain of Grb2: highlight on the binding of a new high-affinity inhibitor.</title>
        <authorList>
            <person name="Nioche P."/>
            <person name="Liu W.-Q."/>
            <person name="Broutin I."/>
            <person name="Charbonnier F."/>
            <person name="Latreille M.-T."/>
            <person name="Vidal M."/>
            <person name="Roques B."/>
            <person name="Garbay C."/>
            <person name="Ducruix A."/>
        </authorList>
    </citation>
    <scope>X-RAY CRYSTALLOGRAPHY (2.0 ANGSTROMS) OF 56-151 IN COMPLEX WITH THE TYROSINE PHOSPHORYLATED PEPTIDE TYR-VAL-ASN-VAL-GLN-ASN AND IN COMPLEX WITH A PEPTIDE INHIBITOR</scope>
</reference>
<reference key="103">
    <citation type="journal article" date="2009" name="Structure">
        <title>Distinct binding modes of two epitopes in Gab2 that interact with the SH3C domain of Grb2.</title>
        <authorList>
            <person name="Harkiolaki M."/>
            <person name="Tsirka T."/>
            <person name="Lewitzky M."/>
            <person name="Simister P.C."/>
            <person name="Joshi D."/>
            <person name="Bird L.E."/>
            <person name="Jones E.Y."/>
            <person name="O'Reilly N."/>
            <person name="Feller S.M."/>
        </authorList>
    </citation>
    <scope>X-RAY CRYSTALLOGRAPHY (1.58 ANGSTROMS) OF 158-211 IN COMPLEX WITH GAB2</scope>
</reference>
<reference key="104">
    <citation type="journal article" date="2013" name="PLoS ONE">
        <title>High resolution crystal structure of the Grb2 SH2 domain with a phosphopeptide derived from CD28.</title>
        <authorList>
            <person name="Higo K."/>
            <person name="Ikura T."/>
            <person name="Oda M."/>
            <person name="Morii H."/>
            <person name="Takahashi J."/>
            <person name="Abe R."/>
            <person name="Ito N."/>
        </authorList>
    </citation>
    <scope>X-RAY CRYSTALLOGRAPHY (1.35 ANGSTROMS) OF 60-152 IN COMPLEX WITH CD28</scope>
    <scope>INTERACTION WITH CD28</scope>
</reference>
<proteinExistence type="evidence at protein level"/>
<protein>
    <recommendedName>
        <fullName>Growth factor receptor-bound protein 2</fullName>
    </recommendedName>
    <alternativeName>
        <fullName>Adapter protein GRB2</fullName>
    </alternativeName>
    <alternativeName>
        <fullName>Protein Ash</fullName>
    </alternativeName>
    <alternativeName>
        <fullName>SH2/SH3 adapter GRB2</fullName>
    </alternativeName>
</protein>
<evidence type="ECO:0000250" key="1">
    <source>
        <dbReference type="UniProtKB" id="Q60631"/>
    </source>
</evidence>
<evidence type="ECO:0000255" key="2">
    <source>
        <dbReference type="PROSITE-ProRule" id="PRU00191"/>
    </source>
</evidence>
<evidence type="ECO:0000255" key="3">
    <source>
        <dbReference type="PROSITE-ProRule" id="PRU00192"/>
    </source>
</evidence>
<evidence type="ECO:0000269" key="4">
    <source>
    </source>
</evidence>
<evidence type="ECO:0000269" key="5">
    <source>
    </source>
</evidence>
<evidence type="ECO:0000269" key="6">
    <source>
    </source>
</evidence>
<evidence type="ECO:0000269" key="7">
    <source>
    </source>
</evidence>
<evidence type="ECO:0000269" key="8">
    <source>
    </source>
</evidence>
<evidence type="ECO:0000269" key="9">
    <source>
    </source>
</evidence>
<evidence type="ECO:0000269" key="10">
    <source>
    </source>
</evidence>
<evidence type="ECO:0000269" key="11">
    <source>
    </source>
</evidence>
<evidence type="ECO:0000269" key="12">
    <source>
    </source>
</evidence>
<evidence type="ECO:0000269" key="13">
    <source>
    </source>
</evidence>
<evidence type="ECO:0000269" key="14">
    <source>
    </source>
</evidence>
<evidence type="ECO:0000269" key="15">
    <source>
    </source>
</evidence>
<evidence type="ECO:0000269" key="16">
    <source>
    </source>
</evidence>
<evidence type="ECO:0000269" key="17">
    <source>
    </source>
</evidence>
<evidence type="ECO:0000269" key="18">
    <source>
    </source>
</evidence>
<evidence type="ECO:0000269" key="19">
    <source>
    </source>
</evidence>
<evidence type="ECO:0000269" key="20">
    <source>
    </source>
</evidence>
<evidence type="ECO:0000269" key="21">
    <source>
    </source>
</evidence>
<evidence type="ECO:0000269" key="22">
    <source>
    </source>
</evidence>
<evidence type="ECO:0000269" key="23">
    <source>
    </source>
</evidence>
<evidence type="ECO:0000269" key="24">
    <source>
    </source>
</evidence>
<evidence type="ECO:0000269" key="25">
    <source>
    </source>
</evidence>
<evidence type="ECO:0000269" key="26">
    <source>
    </source>
</evidence>
<evidence type="ECO:0000269" key="27">
    <source>
    </source>
</evidence>
<evidence type="ECO:0000269" key="28">
    <source>
    </source>
</evidence>
<evidence type="ECO:0000269" key="29">
    <source>
    </source>
</evidence>
<evidence type="ECO:0000269" key="30">
    <source>
    </source>
</evidence>
<evidence type="ECO:0000269" key="31">
    <source>
    </source>
</evidence>
<evidence type="ECO:0000269" key="32">
    <source>
    </source>
</evidence>
<evidence type="ECO:0000269" key="33">
    <source>
    </source>
</evidence>
<evidence type="ECO:0000269" key="34">
    <source>
    </source>
</evidence>
<evidence type="ECO:0000269" key="35">
    <source>
    </source>
</evidence>
<evidence type="ECO:0000269" key="36">
    <source>
    </source>
</evidence>
<evidence type="ECO:0000269" key="37">
    <source>
    </source>
</evidence>
<evidence type="ECO:0000269" key="38">
    <source>
    </source>
</evidence>
<evidence type="ECO:0000269" key="39">
    <source>
    </source>
</evidence>
<evidence type="ECO:0000269" key="40">
    <source>
    </source>
</evidence>
<evidence type="ECO:0000269" key="41">
    <source>
    </source>
</evidence>
<evidence type="ECO:0000269" key="42">
    <source>
    </source>
</evidence>
<evidence type="ECO:0000269" key="43">
    <source>
    </source>
</evidence>
<evidence type="ECO:0000269" key="44">
    <source>
    </source>
</evidence>
<evidence type="ECO:0000269" key="45">
    <source>
    </source>
</evidence>
<evidence type="ECO:0000269" key="46">
    <source>
    </source>
</evidence>
<evidence type="ECO:0000269" key="47">
    <source>
    </source>
</evidence>
<evidence type="ECO:0000269" key="48">
    <source>
    </source>
</evidence>
<evidence type="ECO:0000269" key="49">
    <source>
    </source>
</evidence>
<evidence type="ECO:0000269" key="50">
    <source>
    </source>
</evidence>
<evidence type="ECO:0000269" key="51">
    <source>
    </source>
</evidence>
<evidence type="ECO:0000269" key="52">
    <source>
    </source>
</evidence>
<evidence type="ECO:0000269" key="53">
    <source>
    </source>
</evidence>
<evidence type="ECO:0000269" key="54">
    <source>
    </source>
</evidence>
<evidence type="ECO:0000269" key="55">
    <source>
    </source>
</evidence>
<evidence type="ECO:0000269" key="56">
    <source>
    </source>
</evidence>
<evidence type="ECO:0000269" key="57">
    <source>
    </source>
</evidence>
<evidence type="ECO:0000269" key="58">
    <source>
    </source>
</evidence>
<evidence type="ECO:0000269" key="59">
    <source>
    </source>
</evidence>
<evidence type="ECO:0000269" key="60">
    <source>
    </source>
</evidence>
<evidence type="ECO:0000269" key="61">
    <source>
    </source>
</evidence>
<evidence type="ECO:0000269" key="62">
    <source>
    </source>
</evidence>
<evidence type="ECO:0000269" key="63">
    <source>
    </source>
</evidence>
<evidence type="ECO:0000269" key="64">
    <source>
    </source>
</evidence>
<evidence type="ECO:0000269" key="65">
    <source>
    </source>
</evidence>
<evidence type="ECO:0000269" key="66">
    <source>
    </source>
</evidence>
<evidence type="ECO:0000269" key="67">
    <source>
    </source>
</evidence>
<evidence type="ECO:0000269" key="68">
    <source>
    </source>
</evidence>
<evidence type="ECO:0000269" key="69">
    <source>
    </source>
</evidence>
<evidence type="ECO:0000269" key="70">
    <source>
    </source>
</evidence>
<evidence type="ECO:0000269" key="71">
    <source>
    </source>
</evidence>
<evidence type="ECO:0000269" key="72">
    <source>
    </source>
</evidence>
<evidence type="ECO:0000269" key="73">
    <source>
    </source>
</evidence>
<evidence type="ECO:0000269" key="74">
    <source>
    </source>
</evidence>
<evidence type="ECO:0000269" key="75">
    <source>
    </source>
</evidence>
<evidence type="ECO:0000269" key="76">
    <source>
    </source>
</evidence>
<evidence type="ECO:0000269" key="77">
    <source>
    </source>
</evidence>
<evidence type="ECO:0000269" key="78">
    <source>
    </source>
</evidence>
<evidence type="ECO:0000269" key="79">
    <source>
    </source>
</evidence>
<evidence type="ECO:0000269" key="80">
    <source>
    </source>
</evidence>
<evidence type="ECO:0000303" key="81">
    <source>
    </source>
</evidence>
<evidence type="ECO:0000305" key="82"/>
<evidence type="ECO:0000305" key="83">
    <source>
    </source>
</evidence>
<evidence type="ECO:0000305" key="84">
    <source>
    </source>
</evidence>
<evidence type="ECO:0007744" key="85">
    <source>
    </source>
</evidence>
<evidence type="ECO:0007744" key="86">
    <source>
    </source>
</evidence>
<evidence type="ECO:0007744" key="87">
    <source>
    </source>
</evidence>
<evidence type="ECO:0007829" key="88">
    <source>
        <dbReference type="PDB" id="1FHS"/>
    </source>
</evidence>
<evidence type="ECO:0007829" key="89">
    <source>
        <dbReference type="PDB" id="1GRI"/>
    </source>
</evidence>
<evidence type="ECO:0007829" key="90">
    <source>
        <dbReference type="PDB" id="1IO6"/>
    </source>
</evidence>
<evidence type="ECO:0007829" key="91">
    <source>
        <dbReference type="PDB" id="1QG1"/>
    </source>
</evidence>
<evidence type="ECO:0007829" key="92">
    <source>
        <dbReference type="PDB" id="2VWF"/>
    </source>
</evidence>
<evidence type="ECO:0007829" key="93">
    <source>
        <dbReference type="PDB" id="3IMD"/>
    </source>
</evidence>
<evidence type="ECO:0007829" key="94">
    <source>
        <dbReference type="PDB" id="6ICG"/>
    </source>
</evidence>
<evidence type="ECO:0007829" key="95">
    <source>
        <dbReference type="PDB" id="8DGO"/>
    </source>
</evidence>
<name>GRB2_HUMAN</name>
<dbReference type="EMBL" id="M96995">
    <property type="protein sequence ID" value="AAA58448.1"/>
    <property type="molecule type" value="mRNA"/>
</dbReference>
<dbReference type="EMBL" id="X62852">
    <property type="protein sequence ID" value="CAA44664.1"/>
    <property type="molecule type" value="mRNA"/>
</dbReference>
<dbReference type="EMBL" id="L29511">
    <property type="protein sequence ID" value="AAC37549.1"/>
    <property type="molecule type" value="mRNA"/>
</dbReference>
<dbReference type="EMBL" id="AF063618">
    <property type="protein sequence ID" value="AAC72075.1"/>
    <property type="molecule type" value="Genomic_DNA"/>
</dbReference>
<dbReference type="EMBL" id="AF063614">
    <property type="protein sequence ID" value="AAC72075.1"/>
    <property type="status" value="JOINED"/>
    <property type="molecule type" value="Genomic_DNA"/>
</dbReference>
<dbReference type="EMBL" id="AF063615">
    <property type="protein sequence ID" value="AAC72075.1"/>
    <property type="status" value="JOINED"/>
    <property type="molecule type" value="Genomic_DNA"/>
</dbReference>
<dbReference type="EMBL" id="AF063616">
    <property type="protein sequence ID" value="AAC72075.1"/>
    <property type="status" value="JOINED"/>
    <property type="molecule type" value="Genomic_DNA"/>
</dbReference>
<dbReference type="EMBL" id="AF063617">
    <property type="protein sequence ID" value="AAC72075.1"/>
    <property type="status" value="JOINED"/>
    <property type="molecule type" value="Genomic_DNA"/>
</dbReference>
<dbReference type="EMBL" id="AF498925">
    <property type="protein sequence ID" value="AAM21073.1"/>
    <property type="molecule type" value="mRNA"/>
</dbReference>
<dbReference type="EMBL" id="CR541942">
    <property type="protein sequence ID" value="CAG46740.1"/>
    <property type="molecule type" value="mRNA"/>
</dbReference>
<dbReference type="EMBL" id="AC011933">
    <property type="status" value="NOT_ANNOTATED_CDS"/>
    <property type="molecule type" value="Genomic_DNA"/>
</dbReference>
<dbReference type="EMBL" id="BC000631">
    <property type="protein sequence ID" value="AAH00631.1"/>
    <property type="molecule type" value="mRNA"/>
</dbReference>
<dbReference type="CCDS" id="CCDS11721.1"/>
<dbReference type="CCDS" id="CCDS11722.1">
    <molecule id="P62993-2"/>
</dbReference>
<dbReference type="PIR" id="A43321">
    <property type="entry name" value="A43321"/>
</dbReference>
<dbReference type="RefSeq" id="NP_002077.1">
    <molecule id="P62993-1"/>
    <property type="nucleotide sequence ID" value="NM_002086.5"/>
</dbReference>
<dbReference type="RefSeq" id="NP_987102.1">
    <molecule id="P62993-2"/>
    <property type="nucleotide sequence ID" value="NM_203506.3"/>
</dbReference>
<dbReference type="PDB" id="1AZE">
    <property type="method" value="NMR"/>
    <property type="chains" value="A=1-56"/>
</dbReference>
<dbReference type="PDB" id="1BM2">
    <property type="method" value="X-ray"/>
    <property type="resolution" value="2.10 A"/>
    <property type="chains" value="A=49-163"/>
</dbReference>
<dbReference type="PDB" id="1BMB">
    <property type="method" value="X-ray"/>
    <property type="resolution" value="1.80 A"/>
    <property type="chains" value="A=49-168"/>
</dbReference>
<dbReference type="PDB" id="1CJ1">
    <property type="method" value="X-ray"/>
    <property type="resolution" value="3.00 A"/>
    <property type="chains" value="A/B/C/D/E/F/G/H/I/J/K/L=57-152"/>
</dbReference>
<dbReference type="PDB" id="1FHS">
    <property type="method" value="NMR"/>
    <property type="chains" value="A=53-163"/>
</dbReference>
<dbReference type="PDB" id="1FYR">
    <property type="method" value="X-ray"/>
    <property type="resolution" value="2.40 A"/>
    <property type="chains" value="A/B/C/D=50-161"/>
</dbReference>
<dbReference type="PDB" id="1GCQ">
    <property type="method" value="X-ray"/>
    <property type="resolution" value="1.68 A"/>
    <property type="chains" value="A/B=159-217"/>
</dbReference>
<dbReference type="PDB" id="1GFC">
    <property type="method" value="NMR"/>
    <property type="chains" value="A=159-215"/>
</dbReference>
<dbReference type="PDB" id="1GFD">
    <property type="method" value="NMR"/>
    <property type="chains" value="A=159-215"/>
</dbReference>
<dbReference type="PDB" id="1GHU">
    <property type="method" value="NMR"/>
    <property type="chains" value="A=60-158"/>
</dbReference>
<dbReference type="PDB" id="1GRI">
    <property type="method" value="X-ray"/>
    <property type="resolution" value="3.10 A"/>
    <property type="chains" value="A/B=1-217"/>
</dbReference>
<dbReference type="PDB" id="1IO6">
    <property type="method" value="NMR"/>
    <property type="chains" value="A=159-215"/>
</dbReference>
<dbReference type="PDB" id="1JYQ">
    <property type="method" value="X-ray"/>
    <property type="resolution" value="2.00 A"/>
    <property type="chains" value="A/B=60-151"/>
</dbReference>
<dbReference type="PDB" id="1JYR">
    <property type="method" value="X-ray"/>
    <property type="resolution" value="1.55 A"/>
    <property type="chains" value="A=60-151"/>
</dbReference>
<dbReference type="PDB" id="1JYU">
    <property type="method" value="X-ray"/>
    <property type="resolution" value="2.75 A"/>
    <property type="chains" value="A=60-151"/>
</dbReference>
<dbReference type="PDB" id="1QG1">
    <property type="method" value="NMR"/>
    <property type="chains" value="E=58-159"/>
</dbReference>
<dbReference type="PDB" id="1TZE">
    <property type="method" value="X-ray"/>
    <property type="resolution" value="2.10 A"/>
    <property type="chains" value="E=55-152"/>
</dbReference>
<dbReference type="PDB" id="1X0N">
    <property type="method" value="NMR"/>
    <property type="chains" value="A=58-159"/>
</dbReference>
<dbReference type="PDB" id="1ZFP">
    <property type="method" value="X-ray"/>
    <property type="resolution" value="1.80 A"/>
    <property type="chains" value="E=56-153"/>
</dbReference>
<dbReference type="PDB" id="2AOA">
    <property type="method" value="X-ray"/>
    <property type="resolution" value="1.99 A"/>
    <property type="chains" value="A/B=55-153"/>
</dbReference>
<dbReference type="PDB" id="2AOB">
    <property type="method" value="X-ray"/>
    <property type="resolution" value="1.80 A"/>
    <property type="chains" value="A/B/C/D=55-153"/>
</dbReference>
<dbReference type="PDB" id="2H46">
    <property type="method" value="X-ray"/>
    <property type="resolution" value="1.90 A"/>
    <property type="chains" value="E=53-162"/>
</dbReference>
<dbReference type="PDB" id="2H5K">
    <property type="method" value="X-ray"/>
    <property type="resolution" value="3.25 A"/>
    <property type="chains" value="A/B=53-162"/>
</dbReference>
<dbReference type="PDB" id="2HUW">
    <property type="method" value="X-ray"/>
    <property type="resolution" value="1.90 A"/>
    <property type="chains" value="A/B=53-162"/>
</dbReference>
<dbReference type="PDB" id="2VVK">
    <property type="method" value="X-ray"/>
    <property type="resolution" value="1.60 A"/>
    <property type="chains" value="A=161-214"/>
</dbReference>
<dbReference type="PDB" id="2VWF">
    <property type="method" value="X-ray"/>
    <property type="resolution" value="1.58 A"/>
    <property type="chains" value="A=159-214"/>
</dbReference>
<dbReference type="PDB" id="2W0Z">
    <property type="method" value="X-ray"/>
    <property type="resolution" value="1.70 A"/>
    <property type="chains" value="A=159-214"/>
</dbReference>
<dbReference type="PDB" id="3C7I">
    <property type="method" value="X-ray"/>
    <property type="resolution" value="1.70 A"/>
    <property type="chains" value="A=53-162"/>
</dbReference>
<dbReference type="PDB" id="3IMD">
    <property type="method" value="X-ray"/>
    <property type="resolution" value="2.00 A"/>
    <property type="chains" value="A/B=53-163"/>
</dbReference>
<dbReference type="PDB" id="3IMJ">
    <property type="method" value="X-ray"/>
    <property type="resolution" value="2.02 A"/>
    <property type="chains" value="A/B=53-163"/>
</dbReference>
<dbReference type="PDB" id="3IN7">
    <property type="method" value="X-ray"/>
    <property type="resolution" value="2.00 A"/>
    <property type="chains" value="A/C=53-163"/>
</dbReference>
<dbReference type="PDB" id="3IN8">
    <property type="method" value="X-ray"/>
    <property type="resolution" value="1.70 A"/>
    <property type="chains" value="A=53-163"/>
</dbReference>
<dbReference type="PDB" id="3KFJ">
    <property type="method" value="X-ray"/>
    <property type="resolution" value="2.02 A"/>
    <property type="chains" value="A=53-163"/>
</dbReference>
<dbReference type="PDB" id="3MXC">
    <property type="method" value="X-ray"/>
    <property type="resolution" value="2.00 A"/>
    <property type="chains" value="A=55-152"/>
</dbReference>
<dbReference type="PDB" id="3MXY">
    <property type="method" value="X-ray"/>
    <property type="resolution" value="2.30 A"/>
    <property type="chains" value="A=55-152"/>
</dbReference>
<dbReference type="PDB" id="3N7Y">
    <property type="method" value="X-ray"/>
    <property type="resolution" value="2.02 A"/>
    <property type="chains" value="A/B/C=55-152"/>
</dbReference>
<dbReference type="PDB" id="3N84">
    <property type="method" value="X-ray"/>
    <property type="resolution" value="2.00 A"/>
    <property type="chains" value="A/B/C/D/E/F=53-163"/>
</dbReference>
<dbReference type="PDB" id="3N8M">
    <property type="method" value="X-ray"/>
    <property type="resolution" value="2.00 A"/>
    <property type="chains" value="A=53-163"/>
</dbReference>
<dbReference type="PDB" id="3OV1">
    <property type="method" value="X-ray"/>
    <property type="resolution" value="1.60 A"/>
    <property type="chains" value="A=53-163"/>
</dbReference>
<dbReference type="PDB" id="3OVE">
    <property type="method" value="X-ray"/>
    <property type="resolution" value="1.82 A"/>
    <property type="chains" value="A=53-163"/>
</dbReference>
<dbReference type="PDB" id="3S8L">
    <property type="method" value="X-ray"/>
    <property type="resolution" value="1.71 A"/>
    <property type="chains" value="A=53-163"/>
</dbReference>
<dbReference type="PDB" id="3S8N">
    <property type="method" value="X-ray"/>
    <property type="resolution" value="1.71 A"/>
    <property type="chains" value="A=53-163"/>
</dbReference>
<dbReference type="PDB" id="3S8O">
    <property type="method" value="X-ray"/>
    <property type="resolution" value="1.85 A"/>
    <property type="chains" value="A=53-163"/>
</dbReference>
<dbReference type="PDB" id="3WA4">
    <property type="method" value="X-ray"/>
    <property type="resolution" value="1.35 A"/>
    <property type="chains" value="A=60-152"/>
</dbReference>
<dbReference type="PDB" id="4P9V">
    <property type="method" value="X-ray"/>
    <property type="resolution" value="1.64 A"/>
    <property type="chains" value="A=53-163"/>
</dbReference>
<dbReference type="PDB" id="4P9Z">
    <property type="method" value="X-ray"/>
    <property type="resolution" value="1.80 A"/>
    <property type="chains" value="A=53-163"/>
</dbReference>
<dbReference type="PDB" id="5CDW">
    <property type="method" value="X-ray"/>
    <property type="resolution" value="2.60 A"/>
    <property type="chains" value="A/B/C/E/G/H/K/L/O/P/U/V/Y/Z/c/d=54-153"/>
</dbReference>
<dbReference type="PDB" id="6ICG">
    <property type="method" value="X-ray"/>
    <property type="resolution" value="1.15 A"/>
    <property type="chains" value="A/B=60-152"/>
</dbReference>
<dbReference type="PDB" id="6ICH">
    <property type="method" value="X-ray"/>
    <property type="resolution" value="2.00 A"/>
    <property type="chains" value="A=60-152"/>
</dbReference>
<dbReference type="PDB" id="6SDF">
    <property type="method" value="X-ray"/>
    <property type="resolution" value="2.50 A"/>
    <property type="chains" value="A/B=2-59"/>
</dbReference>
<dbReference type="PDB" id="6VK2">
    <property type="method" value="NMR"/>
    <property type="chains" value="A=55-150"/>
</dbReference>
<dbReference type="PDB" id="6WM1">
    <property type="method" value="X-ray"/>
    <property type="resolution" value="1.80 A"/>
    <property type="chains" value="A/C=53-163"/>
</dbReference>
<dbReference type="PDB" id="6WO2">
    <property type="method" value="X-ray"/>
    <property type="resolution" value="2.00 A"/>
    <property type="chains" value="A/B=53-163"/>
</dbReference>
<dbReference type="PDB" id="7MPH">
    <property type="method" value="X-ray"/>
    <property type="resolution" value="2.00 A"/>
    <property type="chains" value="A/B/C/D/E/F=59-152"/>
</dbReference>
<dbReference type="PDB" id="8DGO">
    <property type="method" value="X-ray"/>
    <property type="resolution" value="2.30 A"/>
    <property type="chains" value="A/B=1-217"/>
</dbReference>
<dbReference type="PDBsum" id="1AZE"/>
<dbReference type="PDBsum" id="1BM2"/>
<dbReference type="PDBsum" id="1BMB"/>
<dbReference type="PDBsum" id="1CJ1"/>
<dbReference type="PDBsum" id="1FHS"/>
<dbReference type="PDBsum" id="1FYR"/>
<dbReference type="PDBsum" id="1GCQ"/>
<dbReference type="PDBsum" id="1GFC"/>
<dbReference type="PDBsum" id="1GFD"/>
<dbReference type="PDBsum" id="1GHU"/>
<dbReference type="PDBsum" id="1GRI"/>
<dbReference type="PDBsum" id="1IO6"/>
<dbReference type="PDBsum" id="1JYQ"/>
<dbReference type="PDBsum" id="1JYR"/>
<dbReference type="PDBsum" id="1JYU"/>
<dbReference type="PDBsum" id="1QG1"/>
<dbReference type="PDBsum" id="1TZE"/>
<dbReference type="PDBsum" id="1X0N"/>
<dbReference type="PDBsum" id="1ZFP"/>
<dbReference type="PDBsum" id="2AOA"/>
<dbReference type="PDBsum" id="2AOB"/>
<dbReference type="PDBsum" id="2H46"/>
<dbReference type="PDBsum" id="2H5K"/>
<dbReference type="PDBsum" id="2HUW"/>
<dbReference type="PDBsum" id="2VVK"/>
<dbReference type="PDBsum" id="2VWF"/>
<dbReference type="PDBsum" id="2W0Z"/>
<dbReference type="PDBsum" id="3C7I"/>
<dbReference type="PDBsum" id="3IMD"/>
<dbReference type="PDBsum" id="3IMJ"/>
<dbReference type="PDBsum" id="3IN7"/>
<dbReference type="PDBsum" id="3IN8"/>
<dbReference type="PDBsum" id="3KFJ"/>
<dbReference type="PDBsum" id="3MXC"/>
<dbReference type="PDBsum" id="3MXY"/>
<dbReference type="PDBsum" id="3N7Y"/>
<dbReference type="PDBsum" id="3N84"/>
<dbReference type="PDBsum" id="3N8M"/>
<dbReference type="PDBsum" id="3OV1"/>
<dbReference type="PDBsum" id="3OVE"/>
<dbReference type="PDBsum" id="3S8L"/>
<dbReference type="PDBsum" id="3S8N"/>
<dbReference type="PDBsum" id="3S8O"/>
<dbReference type="PDBsum" id="3WA4"/>
<dbReference type="PDBsum" id="4P9V"/>
<dbReference type="PDBsum" id="4P9Z"/>
<dbReference type="PDBsum" id="5CDW"/>
<dbReference type="PDBsum" id="6ICG"/>
<dbReference type="PDBsum" id="6ICH"/>
<dbReference type="PDBsum" id="6SDF"/>
<dbReference type="PDBsum" id="6VK2"/>
<dbReference type="PDBsum" id="6WM1"/>
<dbReference type="PDBsum" id="6WO2"/>
<dbReference type="PDBsum" id="7MPH"/>
<dbReference type="PDBsum" id="8DGO"/>
<dbReference type="BMRB" id="P62993"/>
<dbReference type="SASBDB" id="P62993"/>
<dbReference type="SMR" id="P62993"/>
<dbReference type="BioGRID" id="109142">
    <property type="interactions" value="752"/>
</dbReference>
<dbReference type="CORUM" id="P62993"/>
<dbReference type="DIP" id="DIP-29229N"/>
<dbReference type="ELM" id="P62993"/>
<dbReference type="FunCoup" id="P62993">
    <property type="interactions" value="4560"/>
</dbReference>
<dbReference type="IntAct" id="P62993">
    <property type="interactions" value="897"/>
</dbReference>
<dbReference type="MINT" id="P62993"/>
<dbReference type="STRING" id="9606.ENSP00000376345"/>
<dbReference type="BindingDB" id="P62993"/>
<dbReference type="ChEMBL" id="CHEMBL3663"/>
<dbReference type="DrugBank" id="DB03276">
    <property type="generic name" value="4-[(10s,14s,18s)-18-(2-Amino-2-Oxoethyl)-14-(1-Naphthylmethyl)-8,17,20-Trioxo-7,16,19-Triazaspiro[5.14]Icos-11-En-10-Yl]Benzylphosphonic Acid"/>
</dbReference>
<dbReference type="DrugBank" id="DB00061">
    <property type="generic name" value="Pegademase"/>
</dbReference>
<dbReference type="DrugCentral" id="P62993"/>
<dbReference type="MoonDB" id="P62993">
    <property type="type" value="Predicted"/>
</dbReference>
<dbReference type="GlyGen" id="P62993">
    <property type="glycosylation" value="2 sites, 1 O-linked glycan (1 site)"/>
</dbReference>
<dbReference type="iPTMnet" id="P62993"/>
<dbReference type="MetOSite" id="P62993"/>
<dbReference type="PhosphoSitePlus" id="P62993"/>
<dbReference type="BioMuta" id="GRB2"/>
<dbReference type="DMDM" id="51702266"/>
<dbReference type="OGP" id="P62993"/>
<dbReference type="CPTAC" id="CPTAC-1421"/>
<dbReference type="CPTAC" id="CPTAC-1422"/>
<dbReference type="CPTAC" id="CPTAC-1423"/>
<dbReference type="CPTAC" id="CPTAC-1424"/>
<dbReference type="CPTAC" id="CPTAC-1425"/>
<dbReference type="CPTAC" id="CPTAC-1609"/>
<dbReference type="CPTAC" id="CPTAC-699"/>
<dbReference type="jPOST" id="P62993"/>
<dbReference type="MassIVE" id="P62993"/>
<dbReference type="PaxDb" id="9606-ENSP00000376345"/>
<dbReference type="PeptideAtlas" id="P62993"/>
<dbReference type="ProteomicsDB" id="57462"/>
<dbReference type="ProteomicsDB" id="57463">
    <molecule id="P62993-2"/>
</dbReference>
<dbReference type="Pumba" id="P62993"/>
<dbReference type="TopDownProteomics" id="P62993-1">
    <molecule id="P62993-1"/>
</dbReference>
<dbReference type="TopDownProteomics" id="P62993-2">
    <molecule id="P62993-2"/>
</dbReference>
<dbReference type="ABCD" id="P62993">
    <property type="antibodies" value="8 sequenced antibodies"/>
</dbReference>
<dbReference type="Antibodypedia" id="3408">
    <property type="antibodies" value="698 antibodies from 44 providers"/>
</dbReference>
<dbReference type="CPTC" id="P62993">
    <property type="antibodies" value="1 antibody"/>
</dbReference>
<dbReference type="DNASU" id="2885"/>
<dbReference type="Ensembl" id="ENST00000316615.9">
    <molecule id="P62993-2"/>
    <property type="protein sequence ID" value="ENSP00000317360.5"/>
    <property type="gene ID" value="ENSG00000177885.15"/>
</dbReference>
<dbReference type="Ensembl" id="ENST00000316804.10">
    <molecule id="P62993-1"/>
    <property type="protein sequence ID" value="ENSP00000339007.4"/>
    <property type="gene ID" value="ENSG00000177885.15"/>
</dbReference>
<dbReference type="Ensembl" id="ENST00000392562.5">
    <molecule id="P62993-1"/>
    <property type="protein sequence ID" value="ENSP00000376345.1"/>
    <property type="gene ID" value="ENSG00000177885.15"/>
</dbReference>
<dbReference type="Ensembl" id="ENST00000392563.5">
    <molecule id="P62993-2"/>
    <property type="protein sequence ID" value="ENSP00000376346.1"/>
    <property type="gene ID" value="ENSG00000177885.15"/>
</dbReference>
<dbReference type="Ensembl" id="ENST00000392564.5">
    <molecule id="P62993-1"/>
    <property type="protein sequence ID" value="ENSP00000376347.1"/>
    <property type="gene ID" value="ENSG00000177885.15"/>
</dbReference>
<dbReference type="Ensembl" id="ENST00000648046.1">
    <molecule id="P62993-1"/>
    <property type="protein sequence ID" value="ENSP00000496913.1"/>
    <property type="gene ID" value="ENSG00000177885.15"/>
</dbReference>
<dbReference type="GeneID" id="2885"/>
<dbReference type="KEGG" id="hsa:2885"/>
<dbReference type="MANE-Select" id="ENST00000316804.10">
    <property type="protein sequence ID" value="ENSP00000339007.4"/>
    <property type="RefSeq nucleotide sequence ID" value="NM_002086.5"/>
    <property type="RefSeq protein sequence ID" value="NP_002077.1"/>
</dbReference>
<dbReference type="UCSC" id="uc002jnx.5">
    <property type="organism name" value="human"/>
</dbReference>
<dbReference type="AGR" id="HGNC:4566"/>
<dbReference type="CTD" id="2885"/>
<dbReference type="DisGeNET" id="2885"/>
<dbReference type="GeneCards" id="GRB2"/>
<dbReference type="HGNC" id="HGNC:4566">
    <property type="gene designation" value="GRB2"/>
</dbReference>
<dbReference type="HPA" id="ENSG00000177885">
    <property type="expression patterns" value="Low tissue specificity"/>
</dbReference>
<dbReference type="MIM" id="108355">
    <property type="type" value="gene"/>
</dbReference>
<dbReference type="neXtProt" id="NX_P62993"/>
<dbReference type="OpenTargets" id="ENSG00000177885"/>
<dbReference type="PharmGKB" id="PA28962"/>
<dbReference type="VEuPathDB" id="HostDB:ENSG00000177885"/>
<dbReference type="eggNOG" id="KOG3601">
    <property type="taxonomic scope" value="Eukaryota"/>
</dbReference>
<dbReference type="GeneTree" id="ENSGT00940000155738"/>
<dbReference type="HOGENOM" id="CLU_073617_1_0_1"/>
<dbReference type="InParanoid" id="P62993"/>
<dbReference type="OMA" id="YVCPYNS"/>
<dbReference type="OrthoDB" id="10255964at2759"/>
<dbReference type="PAN-GO" id="P62993">
    <property type="GO annotations" value="8 GO annotations based on evolutionary models"/>
</dbReference>
<dbReference type="PhylomeDB" id="P62993"/>
<dbReference type="TreeFam" id="TF354288"/>
<dbReference type="PathwayCommons" id="P62993"/>
<dbReference type="Reactome" id="R-HSA-109704">
    <molecule id="P62993-1"/>
    <property type="pathway name" value="PI3K Cascade"/>
</dbReference>
<dbReference type="Reactome" id="R-HSA-112412">
    <molecule id="P62993-1"/>
    <property type="pathway name" value="SOS-mediated signalling"/>
</dbReference>
<dbReference type="Reactome" id="R-HSA-1236382">
    <molecule id="P62993-1"/>
    <property type="pathway name" value="Constitutive Signaling by Ligand-Responsive EGFR Cancer Variants"/>
</dbReference>
<dbReference type="Reactome" id="R-HSA-1250196">
    <molecule id="P62993-1"/>
    <property type="pathway name" value="SHC1 events in ERBB2 signaling"/>
</dbReference>
<dbReference type="Reactome" id="R-HSA-1250347">
    <molecule id="P62993-1"/>
    <property type="pathway name" value="SHC1 events in ERBB4 signaling"/>
</dbReference>
<dbReference type="Reactome" id="R-HSA-1257604">
    <molecule id="P62993-1"/>
    <property type="pathway name" value="PIP3 activates AKT signaling"/>
</dbReference>
<dbReference type="Reactome" id="R-HSA-1295596">
    <molecule id="P62993-1"/>
    <property type="pathway name" value="Spry regulation of FGF signaling"/>
</dbReference>
<dbReference type="Reactome" id="R-HSA-1433557">
    <molecule id="P62993-1"/>
    <property type="pathway name" value="Signaling by SCF-KIT"/>
</dbReference>
<dbReference type="Reactome" id="R-HSA-1433559">
    <molecule id="P62993-1"/>
    <property type="pathway name" value="Regulation of KIT signaling"/>
</dbReference>
<dbReference type="Reactome" id="R-HSA-167044">
    <molecule id="P62993-1"/>
    <property type="pathway name" value="Signalling to RAS"/>
</dbReference>
<dbReference type="Reactome" id="R-HSA-179812">
    <molecule id="P62993-1"/>
    <property type="pathway name" value="GRB2 events in EGFR signaling"/>
</dbReference>
<dbReference type="Reactome" id="R-HSA-180292">
    <molecule id="P62993-1"/>
    <property type="pathway name" value="GAB1 signalosome"/>
</dbReference>
<dbReference type="Reactome" id="R-HSA-180336">
    <molecule id="P62993-1"/>
    <property type="pathway name" value="SHC1 events in EGFR signaling"/>
</dbReference>
<dbReference type="Reactome" id="R-HSA-182971">
    <molecule id="P62993-1"/>
    <property type="pathway name" value="EGFR downregulation"/>
</dbReference>
<dbReference type="Reactome" id="R-HSA-1839117">
    <molecule id="P62993-1"/>
    <property type="pathway name" value="Signaling by cytosolic FGFR1 fusion mutants"/>
</dbReference>
<dbReference type="Reactome" id="R-HSA-186763">
    <molecule id="P62993-1"/>
    <property type="pathway name" value="Downstream signal transduction"/>
</dbReference>
<dbReference type="Reactome" id="R-HSA-1963640">
    <molecule id="P62993-1"/>
    <property type="pathway name" value="GRB2 events in ERBB2 signaling"/>
</dbReference>
<dbReference type="Reactome" id="R-HSA-1963642">
    <molecule id="P62993-1"/>
    <property type="pathway name" value="PI3K events in ERBB2 signaling"/>
</dbReference>
<dbReference type="Reactome" id="R-HSA-2029482">
    <molecule id="P62993-1"/>
    <property type="pathway name" value="Regulation of actin dynamics for phagocytic cup formation"/>
</dbReference>
<dbReference type="Reactome" id="R-HSA-210993">
    <molecule id="P62993-1"/>
    <property type="pathway name" value="Tie2 Signaling"/>
</dbReference>
<dbReference type="Reactome" id="R-HSA-2179392">
    <molecule id="P62993-1"/>
    <property type="pathway name" value="EGFR Transactivation by Gastrin"/>
</dbReference>
<dbReference type="Reactome" id="R-HSA-2219530">
    <molecule id="P62993-1"/>
    <property type="pathway name" value="Constitutive Signaling by Aberrant PI3K in Cancer"/>
</dbReference>
<dbReference type="Reactome" id="R-HSA-2424491">
    <molecule id="P62993-1"/>
    <property type="pathway name" value="DAP12 signaling"/>
</dbReference>
<dbReference type="Reactome" id="R-HSA-2428933">
    <molecule id="P62993-1"/>
    <property type="pathway name" value="SHC-related events triggered by IGF1R"/>
</dbReference>
<dbReference type="Reactome" id="R-HSA-2730905">
    <molecule id="P62993-1"/>
    <property type="pathway name" value="Role of LAT2/NTAL/LAB on calcium mobilization"/>
</dbReference>
<dbReference type="Reactome" id="R-HSA-2871796">
    <molecule id="P62993-1"/>
    <property type="pathway name" value="FCERI mediated MAPK activation"/>
</dbReference>
<dbReference type="Reactome" id="R-HSA-2871809">
    <molecule id="P62993-1"/>
    <property type="pathway name" value="FCERI mediated Ca+2 mobilization"/>
</dbReference>
<dbReference type="Reactome" id="R-HSA-354194">
    <molecule id="P62993-1"/>
    <property type="pathway name" value="GRB2:SOS provides linkage to MAPK signaling for Integrins"/>
</dbReference>
<dbReference type="Reactome" id="R-HSA-375165">
    <molecule id="P62993-1"/>
    <property type="pathway name" value="NCAM signaling for neurite out-growth"/>
</dbReference>
<dbReference type="Reactome" id="R-HSA-389359">
    <molecule id="P62993-1"/>
    <property type="pathway name" value="CD28 dependent Vav1 pathway"/>
</dbReference>
<dbReference type="Reactome" id="R-HSA-391160">
    <molecule id="P62993-1"/>
    <property type="pathway name" value="Signal regulatory protein family interactions"/>
</dbReference>
<dbReference type="Reactome" id="R-HSA-512988">
    <molecule id="P62993-1"/>
    <property type="pathway name" value="Interleukin-3, Interleukin-5 and GM-CSF signaling"/>
</dbReference>
<dbReference type="Reactome" id="R-HSA-5637810">
    <molecule id="P62993-1"/>
    <property type="pathway name" value="Constitutive Signaling by EGFRvIII"/>
</dbReference>
<dbReference type="Reactome" id="R-HSA-5654688">
    <molecule id="P62993-1"/>
    <property type="pathway name" value="SHC-mediated cascade:FGFR1"/>
</dbReference>
<dbReference type="Reactome" id="R-HSA-5654689">
    <molecule id="P62993-1"/>
    <property type="pathway name" value="PI-3K cascade:FGFR1"/>
</dbReference>
<dbReference type="Reactome" id="R-HSA-5654693">
    <molecule id="P62993-1"/>
    <property type="pathway name" value="FRS-mediated FGFR1 signaling"/>
</dbReference>
<dbReference type="Reactome" id="R-HSA-5654695">
    <molecule id="P62993-1"/>
    <property type="pathway name" value="PI-3K cascade:FGFR2"/>
</dbReference>
<dbReference type="Reactome" id="R-HSA-5654699">
    <molecule id="P62993-1"/>
    <property type="pathway name" value="SHC-mediated cascade:FGFR2"/>
</dbReference>
<dbReference type="Reactome" id="R-HSA-5654700">
    <molecule id="P62993-1"/>
    <property type="pathway name" value="FRS-mediated FGFR2 signaling"/>
</dbReference>
<dbReference type="Reactome" id="R-HSA-5654704">
    <molecule id="P62993-1"/>
    <property type="pathway name" value="SHC-mediated cascade:FGFR3"/>
</dbReference>
<dbReference type="Reactome" id="R-HSA-5654706">
    <molecule id="P62993-1"/>
    <property type="pathway name" value="FRS-mediated FGFR3 signaling"/>
</dbReference>
<dbReference type="Reactome" id="R-HSA-5654710">
    <molecule id="P62993-1"/>
    <property type="pathway name" value="PI-3K cascade:FGFR3"/>
</dbReference>
<dbReference type="Reactome" id="R-HSA-5654712">
    <molecule id="P62993-1"/>
    <property type="pathway name" value="FRS-mediated FGFR4 signaling"/>
</dbReference>
<dbReference type="Reactome" id="R-HSA-5654719">
    <molecule id="P62993-1"/>
    <property type="pathway name" value="SHC-mediated cascade:FGFR4"/>
</dbReference>
<dbReference type="Reactome" id="R-HSA-5654720">
    <molecule id="P62993-1"/>
    <property type="pathway name" value="PI-3K cascade:FGFR4"/>
</dbReference>
<dbReference type="Reactome" id="R-HSA-5654726">
    <molecule id="P62993-1"/>
    <property type="pathway name" value="Negative regulation of FGFR1 signaling"/>
</dbReference>
<dbReference type="Reactome" id="R-HSA-5654727">
    <molecule id="P62993-1"/>
    <property type="pathway name" value="Negative regulation of FGFR2 signaling"/>
</dbReference>
<dbReference type="Reactome" id="R-HSA-5654732">
    <molecule id="P62993-1"/>
    <property type="pathway name" value="Negative regulation of FGFR3 signaling"/>
</dbReference>
<dbReference type="Reactome" id="R-HSA-5654733">
    <molecule id="P62993-1"/>
    <property type="pathway name" value="Negative regulation of FGFR4 signaling"/>
</dbReference>
<dbReference type="Reactome" id="R-HSA-5655253">
    <molecule id="P62993-1"/>
    <property type="pathway name" value="Signaling by FGFR2 in disease"/>
</dbReference>
<dbReference type="Reactome" id="R-HSA-5655291">
    <molecule id="P62993-1"/>
    <property type="pathway name" value="Signaling by FGFR4 in disease"/>
</dbReference>
<dbReference type="Reactome" id="R-HSA-5655302">
    <molecule id="P62993-1"/>
    <property type="pathway name" value="Signaling by FGFR1 in disease"/>
</dbReference>
<dbReference type="Reactome" id="R-HSA-5655332">
    <molecule id="P62993-1"/>
    <property type="pathway name" value="Signaling by FGFR3 in disease"/>
</dbReference>
<dbReference type="Reactome" id="R-HSA-5663213">
    <molecule id="P62993-1"/>
    <property type="pathway name" value="RHO GTPases Activate WASPs and WAVEs"/>
</dbReference>
<dbReference type="Reactome" id="R-HSA-5673001">
    <molecule id="P62993-1"/>
    <property type="pathway name" value="RAF/MAP kinase cascade"/>
</dbReference>
<dbReference type="Reactome" id="R-HSA-6807004">
    <molecule id="P62993-1"/>
    <property type="pathway name" value="Negative regulation of MET activity"/>
</dbReference>
<dbReference type="Reactome" id="R-HSA-6811558">
    <molecule id="P62993-1"/>
    <property type="pathway name" value="PI5P, PP2A and IER3 Regulate PI3K/AKT Signaling"/>
</dbReference>
<dbReference type="Reactome" id="R-HSA-74749">
    <molecule id="P62993-1"/>
    <property type="pathway name" value="Signal attenuation"/>
</dbReference>
<dbReference type="Reactome" id="R-HSA-74751">
    <molecule id="P62993-1"/>
    <property type="pathway name" value="Insulin receptor signalling cascade"/>
</dbReference>
<dbReference type="Reactome" id="R-HSA-8851805">
    <molecule id="P62993-1"/>
    <property type="pathway name" value="MET activates RAS signaling"/>
</dbReference>
<dbReference type="Reactome" id="R-HSA-8851907">
    <molecule id="P62993-1"/>
    <property type="pathway name" value="MET activates PI3K/AKT signaling"/>
</dbReference>
<dbReference type="Reactome" id="R-HSA-8853659">
    <molecule id="P62993-1"/>
    <property type="pathway name" value="RET signaling"/>
</dbReference>
<dbReference type="Reactome" id="R-HSA-8856825">
    <molecule id="P62993-1"/>
    <property type="pathway name" value="Cargo recognition for clathrin-mediated endocytosis"/>
</dbReference>
<dbReference type="Reactome" id="R-HSA-8856828">
    <molecule id="P62993-1"/>
    <property type="pathway name" value="Clathrin-mediated endocytosis"/>
</dbReference>
<dbReference type="Reactome" id="R-HSA-8865999">
    <molecule id="P62993-1"/>
    <property type="pathway name" value="MET activates PTPN11"/>
</dbReference>
<dbReference type="Reactome" id="R-HSA-8875360">
    <molecule id="P62993-1"/>
    <property type="pathway name" value="InlB-mediated entry of Listeria monocytogenes into host cell"/>
</dbReference>
<dbReference type="Reactome" id="R-HSA-8875555">
    <molecule id="P62993-1"/>
    <property type="pathway name" value="MET activates RAP1 and RAC1"/>
</dbReference>
<dbReference type="Reactome" id="R-HSA-8875656">
    <molecule id="P62993-1"/>
    <property type="pathway name" value="MET receptor recycling"/>
</dbReference>
<dbReference type="Reactome" id="R-HSA-8983432">
    <property type="pathway name" value="Interleukin-15 signaling"/>
</dbReference>
<dbReference type="Reactome" id="R-HSA-9013420">
    <molecule id="P62993-1"/>
    <property type="pathway name" value="RHOU GTPase cycle"/>
</dbReference>
<dbReference type="Reactome" id="R-HSA-9026519">
    <molecule id="P62993-1"/>
    <property type="pathway name" value="Activated NTRK2 signals through RAS"/>
</dbReference>
<dbReference type="Reactome" id="R-HSA-9027284">
    <molecule id="P62993-1"/>
    <property type="pathway name" value="Erythropoietin activates RAS"/>
</dbReference>
<dbReference type="Reactome" id="R-HSA-9028335">
    <molecule id="P62993-1"/>
    <property type="pathway name" value="Activated NTRK2 signals through PI3K"/>
</dbReference>
<dbReference type="Reactome" id="R-HSA-9028731">
    <molecule id="P62993-1"/>
    <property type="pathway name" value="Activated NTRK2 signals through FRS2 and FRS3"/>
</dbReference>
<dbReference type="Reactome" id="R-HSA-9034864">
    <molecule id="P62993-1"/>
    <property type="pathway name" value="Activated NTRK3 signals through RAS"/>
</dbReference>
<dbReference type="Reactome" id="R-HSA-912526">
    <molecule id="P62993-1"/>
    <property type="pathway name" value="Interleukin receptor SHC signaling"/>
</dbReference>
<dbReference type="Reactome" id="R-HSA-912631">
    <molecule id="P62993-1"/>
    <property type="pathway name" value="Regulation of signaling by CBL"/>
</dbReference>
<dbReference type="Reactome" id="R-HSA-9607240">
    <molecule id="P62993-1"/>
    <property type="pathway name" value="FLT3 Signaling"/>
</dbReference>
<dbReference type="Reactome" id="R-HSA-9634285">
    <molecule id="P62993-1"/>
    <property type="pathway name" value="Constitutive Signaling by Overexpressed ERBB2"/>
</dbReference>
<dbReference type="Reactome" id="R-HSA-9645135">
    <molecule id="P62993-1"/>
    <property type="pathway name" value="STAT5 Activation"/>
</dbReference>
<dbReference type="Reactome" id="R-HSA-9664422">
    <molecule id="P62993-1"/>
    <property type="pathway name" value="FCGR3A-mediated phagocytosis"/>
</dbReference>
<dbReference type="Reactome" id="R-HSA-9664565">
    <molecule id="P62993-1"/>
    <property type="pathway name" value="Signaling by ERBB2 KD Mutants"/>
</dbReference>
<dbReference type="Reactome" id="R-HSA-9665348">
    <molecule id="P62993-1"/>
    <property type="pathway name" value="Signaling by ERBB2 ECD mutants"/>
</dbReference>
<dbReference type="Reactome" id="R-HSA-9665686">
    <molecule id="P62993-1"/>
    <property type="pathway name" value="Signaling by ERBB2 TMD/JMD mutants"/>
</dbReference>
<dbReference type="Reactome" id="R-HSA-9670439">
    <molecule id="P62993-1"/>
    <property type="pathway name" value="Signaling by phosphorylated juxtamembrane, extracellular and kinase domain KIT mutants"/>
</dbReference>
<dbReference type="Reactome" id="R-HSA-9673767">
    <molecule id="P62993-1"/>
    <property type="pathway name" value="Signaling by PDGFRA transmembrane, juxtamembrane and kinase domain mutants"/>
</dbReference>
<dbReference type="Reactome" id="R-HSA-9673770">
    <molecule id="P62993-1"/>
    <property type="pathway name" value="Signaling by PDGFRA extracellular domain mutants"/>
</dbReference>
<dbReference type="Reactome" id="R-HSA-9674555">
    <property type="pathway name" value="Signaling by CSF3 (G-CSF)"/>
</dbReference>
<dbReference type="Reactome" id="R-HSA-9679191">
    <molecule id="P62993-1"/>
    <property type="pathway name" value="Potential therapeutics for SARS"/>
</dbReference>
<dbReference type="Reactome" id="R-HSA-9680350">
    <molecule id="P62993-1"/>
    <property type="pathway name" value="Signaling by CSF1 (M-CSF) in myeloid cells"/>
</dbReference>
<dbReference type="Reactome" id="R-HSA-9702518">
    <property type="pathway name" value="STAT5 activation downstream of FLT3 ITD mutants"/>
</dbReference>
<dbReference type="Reactome" id="R-HSA-9703465">
    <molecule id="P62993-1"/>
    <property type="pathway name" value="Signaling by FLT3 fusion proteins"/>
</dbReference>
<dbReference type="Reactome" id="R-HSA-9703648">
    <property type="pathway name" value="Signaling by FLT3 ITD and TKD mutants"/>
</dbReference>
<dbReference type="Reactome" id="R-HSA-9725370">
    <property type="pathway name" value="Signaling by ALK fusions and activated point mutants"/>
</dbReference>
<dbReference type="Reactome" id="R-HSA-983695">
    <molecule id="P62993-1"/>
    <property type="pathway name" value="Antigen activates B Cell Receptor (BCR) leading to generation of second messengers"/>
</dbReference>
<dbReference type="Reactome" id="R-HSA-9842663">
    <property type="pathway name" value="Signaling by LTK"/>
</dbReference>
<dbReference type="Reactome" id="R-HSA-9927353">
    <molecule id="P62993-1"/>
    <property type="pathway name" value="Co-inhibition by BTLA"/>
</dbReference>
<dbReference type="SignaLink" id="P62993"/>
<dbReference type="SIGNOR" id="P62993"/>
<dbReference type="BioGRID-ORCS" id="2885">
    <property type="hits" value="605 hits in 1180 CRISPR screens"/>
</dbReference>
<dbReference type="CD-CODE" id="36896B46">
    <property type="entry name" value="T-cell signalosome"/>
</dbReference>
<dbReference type="CD-CODE" id="8C2F96ED">
    <property type="entry name" value="Centrosome"/>
</dbReference>
<dbReference type="CD-CODE" id="A58C613A">
    <property type="entry name" value="Synthetic Condensate 000080"/>
</dbReference>
<dbReference type="CD-CODE" id="AB997901">
    <property type="entry name" value="Synthetic Condensate 000089"/>
</dbReference>
<dbReference type="CD-CODE" id="DEE660B4">
    <property type="entry name" value="Stress granule"/>
</dbReference>
<dbReference type="CD-CODE" id="F345034F">
    <property type="entry name" value="Signaling cluster"/>
</dbReference>
<dbReference type="CD-CODE" id="FF4E772B">
    <property type="entry name" value="Synthetic Condensate 000083"/>
</dbReference>
<dbReference type="ChiTaRS" id="GRB2">
    <property type="organism name" value="human"/>
</dbReference>
<dbReference type="EvolutionaryTrace" id="P62993"/>
<dbReference type="GeneWiki" id="GRB2"/>
<dbReference type="GenomeRNAi" id="2885"/>
<dbReference type="Pharos" id="P62993">
    <property type="development level" value="Tchem"/>
</dbReference>
<dbReference type="PRO" id="PR:P62993"/>
<dbReference type="Proteomes" id="UP000005640">
    <property type="component" value="Chromosome 17"/>
</dbReference>
<dbReference type="RNAct" id="P62993">
    <property type="molecule type" value="protein"/>
</dbReference>
<dbReference type="Bgee" id="ENSG00000177885">
    <property type="expression patterns" value="Expressed in monocyte and 200 other cell types or tissues"/>
</dbReference>
<dbReference type="ExpressionAtlas" id="P62993">
    <property type="expression patterns" value="baseline and differential"/>
</dbReference>
<dbReference type="GO" id="GO:0005938">
    <property type="term" value="C:cell cortex"/>
    <property type="evidence" value="ECO:0007669"/>
    <property type="project" value="Ensembl"/>
</dbReference>
<dbReference type="GO" id="GO:0005911">
    <property type="term" value="C:cell-cell junction"/>
    <property type="evidence" value="ECO:0007669"/>
    <property type="project" value="Ensembl"/>
</dbReference>
<dbReference type="GO" id="GO:0005813">
    <property type="term" value="C:centrosome"/>
    <property type="evidence" value="ECO:0000314"/>
    <property type="project" value="HPA"/>
</dbReference>
<dbReference type="GO" id="GO:0008180">
    <property type="term" value="C:COP9 signalosome"/>
    <property type="evidence" value="ECO:0000314"/>
    <property type="project" value="UniProtKB"/>
</dbReference>
<dbReference type="GO" id="GO:0005737">
    <property type="term" value="C:cytoplasm"/>
    <property type="evidence" value="ECO:0000314"/>
    <property type="project" value="UniProtKB"/>
</dbReference>
<dbReference type="GO" id="GO:0005829">
    <property type="term" value="C:cytosol"/>
    <property type="evidence" value="ECO:0000314"/>
    <property type="project" value="HPA"/>
</dbReference>
<dbReference type="GO" id="GO:0005768">
    <property type="term" value="C:endosome"/>
    <property type="evidence" value="ECO:0000314"/>
    <property type="project" value="UniProtKB"/>
</dbReference>
<dbReference type="GO" id="GO:0070062">
    <property type="term" value="C:extracellular exosome"/>
    <property type="evidence" value="ECO:0007005"/>
    <property type="project" value="UniProtKB"/>
</dbReference>
<dbReference type="GO" id="GO:0005794">
    <property type="term" value="C:Golgi apparatus"/>
    <property type="evidence" value="ECO:0007669"/>
    <property type="project" value="UniProtKB-SubCell"/>
</dbReference>
<dbReference type="GO" id="GO:0070436">
    <property type="term" value="C:Grb2-EGFR complex"/>
    <property type="evidence" value="ECO:0000314"/>
    <property type="project" value="BHF-UCL"/>
</dbReference>
<dbReference type="GO" id="GO:0005654">
    <property type="term" value="C:nucleoplasm"/>
    <property type="evidence" value="ECO:0000318"/>
    <property type="project" value="GO_Central"/>
</dbReference>
<dbReference type="GO" id="GO:0005634">
    <property type="term" value="C:nucleus"/>
    <property type="evidence" value="ECO:0000314"/>
    <property type="project" value="UniProtKB"/>
</dbReference>
<dbReference type="GO" id="GO:0005886">
    <property type="term" value="C:plasma membrane"/>
    <property type="evidence" value="ECO:0000318"/>
    <property type="project" value="GO_Central"/>
</dbReference>
<dbReference type="GO" id="GO:0012506">
    <property type="term" value="C:vesicle membrane"/>
    <property type="evidence" value="ECO:0007669"/>
    <property type="project" value="Ensembl"/>
</dbReference>
<dbReference type="GO" id="GO:0046875">
    <property type="term" value="F:ephrin receptor binding"/>
    <property type="evidence" value="ECO:0000353"/>
    <property type="project" value="UniProtKB"/>
</dbReference>
<dbReference type="GO" id="GO:0005154">
    <property type="term" value="F:epidermal growth factor receptor binding"/>
    <property type="evidence" value="ECO:0000353"/>
    <property type="project" value="UniProtKB"/>
</dbReference>
<dbReference type="GO" id="GO:0005091">
    <property type="term" value="F:guanyl-nucleotide exchange factor adaptor activity"/>
    <property type="evidence" value="ECO:0000314"/>
    <property type="project" value="UniProt"/>
</dbReference>
<dbReference type="GO" id="GO:0042802">
    <property type="term" value="F:identical protein binding"/>
    <property type="evidence" value="ECO:0000353"/>
    <property type="project" value="IntAct"/>
</dbReference>
<dbReference type="GO" id="GO:0043560">
    <property type="term" value="F:insulin receptor substrate binding"/>
    <property type="evidence" value="ECO:0000353"/>
    <property type="project" value="UniProtKB"/>
</dbReference>
<dbReference type="GO" id="GO:0005168">
    <property type="term" value="F:neurotrophin TRKA receptor binding"/>
    <property type="evidence" value="ECO:0000353"/>
    <property type="project" value="UniProtKB"/>
</dbReference>
<dbReference type="GO" id="GO:0001784">
    <property type="term" value="F:phosphotyrosine residue binding"/>
    <property type="evidence" value="ECO:0000353"/>
    <property type="project" value="CAFA"/>
</dbReference>
<dbReference type="GO" id="GO:0019901">
    <property type="term" value="F:protein kinase binding"/>
    <property type="evidence" value="ECO:0000353"/>
    <property type="project" value="BHF-UCL"/>
</dbReference>
<dbReference type="GO" id="GO:0019903">
    <property type="term" value="F:protein phosphatase binding"/>
    <property type="evidence" value="ECO:0007669"/>
    <property type="project" value="Ensembl"/>
</dbReference>
<dbReference type="GO" id="GO:0030674">
    <property type="term" value="F:protein-macromolecule adaptor activity"/>
    <property type="evidence" value="ECO:0000314"/>
    <property type="project" value="UniProt"/>
</dbReference>
<dbReference type="GO" id="GO:0003723">
    <property type="term" value="F:RNA binding"/>
    <property type="evidence" value="ECO:0007005"/>
    <property type="project" value="UniProtKB"/>
</dbReference>
<dbReference type="GO" id="GO:0017124">
    <property type="term" value="F:SH3 domain binding"/>
    <property type="evidence" value="ECO:0000314"/>
    <property type="project" value="UniProtKB"/>
</dbReference>
<dbReference type="GO" id="GO:0005068">
    <property type="term" value="F:transmembrane receptor protein tyrosine kinase adaptor activity"/>
    <property type="evidence" value="ECO:0007669"/>
    <property type="project" value="Ensembl"/>
</dbReference>
<dbReference type="GO" id="GO:0030036">
    <property type="term" value="P:actin cytoskeleton organization"/>
    <property type="evidence" value="ECO:0000315"/>
    <property type="project" value="UniProtKB"/>
</dbReference>
<dbReference type="GO" id="GO:0050853">
    <property type="term" value="P:B cell receptor signaling pathway"/>
    <property type="evidence" value="ECO:0007669"/>
    <property type="project" value="Ensembl"/>
</dbReference>
<dbReference type="GO" id="GO:0060670">
    <property type="term" value="P:branching involved in labyrinthine layer morphogenesis"/>
    <property type="evidence" value="ECO:0007669"/>
    <property type="project" value="Ensembl"/>
</dbReference>
<dbReference type="GO" id="GO:0071479">
    <property type="term" value="P:cellular response to ionizing radiation"/>
    <property type="evidence" value="ECO:0000315"/>
    <property type="project" value="BHF-UCL"/>
</dbReference>
<dbReference type="GO" id="GO:0035987">
    <property type="term" value="P:endodermal cell differentiation"/>
    <property type="evidence" value="ECO:0007669"/>
    <property type="project" value="Ensembl"/>
</dbReference>
<dbReference type="GO" id="GO:0007173">
    <property type="term" value="P:epidermal growth factor receptor signaling pathway"/>
    <property type="evidence" value="ECO:0000315"/>
    <property type="project" value="UniProtKB"/>
</dbReference>
<dbReference type="GO" id="GO:0008543">
    <property type="term" value="P:fibroblast growth factor receptor signaling pathway"/>
    <property type="evidence" value="ECO:0007669"/>
    <property type="project" value="Ensembl"/>
</dbReference>
<dbReference type="GO" id="GO:0008286">
    <property type="term" value="P:insulin receptor signaling pathway"/>
    <property type="evidence" value="ECO:0000353"/>
    <property type="project" value="UniProtKB"/>
</dbReference>
<dbReference type="GO" id="GO:0048009">
    <property type="term" value="P:insulin-like growth factor receptor signaling pathway"/>
    <property type="evidence" value="ECO:0007669"/>
    <property type="project" value="Ensembl"/>
</dbReference>
<dbReference type="GO" id="GO:0042552">
    <property type="term" value="P:myelination"/>
    <property type="evidence" value="ECO:0007669"/>
    <property type="project" value="Ensembl"/>
</dbReference>
<dbReference type="GO" id="GO:0042267">
    <property type="term" value="P:natural killer cell mediated cytotoxicity"/>
    <property type="evidence" value="ECO:0000314"/>
    <property type="project" value="UniProt"/>
</dbReference>
<dbReference type="GO" id="GO:0045953">
    <property type="term" value="P:negative regulation of natural killer cell mediated cytotoxicity"/>
    <property type="evidence" value="ECO:0000314"/>
    <property type="project" value="UniProt"/>
</dbReference>
<dbReference type="GO" id="GO:0030838">
    <property type="term" value="P:positive regulation of actin filament polymerization"/>
    <property type="evidence" value="ECO:0007669"/>
    <property type="project" value="Ensembl"/>
</dbReference>
<dbReference type="GO" id="GO:2000379">
    <property type="term" value="P:positive regulation of reactive oxygen species metabolic process"/>
    <property type="evidence" value="ECO:0000315"/>
    <property type="project" value="BHF-UCL"/>
</dbReference>
<dbReference type="GO" id="GO:0007265">
    <property type="term" value="P:Ras protein signal transduction"/>
    <property type="evidence" value="ECO:0000304"/>
    <property type="project" value="UniProtKB"/>
</dbReference>
<dbReference type="GO" id="GO:0031623">
    <property type="term" value="P:receptor internalization"/>
    <property type="evidence" value="ECO:0000315"/>
    <property type="project" value="BHF-UCL"/>
</dbReference>
<dbReference type="GO" id="GO:0043408">
    <property type="term" value="P:regulation of MAPK cascade"/>
    <property type="evidence" value="ECO:0000318"/>
    <property type="project" value="GO_Central"/>
</dbReference>
<dbReference type="GO" id="GO:0014044">
    <property type="term" value="P:Schwann cell development"/>
    <property type="evidence" value="ECO:0007669"/>
    <property type="project" value="Ensembl"/>
</dbReference>
<dbReference type="GO" id="GO:0007165">
    <property type="term" value="P:signal transduction"/>
    <property type="evidence" value="ECO:0000318"/>
    <property type="project" value="GO_Central"/>
</dbReference>
<dbReference type="GO" id="GO:0042770">
    <property type="term" value="P:signal transduction in response to DNA damage"/>
    <property type="evidence" value="ECO:0000315"/>
    <property type="project" value="BHF-UCL"/>
</dbReference>
<dbReference type="GO" id="GO:0042110">
    <property type="term" value="P:T cell activation"/>
    <property type="evidence" value="ECO:0000314"/>
    <property type="project" value="UniProt"/>
</dbReference>
<dbReference type="CDD" id="cd09941">
    <property type="entry name" value="SH2_Grb2_like"/>
    <property type="match status" value="1"/>
</dbReference>
<dbReference type="CDD" id="cd11949">
    <property type="entry name" value="SH3_GRB2_C"/>
    <property type="match status" value="1"/>
</dbReference>
<dbReference type="CDD" id="cd11946">
    <property type="entry name" value="SH3_GRB2_N"/>
    <property type="match status" value="1"/>
</dbReference>
<dbReference type="FunFam" id="2.30.30.40:FF:000067">
    <property type="entry name" value="Growth factor receptor-bound protein 2"/>
    <property type="match status" value="1"/>
</dbReference>
<dbReference type="FunFam" id="2.30.30.40:FF:000076">
    <property type="entry name" value="Growth factor receptor-bound protein 2"/>
    <property type="match status" value="1"/>
</dbReference>
<dbReference type="FunFam" id="3.30.505.10:FF:000022">
    <property type="entry name" value="Growth factor receptor-bound protein 2"/>
    <property type="match status" value="1"/>
</dbReference>
<dbReference type="Gene3D" id="3.30.505.10">
    <property type="entry name" value="SH2 domain"/>
    <property type="match status" value="1"/>
</dbReference>
<dbReference type="Gene3D" id="2.30.30.40">
    <property type="entry name" value="SH3 Domains"/>
    <property type="match status" value="2"/>
</dbReference>
<dbReference type="IDEAL" id="IID00459"/>
<dbReference type="InterPro" id="IPR043539">
    <property type="entry name" value="Grb2-like"/>
</dbReference>
<dbReference type="InterPro" id="IPR035643">
    <property type="entry name" value="GRB2_C_SH3"/>
</dbReference>
<dbReference type="InterPro" id="IPR035641">
    <property type="entry name" value="GRB2_N_SH3"/>
</dbReference>
<dbReference type="InterPro" id="IPR000980">
    <property type="entry name" value="SH2"/>
</dbReference>
<dbReference type="InterPro" id="IPR036860">
    <property type="entry name" value="SH2_dom_sf"/>
</dbReference>
<dbReference type="InterPro" id="IPR036028">
    <property type="entry name" value="SH3-like_dom_sf"/>
</dbReference>
<dbReference type="InterPro" id="IPR001452">
    <property type="entry name" value="SH3_domain"/>
</dbReference>
<dbReference type="PANTHER" id="PTHR46037">
    <property type="entry name" value="PROTEIN ENHANCER OF SEVENLESS 2B"/>
    <property type="match status" value="1"/>
</dbReference>
<dbReference type="Pfam" id="PF00017">
    <property type="entry name" value="SH2"/>
    <property type="match status" value="1"/>
</dbReference>
<dbReference type="Pfam" id="PF00018">
    <property type="entry name" value="SH3_1"/>
    <property type="match status" value="2"/>
</dbReference>
<dbReference type="PRINTS" id="PR00499">
    <property type="entry name" value="P67PHOX"/>
</dbReference>
<dbReference type="PRINTS" id="PR00401">
    <property type="entry name" value="SH2DOMAIN"/>
</dbReference>
<dbReference type="PRINTS" id="PR00452">
    <property type="entry name" value="SH3DOMAIN"/>
</dbReference>
<dbReference type="SMART" id="SM00252">
    <property type="entry name" value="SH2"/>
    <property type="match status" value="1"/>
</dbReference>
<dbReference type="SMART" id="SM00326">
    <property type="entry name" value="SH3"/>
    <property type="match status" value="2"/>
</dbReference>
<dbReference type="SUPFAM" id="SSF55550">
    <property type="entry name" value="SH2 domain"/>
    <property type="match status" value="1"/>
</dbReference>
<dbReference type="SUPFAM" id="SSF50044">
    <property type="entry name" value="SH3-domain"/>
    <property type="match status" value="2"/>
</dbReference>
<dbReference type="PROSITE" id="PS50001">
    <property type="entry name" value="SH2"/>
    <property type="match status" value="1"/>
</dbReference>
<dbReference type="PROSITE" id="PS50002">
    <property type="entry name" value="SH3"/>
    <property type="match status" value="2"/>
</dbReference>
<organism>
    <name type="scientific">Homo sapiens</name>
    <name type="common">Human</name>
    <dbReference type="NCBI Taxonomy" id="9606"/>
    <lineage>
        <taxon>Eukaryota</taxon>
        <taxon>Metazoa</taxon>
        <taxon>Chordata</taxon>
        <taxon>Craniata</taxon>
        <taxon>Vertebrata</taxon>
        <taxon>Euteleostomi</taxon>
        <taxon>Mammalia</taxon>
        <taxon>Eutheria</taxon>
        <taxon>Euarchontoglires</taxon>
        <taxon>Primates</taxon>
        <taxon>Haplorrhini</taxon>
        <taxon>Catarrhini</taxon>
        <taxon>Hominidae</taxon>
        <taxon>Homo</taxon>
    </lineage>
</organism>
<keyword id="KW-0002">3D-structure</keyword>
<keyword id="KW-0007">Acetylation</keyword>
<keyword id="KW-0025">Alternative splicing</keyword>
<keyword id="KW-0963">Cytoplasm</keyword>
<keyword id="KW-0903">Direct protein sequencing</keyword>
<keyword id="KW-0967">Endosome</keyword>
<keyword id="KW-0333">Golgi apparatus</keyword>
<keyword id="KW-0945">Host-virus interaction</keyword>
<keyword id="KW-1017">Isopeptide bond</keyword>
<keyword id="KW-0539">Nucleus</keyword>
<keyword id="KW-0597">Phosphoprotein</keyword>
<keyword id="KW-1267">Proteomics identification</keyword>
<keyword id="KW-1185">Reference proteome</keyword>
<keyword id="KW-0677">Repeat</keyword>
<keyword id="KW-0727">SH2 domain</keyword>
<keyword id="KW-0728">SH3 domain</keyword>
<keyword id="KW-0832">Ubl conjugation</keyword>
<accession>P62993</accession>
<accession>P29354</accession>
<accession>Q14450</accession>
<accession>Q63057</accession>
<accession>Q63059</accession>